<dbReference type="EMBL" id="AF176069">
    <property type="protein sequence ID" value="AAD49751.3"/>
    <property type="molecule type" value="mRNA"/>
</dbReference>
<dbReference type="EMBL" id="AF293384">
    <property type="protein sequence ID" value="AAG02473.1"/>
    <property type="molecule type" value="mRNA"/>
</dbReference>
<dbReference type="EMBL" id="AB035275">
    <property type="protein sequence ID" value="BAB20436.1"/>
    <property type="molecule type" value="mRNA"/>
</dbReference>
<dbReference type="EMBL" id="HM005532">
    <property type="protein sequence ID" value="AEE61129.1"/>
    <property type="molecule type" value="mRNA"/>
</dbReference>
<dbReference type="EMBL" id="AL136643">
    <property type="protein sequence ID" value="CAB66578.1"/>
    <property type="molecule type" value="mRNA"/>
</dbReference>
<dbReference type="EMBL" id="AL354920">
    <property type="status" value="NOT_ANNOTATED_CDS"/>
    <property type="molecule type" value="Genomic_DNA"/>
</dbReference>
<dbReference type="EMBL" id="CH471089">
    <property type="protein sequence ID" value="EAW62659.1"/>
    <property type="molecule type" value="Genomic_DNA"/>
</dbReference>
<dbReference type="EMBL" id="CH471089">
    <property type="protein sequence ID" value="EAW62661.1"/>
    <property type="molecule type" value="Genomic_DNA"/>
</dbReference>
<dbReference type="EMBL" id="CH471089">
    <property type="protein sequence ID" value="EAW62664.1"/>
    <property type="molecule type" value="Genomic_DNA"/>
</dbReference>
<dbReference type="EMBL" id="BC010066">
    <property type="protein sequence ID" value="AAH10066.1"/>
    <property type="molecule type" value="mRNA"/>
</dbReference>
<dbReference type="EMBL" id="BC039294">
    <property type="protein sequence ID" value="AAH39294.1"/>
    <property type="molecule type" value="mRNA"/>
</dbReference>
<dbReference type="EMBL" id="AK074535">
    <property type="status" value="NOT_ANNOTATED_CDS"/>
    <property type="molecule type" value="mRNA"/>
</dbReference>
<dbReference type="CCDS" id="CCDS6663.1">
    <molecule id="Q9UMX0-1"/>
</dbReference>
<dbReference type="CCDS" id="CCDS6664.1">
    <molecule id="Q9UMX0-2"/>
</dbReference>
<dbReference type="RefSeq" id="NP_038466.2">
    <molecule id="Q9UMX0-1"/>
    <property type="nucleotide sequence ID" value="NM_013438.4"/>
</dbReference>
<dbReference type="RefSeq" id="NP_444295.1">
    <molecule id="Q9UMX0-2"/>
    <property type="nucleotide sequence ID" value="NM_053067.3"/>
</dbReference>
<dbReference type="PDB" id="2JY5">
    <property type="method" value="NMR"/>
    <property type="chains" value="A=541-586"/>
</dbReference>
<dbReference type="PDB" id="2JY6">
    <property type="method" value="NMR"/>
    <property type="chains" value="B=541-586"/>
</dbReference>
<dbReference type="PDB" id="2KLC">
    <property type="method" value="NMR"/>
    <property type="chains" value="A=34-112"/>
</dbReference>
<dbReference type="PDBsum" id="2JY5"/>
<dbReference type="PDBsum" id="2JY6"/>
<dbReference type="PDBsum" id="2KLC"/>
<dbReference type="BMRB" id="Q9UMX0"/>
<dbReference type="SASBDB" id="Q9UMX0"/>
<dbReference type="SMR" id="Q9UMX0"/>
<dbReference type="BioGRID" id="119007">
    <property type="interactions" value="458"/>
</dbReference>
<dbReference type="CORUM" id="Q9UMX0"/>
<dbReference type="DIP" id="DIP-41629N"/>
<dbReference type="FunCoup" id="Q9UMX0">
    <property type="interactions" value="3499"/>
</dbReference>
<dbReference type="IntAct" id="Q9UMX0">
    <property type="interactions" value="358"/>
</dbReference>
<dbReference type="MINT" id="Q9UMX0"/>
<dbReference type="STRING" id="9606.ENSP00000365576"/>
<dbReference type="GlyCosmos" id="Q9UMX0">
    <property type="glycosylation" value="5 sites, 1 glycan"/>
</dbReference>
<dbReference type="GlyGen" id="Q9UMX0">
    <property type="glycosylation" value="6 sites, 1 O-linked glycan (5 sites)"/>
</dbReference>
<dbReference type="iPTMnet" id="Q9UMX0"/>
<dbReference type="MetOSite" id="Q9UMX0"/>
<dbReference type="PhosphoSitePlus" id="Q9UMX0"/>
<dbReference type="BioMuta" id="UBQLN1"/>
<dbReference type="DMDM" id="48475013"/>
<dbReference type="REPRODUCTION-2DPAGE" id="IPI00071180"/>
<dbReference type="jPOST" id="Q9UMX0"/>
<dbReference type="MassIVE" id="Q9UMX0"/>
<dbReference type="PaxDb" id="9606-ENSP00000365576"/>
<dbReference type="PeptideAtlas" id="Q9UMX0"/>
<dbReference type="ProteomicsDB" id="85215">
    <molecule id="Q9UMX0-1"/>
</dbReference>
<dbReference type="ProteomicsDB" id="85216">
    <molecule id="Q9UMX0-2"/>
</dbReference>
<dbReference type="Pumba" id="Q9UMX0"/>
<dbReference type="Antibodypedia" id="27540">
    <property type="antibodies" value="347 antibodies from 32 providers"/>
</dbReference>
<dbReference type="DNASU" id="29979"/>
<dbReference type="Ensembl" id="ENST00000257468.11">
    <molecule id="Q9UMX0-2"/>
    <property type="protein sequence ID" value="ENSP00000257468.7"/>
    <property type="gene ID" value="ENSG00000135018.14"/>
</dbReference>
<dbReference type="Ensembl" id="ENST00000376395.9">
    <molecule id="Q9UMX0-1"/>
    <property type="protein sequence ID" value="ENSP00000365576.4"/>
    <property type="gene ID" value="ENSG00000135018.14"/>
</dbReference>
<dbReference type="GeneID" id="29979"/>
<dbReference type="KEGG" id="hsa:29979"/>
<dbReference type="MANE-Select" id="ENST00000376395.9">
    <property type="protein sequence ID" value="ENSP00000365576.4"/>
    <property type="RefSeq nucleotide sequence ID" value="NM_013438.5"/>
    <property type="RefSeq protein sequence ID" value="NP_038466.2"/>
</dbReference>
<dbReference type="UCSC" id="uc004amv.4">
    <molecule id="Q9UMX0-1"/>
    <property type="organism name" value="human"/>
</dbReference>
<dbReference type="AGR" id="HGNC:12508"/>
<dbReference type="CTD" id="29979"/>
<dbReference type="DisGeNET" id="29979"/>
<dbReference type="GeneCards" id="UBQLN1"/>
<dbReference type="HGNC" id="HGNC:12508">
    <property type="gene designation" value="UBQLN1"/>
</dbReference>
<dbReference type="HPA" id="ENSG00000135018">
    <property type="expression patterns" value="Low tissue specificity"/>
</dbReference>
<dbReference type="MIM" id="605046">
    <property type="type" value="gene"/>
</dbReference>
<dbReference type="neXtProt" id="NX_Q9UMX0"/>
<dbReference type="OpenTargets" id="ENSG00000135018"/>
<dbReference type="PharmGKB" id="PA37155"/>
<dbReference type="VEuPathDB" id="HostDB:ENSG00000135018"/>
<dbReference type="eggNOG" id="KOG0010">
    <property type="taxonomic scope" value="Eukaryota"/>
</dbReference>
<dbReference type="GeneTree" id="ENSGT00940000156437"/>
<dbReference type="HOGENOM" id="CLU_024293_4_0_1"/>
<dbReference type="InParanoid" id="Q9UMX0"/>
<dbReference type="OMA" id="PGMDMFG"/>
<dbReference type="OrthoDB" id="9450922at2759"/>
<dbReference type="PAN-GO" id="Q9UMX0">
    <property type="GO annotations" value="6 GO annotations based on evolutionary models"/>
</dbReference>
<dbReference type="PhylomeDB" id="Q9UMX0"/>
<dbReference type="TreeFam" id="TF314412"/>
<dbReference type="PathwayCommons" id="Q9UMX0"/>
<dbReference type="Reactome" id="R-HSA-8856825">
    <property type="pathway name" value="Cargo recognition for clathrin-mediated endocytosis"/>
</dbReference>
<dbReference type="SignaLink" id="Q9UMX0"/>
<dbReference type="SIGNOR" id="Q9UMX0"/>
<dbReference type="BioGRID-ORCS" id="29979">
    <property type="hits" value="25 hits in 1162 CRISPR screens"/>
</dbReference>
<dbReference type="CD-CODE" id="EB3EADD3">
    <property type="entry name" value="Ubqln puncta"/>
</dbReference>
<dbReference type="ChiTaRS" id="UBQLN1">
    <property type="organism name" value="human"/>
</dbReference>
<dbReference type="EvolutionaryTrace" id="Q9UMX0"/>
<dbReference type="GeneWiki" id="UBQLN1"/>
<dbReference type="GenomeRNAi" id="29979"/>
<dbReference type="Pharos" id="Q9UMX0">
    <property type="development level" value="Tbio"/>
</dbReference>
<dbReference type="PRO" id="PR:Q9UMX0"/>
<dbReference type="Proteomes" id="UP000005640">
    <property type="component" value="Chromosome 9"/>
</dbReference>
<dbReference type="RNAct" id="Q9UMX0">
    <property type="molecule type" value="protein"/>
</dbReference>
<dbReference type="Bgee" id="ENSG00000135018">
    <property type="expression patterns" value="Expressed in ileal mucosa and 196 other cell types or tissues"/>
</dbReference>
<dbReference type="ExpressionAtlas" id="Q9UMX0">
    <property type="expression patterns" value="baseline and differential"/>
</dbReference>
<dbReference type="GO" id="GO:0016235">
    <property type="term" value="C:aggresome"/>
    <property type="evidence" value="ECO:0000314"/>
    <property type="project" value="UniProtKB"/>
</dbReference>
<dbReference type="GO" id="GO:0005776">
    <property type="term" value="C:autophagosome"/>
    <property type="evidence" value="ECO:0000314"/>
    <property type="project" value="UniProtKB"/>
</dbReference>
<dbReference type="GO" id="GO:0005737">
    <property type="term" value="C:cytoplasm"/>
    <property type="evidence" value="ECO:0000314"/>
    <property type="project" value="UniProtKB"/>
</dbReference>
<dbReference type="GO" id="GO:0031410">
    <property type="term" value="C:cytoplasmic vesicle"/>
    <property type="evidence" value="ECO:0007669"/>
    <property type="project" value="UniProtKB-KW"/>
</dbReference>
<dbReference type="GO" id="GO:0005829">
    <property type="term" value="C:cytosol"/>
    <property type="evidence" value="ECO:0000314"/>
    <property type="project" value="HPA"/>
</dbReference>
<dbReference type="GO" id="GO:0005783">
    <property type="term" value="C:endoplasmic reticulum"/>
    <property type="evidence" value="ECO:0000314"/>
    <property type="project" value="UniProtKB"/>
</dbReference>
<dbReference type="GO" id="GO:0005654">
    <property type="term" value="C:nucleoplasm"/>
    <property type="evidence" value="ECO:0000314"/>
    <property type="project" value="HPA"/>
</dbReference>
<dbReference type="GO" id="GO:0048471">
    <property type="term" value="C:perinuclear region of cytoplasm"/>
    <property type="evidence" value="ECO:0000314"/>
    <property type="project" value="HGNC-UCL"/>
</dbReference>
<dbReference type="GO" id="GO:0005886">
    <property type="term" value="C:plasma membrane"/>
    <property type="evidence" value="ECO:0000314"/>
    <property type="project" value="UniProtKB"/>
</dbReference>
<dbReference type="GO" id="GO:0000502">
    <property type="term" value="C:proteasome complex"/>
    <property type="evidence" value="ECO:0007669"/>
    <property type="project" value="UniProtKB-KW"/>
</dbReference>
<dbReference type="GO" id="GO:0032991">
    <property type="term" value="C:protein-containing complex"/>
    <property type="evidence" value="ECO:0000314"/>
    <property type="project" value="LIFEdb"/>
</dbReference>
<dbReference type="GO" id="GO:0042802">
    <property type="term" value="F:identical protein binding"/>
    <property type="evidence" value="ECO:0000353"/>
    <property type="project" value="IntAct"/>
</dbReference>
<dbReference type="GO" id="GO:0019900">
    <property type="term" value="F:kinase binding"/>
    <property type="evidence" value="ECO:0000353"/>
    <property type="project" value="UniProtKB"/>
</dbReference>
<dbReference type="GO" id="GO:0031593">
    <property type="term" value="F:polyubiquitin modification-dependent protein binding"/>
    <property type="evidence" value="ECO:0000314"/>
    <property type="project" value="UniProtKB"/>
</dbReference>
<dbReference type="GO" id="GO:0035973">
    <property type="term" value="P:aggrephagy"/>
    <property type="evidence" value="ECO:0000314"/>
    <property type="project" value="UniProtKB"/>
</dbReference>
<dbReference type="GO" id="GO:0000045">
    <property type="term" value="P:autophagosome assembly"/>
    <property type="evidence" value="ECO:0000315"/>
    <property type="project" value="GO_Central"/>
</dbReference>
<dbReference type="GO" id="GO:0097352">
    <property type="term" value="P:autophagosome maturation"/>
    <property type="evidence" value="ECO:0000315"/>
    <property type="project" value="GO_Central"/>
</dbReference>
<dbReference type="GO" id="GO:0071456">
    <property type="term" value="P:cellular response to hypoxia"/>
    <property type="evidence" value="ECO:0000315"/>
    <property type="project" value="BHF-UCL"/>
</dbReference>
<dbReference type="GO" id="GO:0036503">
    <property type="term" value="P:ERAD pathway"/>
    <property type="evidence" value="ECO:0000315"/>
    <property type="project" value="UniProtKB"/>
</dbReference>
<dbReference type="GO" id="GO:0016236">
    <property type="term" value="P:macroautophagy"/>
    <property type="evidence" value="ECO:0000315"/>
    <property type="project" value="GO_Central"/>
</dbReference>
<dbReference type="GO" id="GO:1901340">
    <property type="term" value="P:negative regulation of store-operated calcium channel activity"/>
    <property type="evidence" value="ECO:0000315"/>
    <property type="project" value="UniProtKB"/>
</dbReference>
<dbReference type="GO" id="GO:0034140">
    <property type="term" value="P:negative regulation of toll-like receptor 3 signaling pathway"/>
    <property type="evidence" value="ECO:0007669"/>
    <property type="project" value="Ensembl"/>
</dbReference>
<dbReference type="GO" id="GO:1904294">
    <property type="term" value="P:positive regulation of ERAD pathway"/>
    <property type="evidence" value="ECO:0000315"/>
    <property type="project" value="UniProtKB"/>
</dbReference>
<dbReference type="GO" id="GO:0031398">
    <property type="term" value="P:positive regulation of protein ubiquitination"/>
    <property type="evidence" value="ECO:0000314"/>
    <property type="project" value="UniProtKB"/>
</dbReference>
<dbReference type="GO" id="GO:0016241">
    <property type="term" value="P:regulation of macroautophagy"/>
    <property type="evidence" value="ECO:0000318"/>
    <property type="project" value="GO_Central"/>
</dbReference>
<dbReference type="GO" id="GO:1902175">
    <property type="term" value="P:regulation of oxidative stress-induced intrinsic apoptotic signaling pathway"/>
    <property type="evidence" value="ECO:0000315"/>
    <property type="project" value="BHF-UCL"/>
</dbReference>
<dbReference type="GO" id="GO:0031396">
    <property type="term" value="P:regulation of protein ubiquitination"/>
    <property type="evidence" value="ECO:0000314"/>
    <property type="project" value="HGNC-UCL"/>
</dbReference>
<dbReference type="GO" id="GO:0034976">
    <property type="term" value="P:response to endoplasmic reticulum stress"/>
    <property type="evidence" value="ECO:0000315"/>
    <property type="project" value="BHF-UCL"/>
</dbReference>
<dbReference type="GO" id="GO:0006511">
    <property type="term" value="P:ubiquitin-dependent protein catabolic process"/>
    <property type="evidence" value="ECO:0000318"/>
    <property type="project" value="GO_Central"/>
</dbReference>
<dbReference type="CDD" id="cd14399">
    <property type="entry name" value="UBA_PLICs"/>
    <property type="match status" value="1"/>
</dbReference>
<dbReference type="CDD" id="cd01808">
    <property type="entry name" value="Ubl_PLICs"/>
    <property type="match status" value="1"/>
</dbReference>
<dbReference type="FunFam" id="1.10.260.100:FF:000001">
    <property type="entry name" value="Ubiquilin 1"/>
    <property type="match status" value="1"/>
</dbReference>
<dbReference type="FunFam" id="1.10.260.100:FF:000003">
    <property type="entry name" value="Ubiquilin 1"/>
    <property type="match status" value="1"/>
</dbReference>
<dbReference type="FunFam" id="1.10.8.10:FF:000007">
    <property type="entry name" value="Ubiquilin 1"/>
    <property type="match status" value="1"/>
</dbReference>
<dbReference type="FunFam" id="3.10.20.90:FF:000081">
    <property type="entry name" value="ubiquilin-1 isoform X2"/>
    <property type="match status" value="1"/>
</dbReference>
<dbReference type="Gene3D" id="1.10.260.100">
    <property type="match status" value="2"/>
</dbReference>
<dbReference type="Gene3D" id="1.10.8.10">
    <property type="entry name" value="DNA helicase RuvA subunit, C-terminal domain"/>
    <property type="match status" value="1"/>
</dbReference>
<dbReference type="Gene3D" id="3.10.20.90">
    <property type="entry name" value="Phosphatidylinositol 3-kinase Catalytic Subunit, Chain A, domain 1"/>
    <property type="match status" value="1"/>
</dbReference>
<dbReference type="InterPro" id="IPR006636">
    <property type="entry name" value="STI1_HS-bd"/>
</dbReference>
<dbReference type="InterPro" id="IPR015940">
    <property type="entry name" value="UBA"/>
</dbReference>
<dbReference type="InterPro" id="IPR009060">
    <property type="entry name" value="UBA-like_sf"/>
</dbReference>
<dbReference type="InterPro" id="IPR015496">
    <property type="entry name" value="Ubiquilin"/>
</dbReference>
<dbReference type="InterPro" id="IPR000626">
    <property type="entry name" value="Ubiquitin-like_dom"/>
</dbReference>
<dbReference type="InterPro" id="IPR029071">
    <property type="entry name" value="Ubiquitin-like_domsf"/>
</dbReference>
<dbReference type="PANTHER" id="PTHR10677">
    <property type="entry name" value="UBIQUILIN"/>
    <property type="match status" value="1"/>
</dbReference>
<dbReference type="PANTHER" id="PTHR10677:SF16">
    <property type="entry name" value="UBIQUILIN-1"/>
    <property type="match status" value="1"/>
</dbReference>
<dbReference type="Pfam" id="PF00627">
    <property type="entry name" value="UBA"/>
    <property type="match status" value="1"/>
</dbReference>
<dbReference type="Pfam" id="PF00240">
    <property type="entry name" value="ubiquitin"/>
    <property type="match status" value="1"/>
</dbReference>
<dbReference type="Pfam" id="PF23195">
    <property type="entry name" value="UBQLN1"/>
    <property type="match status" value="1"/>
</dbReference>
<dbReference type="SMART" id="SM00727">
    <property type="entry name" value="STI1"/>
    <property type="match status" value="4"/>
</dbReference>
<dbReference type="SMART" id="SM00165">
    <property type="entry name" value="UBA"/>
    <property type="match status" value="1"/>
</dbReference>
<dbReference type="SMART" id="SM00213">
    <property type="entry name" value="UBQ"/>
    <property type="match status" value="1"/>
</dbReference>
<dbReference type="SUPFAM" id="SSF46934">
    <property type="entry name" value="UBA-like"/>
    <property type="match status" value="1"/>
</dbReference>
<dbReference type="SUPFAM" id="SSF54236">
    <property type="entry name" value="Ubiquitin-like"/>
    <property type="match status" value="1"/>
</dbReference>
<dbReference type="PROSITE" id="PS50030">
    <property type="entry name" value="UBA"/>
    <property type="match status" value="1"/>
</dbReference>
<dbReference type="PROSITE" id="PS50053">
    <property type="entry name" value="UBIQUITIN_2"/>
    <property type="match status" value="1"/>
</dbReference>
<evidence type="ECO:0000250" key="1">
    <source>
        <dbReference type="UniProtKB" id="Q8R317"/>
    </source>
</evidence>
<evidence type="ECO:0000250" key="2">
    <source>
        <dbReference type="UniProtKB" id="Q9JJP9"/>
    </source>
</evidence>
<evidence type="ECO:0000255" key="3"/>
<evidence type="ECO:0000255" key="4">
    <source>
        <dbReference type="PROSITE-ProRule" id="PRU00212"/>
    </source>
</evidence>
<evidence type="ECO:0000255" key="5">
    <source>
        <dbReference type="PROSITE-ProRule" id="PRU00214"/>
    </source>
</evidence>
<evidence type="ECO:0000256" key="6">
    <source>
        <dbReference type="SAM" id="MobiDB-lite"/>
    </source>
</evidence>
<evidence type="ECO:0000269" key="7">
    <source>
    </source>
</evidence>
<evidence type="ECO:0000269" key="8">
    <source>
    </source>
</evidence>
<evidence type="ECO:0000269" key="9">
    <source>
    </source>
</evidence>
<evidence type="ECO:0000269" key="10">
    <source>
    </source>
</evidence>
<evidence type="ECO:0000269" key="11">
    <source>
    </source>
</evidence>
<evidence type="ECO:0000269" key="12">
    <source>
    </source>
</evidence>
<evidence type="ECO:0000269" key="13">
    <source>
    </source>
</evidence>
<evidence type="ECO:0000269" key="14">
    <source>
    </source>
</evidence>
<evidence type="ECO:0000269" key="15">
    <source>
    </source>
</evidence>
<evidence type="ECO:0000269" key="16">
    <source>
    </source>
</evidence>
<evidence type="ECO:0000269" key="17">
    <source>
    </source>
</evidence>
<evidence type="ECO:0000269" key="18">
    <source>
    </source>
</evidence>
<evidence type="ECO:0000269" key="19">
    <source>
    </source>
</evidence>
<evidence type="ECO:0000269" key="20">
    <source>
    </source>
</evidence>
<evidence type="ECO:0000269" key="21">
    <source>
    </source>
</evidence>
<evidence type="ECO:0000269" key="22">
    <source>
    </source>
</evidence>
<evidence type="ECO:0000269" key="23">
    <source>
    </source>
</evidence>
<evidence type="ECO:0000269" key="24">
    <source>
    </source>
</evidence>
<evidence type="ECO:0000269" key="25">
    <source>
    </source>
</evidence>
<evidence type="ECO:0000269" key="26">
    <source>
    </source>
</evidence>
<evidence type="ECO:0000303" key="27">
    <source>
    </source>
</evidence>
<evidence type="ECO:0000303" key="28">
    <source>
    </source>
</evidence>
<evidence type="ECO:0000303" key="29">
    <source>
    </source>
</evidence>
<evidence type="ECO:0000305" key="30"/>
<evidence type="ECO:0007744" key="31">
    <source>
    </source>
</evidence>
<evidence type="ECO:0007744" key="32">
    <source>
    </source>
</evidence>
<evidence type="ECO:0007744" key="33">
    <source>
    </source>
</evidence>
<evidence type="ECO:0007744" key="34">
    <source>
    </source>
</evidence>
<evidence type="ECO:0007829" key="35">
    <source>
        <dbReference type="PDB" id="2JY5"/>
    </source>
</evidence>
<evidence type="ECO:0007829" key="36">
    <source>
        <dbReference type="PDB" id="2KLC"/>
    </source>
</evidence>
<sequence>MAESGESGGPPGSQDSAAGAEGAGAPAAAASAEPKIMKVTVKTPKEKEEFAVPENSSVQQFKEEISKRFKSHTDQLVLIFAGKILKDQDTLSQHGIHDGLTVHLVIKTQNRPQDHSAQQTNTAGSNVTTSSTPNSNSTSGSATSNPFGLGGLGGLAGLSSLGLNTTNFSELQSQMQRQLLSNPEMMVQIMENPFVQSMLSNPDLMRQLIMANPQMQQLIQRNPEISHMLNNPDIMRQTLELARNPAMMQEMMRNQDRALSNLESIPGGYNALRRMYTDIQEPMLSAAQEQFGGNPFASLVSNTSSGEGSQPSRTENRDPLPNPWAPQTSQSSSASSGTASTVGGTTGSTASGTSGQSTTAPNLVPGVGASMFNTPGMQSLLQQITENPQLMQNMLSAPYMRSMMQSLSQNPDLAAQMMLNNPLFAGNPQLQEQMRQQLPTFLQQMQNPDTLSAMSNPRAMQALLQIQQGLQTLATEAPGLIPGFTPGLGALGSTGGSSGTNGSNATPSENTSPTAGTTEPGHQQFIQQMLQALAGVNPQLQNPEVRFQQQLEQLSAMGFLNREANLQALIATGGDINAAIERLLGSQPS</sequence>
<comment type="function">
    <text evidence="2 16 18 19 20 22 23 24 25 27">Plays an important role in the regulation of different protein degradation mechanisms and pathways including ubiquitin-proteasome system (UPS), autophagy and endoplasmic reticulum-associated protein degradation (ERAD) pathway. Mediates the proteasomal targeting of misfolded or accumulated proteins for degradation by binding (via UBA domain) to their polyubiquitin chains and by interacting (via ubiquitin-like domain) with the subunits of the proteasome (PubMed:15147878). Plays a role in the ERAD pathway via its interaction with ER-localized proteins UBXN4, VCP and HERPUD1 and may form a link between the polyubiquitinated ERAD substrates and the proteasome (PubMed:18307982, PubMed:19822669). Involved in the regulation of macroautophagy and autophagosome formation; required for maturation of autophagy-related protein LC3 from the cytosolic form LC3-I to the membrane-bound form LC3-II and may assist in the maturation of autophagosomes to autolysosomes by mediating autophagosome-lysosome fusion (PubMed:19148225, PubMed:20529957, PubMed:23459205). Negatively regulates the TICAM1/TRIF-dependent toll-like receptor signaling pathway by decreasing the abundance of TICAM1 via the autophagic pathway (PubMed:21695056). Promotes the ubiquitination and lysosomal degradation of ORAI1, consequently down-regulating the ORAI1-mediated Ca2+ mobilization (PubMed:23307288). Suppresses the maturation and proteasomal degradation of amyloid beta A4 protein (A4) by stimulating the lysine 63 (K63)-linked polyubiquitination. Delays the maturation of A4 by sequestering it in the Golgi apparatus and preventing its transport to the cell surface for subsequent processing (By similarity). Ubiquitinates BCL2L10 and thereby stabilizes protein abundance (PubMed:22233804).</text>
</comment>
<comment type="function">
    <molecule>Isoform 1</molecule>
    <text evidence="17 21">Plays a role in unfolded protein response (UPR) by attenuating the induction of UPR-inducible genes, DDTI3/CHOP, HSPA5 and PDIA2 during ER stress (PubMed:18953672). Plays a key role in the regulation of the levels of PSEN1 by targeting its accumulation to aggresomes which may then be removed from cells by autophagocytosis (PubMed:21143716).</text>
</comment>
<comment type="function">
    <molecule>Isoform 2</molecule>
    <text evidence="17">Plays a role in unfolded protein response (UPR) by attenuating the induction of UPR-inducible genes, DDTI3/CHOP, HSPA5 and PDIA2 during ER stress.</text>
</comment>
<comment type="function">
    <molecule>Isoform 3</molecule>
    <text evidence="17 21">Plays a role in unfolded protein response (UPR) by attenuating the induction of UPR-inducible genes, DDTI3/CHOP, HSPA5 and PDIA2 during ER stress (PubMed:18953672). Plays a key role in the regulation of the levels of PSEN1 by targeting its accumulation to aggresomes which may then be removed from cells by autophagocytosis (PubMed:21143716).</text>
</comment>
<comment type="subunit">
    <text evidence="1 2 7 8 9 10 11 12 13 14 15 16 19 20 21 22 23 24 25 26">Monomer and homodimer (PubMed:16813565). Heterodimer with UBQLN2 (PubMed:16813565). Binds CD47, NBL1, GABRA1, GABRA2, GABRA3, GABRA6, GABRB1, GABRB2 and GABRB3 (By similarity). Binds UBE3A, BTRC, P4HB and MTOR. Interacts with the proteasome 19S subunit. Interacts (via ubiquitin-like domain) with TREX1; the interaction is direct and may control TREX1 subcellular location. Forms a complex with UBXN4 and VCP. Interacts (via UBA domain) with UBQLN4 (via ubiquitin-like domain). Found in a complex with UBQLN2 and MAP1LC3A/B/C. The monomeric form interacts with PSEN2. The monomeric form interacts with PSEN1 (PubMed:11076969, PubMed:21143716). Interacts with ORAI1. Interacts (via UBA domain) with TICAM1. Interacts with EPS15. Interacts (via UBA domain) with UBA52 and (via ubiquitin-like domain) with PSMD3 and PSMD4. Interacts with HERPUD1. Interacts with MAP1LC3A/B/C in the presence of UBQLN4. Interacts (via ubiquitin-like domain) with EPS15 (via UIM domains) and both the ubiquitinated and non-ubiquitinated forms can interact with EPS15. Interacts (via ubiquitin-like domain) with EPS15L1, HGS (via UIM domain) and STAM2 (via UIM domain). Interacts with BCL2L10/BCL-B; in the cytoplasm (PubMed:22233804).</text>
</comment>
<comment type="subunit">
    <molecule>Isoform 1</molecule>
    <text evidence="13">Monomeric form interacts with PSEN1.</text>
</comment>
<comment type="subunit">
    <molecule>Isoform 3</molecule>
    <text evidence="13">Monomeric form interacts with PSEN1.</text>
</comment>
<comment type="interaction">
    <interactant intactId="EBI-741480">
        <id>Q9UMX0</id>
    </interactant>
    <interactant intactId="EBI-948905">
        <id>O00154</id>
        <label>ACOT7</label>
    </interactant>
    <organismsDiffer>false</organismsDiffer>
    <experiments>3</experiments>
</comment>
<comment type="interaction">
    <interactant intactId="EBI-741480">
        <id>Q9UMX0</id>
    </interactant>
    <interactant intactId="EBI-12007918">
        <id>O00154-4</id>
        <label>ACOT7</label>
    </interactant>
    <organismsDiffer>false</organismsDiffer>
    <experiments>3</experiments>
</comment>
<comment type="interaction">
    <interactant intactId="EBI-741480">
        <id>Q9UMX0</id>
    </interactant>
    <interactant intactId="EBI-954387">
        <id>Q16186</id>
        <label>ADRM1</label>
    </interactant>
    <organismsDiffer>false</organismsDiffer>
    <experiments>4</experiments>
</comment>
<comment type="interaction">
    <interactant intactId="EBI-741480">
        <id>Q9UMX0</id>
    </interactant>
    <interactant intactId="EBI-6916385">
        <id>Q9NUQ2</id>
        <label>AGPAT5</label>
    </interactant>
    <organismsDiffer>false</organismsDiffer>
    <experiments>6</experiments>
</comment>
<comment type="interaction">
    <interactant intactId="EBI-741480">
        <id>Q9UMX0</id>
    </interactant>
    <interactant intactId="EBI-712648">
        <id>O95994</id>
        <label>AGR2</label>
    </interactant>
    <organismsDiffer>false</organismsDiffer>
    <experiments>9</experiments>
</comment>
<comment type="interaction">
    <interactant intactId="EBI-741480">
        <id>Q9UMX0</id>
    </interactant>
    <interactant intactId="EBI-3925742">
        <id>Q8TD06</id>
        <label>AGR3</label>
    </interactant>
    <organismsDiffer>false</organismsDiffer>
    <experiments>4</experiments>
</comment>
<comment type="interaction">
    <interactant intactId="EBI-741480">
        <id>Q9UMX0</id>
    </interactant>
    <interactant intactId="EBI-5272188">
        <id>P23352</id>
        <label>ANOS1</label>
    </interactant>
    <organismsDiffer>false</organismsDiffer>
    <experiments>3</experiments>
</comment>
<comment type="interaction">
    <interactant intactId="EBI-741480">
        <id>Q9UMX0</id>
    </interactant>
    <interactant intactId="EBI-18302142">
        <id>P55056</id>
        <label>APOC4</label>
    </interactant>
    <organismsDiffer>false</organismsDiffer>
    <experiments>3</experiments>
</comment>
<comment type="interaction">
    <interactant intactId="EBI-741480">
        <id>Q9UMX0</id>
    </interactant>
    <interactant intactId="EBI-77613">
        <id>P05067</id>
        <label>APP</label>
    </interactant>
    <organismsDiffer>false</organismsDiffer>
    <experiments>3</experiments>
</comment>
<comment type="interaction">
    <interactant intactId="EBI-741480">
        <id>Q9UMX0</id>
    </interactant>
    <interactant intactId="EBI-5280499">
        <id>Q66PJ3-4</id>
        <label>ARL6IP4</label>
    </interactant>
    <organismsDiffer>false</organismsDiffer>
    <experiments>3</experiments>
</comment>
<comment type="interaction">
    <interactant intactId="EBI-741480">
        <id>Q9UMX0</id>
    </interactant>
    <interactant intactId="EBI-957042">
        <id>P50553</id>
        <label>ASCL1</label>
    </interactant>
    <organismsDiffer>false</organismsDiffer>
    <experiments>3</experiments>
</comment>
<comment type="interaction">
    <interactant intactId="EBI-741480">
        <id>Q9UMX0</id>
    </interactant>
    <interactant intactId="EBI-10254793">
        <id>Q6XD76</id>
        <label>ASCL4</label>
    </interactant>
    <organismsDiffer>false</organismsDiffer>
    <experiments>3</experiments>
</comment>
<comment type="interaction">
    <interactant intactId="EBI-741480">
        <id>Q9UMX0</id>
    </interactant>
    <interactant intactId="EBI-946046">
        <id>P54252</id>
        <label>ATXN3</label>
    </interactant>
    <organismsDiffer>false</organismsDiffer>
    <experiments>6</experiments>
</comment>
<comment type="interaction">
    <interactant intactId="EBI-741480">
        <id>Q9UMX0</id>
    </interactant>
    <interactant intactId="EBI-10988864">
        <id>P46379-2</id>
        <label>BAG6</label>
    </interactant>
    <organismsDiffer>false</organismsDiffer>
    <experiments>3</experiments>
</comment>
<comment type="interaction">
    <interactant intactId="EBI-741480">
        <id>Q9UMX0</id>
    </interactant>
    <interactant intactId="EBI-742750">
        <id>Q8TBE0</id>
        <label>BAHD1</label>
    </interactant>
    <organismsDiffer>false</organismsDiffer>
    <experiments>3</experiments>
</comment>
<comment type="interaction">
    <interactant intactId="EBI-741480">
        <id>Q9UMX0</id>
    </interactant>
    <interactant intactId="EBI-9092016">
        <id>Q9UQB8-6</id>
        <label>BAIAP2</label>
    </interactant>
    <organismsDiffer>false</organismsDiffer>
    <experiments>3</experiments>
</comment>
<comment type="interaction">
    <interactant intactId="EBI-741480">
        <id>Q9UMX0</id>
    </interactant>
    <interactant intactId="EBI-2548012">
        <id>Q9H2G9</id>
        <label>BLZF1</label>
    </interactant>
    <organismsDiffer>false</organismsDiffer>
    <experiments>3</experiments>
</comment>
<comment type="interaction">
    <interactant intactId="EBI-741480">
        <id>Q9UMX0</id>
    </interactant>
    <interactant intactId="EBI-953896">
        <id>Q9NP55</id>
        <label>BPIFA1</label>
    </interactant>
    <organismsDiffer>false</organismsDiffer>
    <experiments>3</experiments>
</comment>
<comment type="interaction">
    <interactant intactId="EBI-741480">
        <id>Q9UMX0</id>
    </interactant>
    <interactant intactId="EBI-23662416">
        <id>Q9ULD4-2</id>
        <label>BRPF3</label>
    </interactant>
    <organismsDiffer>false</organismsDiffer>
    <experiments>3</experiments>
</comment>
<comment type="interaction">
    <interactant intactId="EBI-741480">
        <id>Q9UMX0</id>
    </interactant>
    <interactant intactId="EBI-10693038">
        <id>Q9NSI6-4</id>
        <label>BRWD1</label>
    </interactant>
    <organismsDiffer>false</organismsDiffer>
    <experiments>3</experiments>
</comment>
<comment type="interaction">
    <interactant intactId="EBI-741480">
        <id>Q9UMX0</id>
    </interactant>
    <interactant intactId="EBI-11955105">
        <id>Q9BXJ3</id>
        <label>C1QTNF4</label>
    </interactant>
    <organismsDiffer>false</organismsDiffer>
    <experiments>3</experiments>
</comment>
<comment type="interaction">
    <interactant intactId="EBI-741480">
        <id>Q9UMX0</id>
    </interactant>
    <interactant intactId="EBI-18036948">
        <id>Q3SXR2</id>
        <label>C3orf36</label>
    </interactant>
    <organismsDiffer>false</organismsDiffer>
    <experiments>3</experiments>
</comment>
<comment type="interaction">
    <interactant intactId="EBI-741480">
        <id>Q9UMX0</id>
    </interactant>
    <interactant intactId="EBI-11532021">
        <id>P20807-4</id>
        <label>CAPN3</label>
    </interactant>
    <organismsDiffer>false</organismsDiffer>
    <experiments>3</experiments>
</comment>
<comment type="interaction">
    <interactant intactId="EBI-741480">
        <id>Q9UMX0</id>
    </interactant>
    <interactant intactId="EBI-8459634">
        <id>P10147</id>
        <label>CCL3</label>
    </interactant>
    <organismsDiffer>false</organismsDiffer>
    <experiments>3</experiments>
</comment>
<comment type="interaction">
    <interactant intactId="EBI-741480">
        <id>Q9UMX0</id>
    </interactant>
    <interactant intactId="EBI-718759">
        <id>P80098</id>
        <label>CCL7</label>
    </interactant>
    <organismsDiffer>false</organismsDiffer>
    <experiments>3</experiments>
</comment>
<comment type="interaction">
    <interactant intactId="EBI-741480">
        <id>Q9UMX0</id>
    </interactant>
    <interactant intactId="EBI-2824782">
        <id>Q8TCZ2</id>
        <label>CD99L2</label>
    </interactant>
    <organismsDiffer>false</organismsDiffer>
    <experiments>6</experiments>
</comment>
<comment type="interaction">
    <interactant intactId="EBI-741480">
        <id>Q9UMX0</id>
    </interactant>
    <interactant intactId="EBI-2876678">
        <id>Q9H305</id>
        <label>CDIP1</label>
    </interactant>
    <organismsDiffer>false</organismsDiffer>
    <experiments>3</experiments>
</comment>
<comment type="interaction">
    <interactant intactId="EBI-741480">
        <id>Q9UMX0</id>
    </interactant>
    <interactant intactId="EBI-375077">
        <id>P38936</id>
        <label>CDKN1A</label>
    </interactant>
    <organismsDiffer>false</organismsDiffer>
    <experiments>3</experiments>
</comment>
<comment type="interaction">
    <interactant intactId="EBI-741480">
        <id>Q9UMX0</id>
    </interactant>
    <interactant intactId="EBI-3913685">
        <id>O95674</id>
        <label>CDS2</label>
    </interactant>
    <organismsDiffer>false</organismsDiffer>
    <experiments>3</experiments>
</comment>
<comment type="interaction">
    <interactant intactId="EBI-741480">
        <id>Q9UMX0</id>
    </interactant>
    <interactant intactId="EBI-11953200">
        <id>Q494V2-2</id>
        <label>CFAP100</label>
    </interactant>
    <organismsDiffer>false</organismsDiffer>
    <experiments>3</experiments>
</comment>
<comment type="interaction">
    <interactant intactId="EBI-741480">
        <id>Q9UMX0</id>
    </interactant>
    <interactant intactId="EBI-749253">
        <id>Q8WUX9</id>
        <label>CHMP7</label>
    </interactant>
    <organismsDiffer>false</organismsDiffer>
    <experiments>3</experiments>
</comment>
<comment type="interaction">
    <interactant intactId="EBI-741480">
        <id>Q9UMX0</id>
    </interactant>
    <interactant intactId="EBI-2528309">
        <id>Q03692</id>
        <label>COL10A1</label>
    </interactant>
    <organismsDiffer>false</organismsDiffer>
    <experiments>6</experiments>
</comment>
<comment type="interaction">
    <interactant intactId="EBI-741480">
        <id>Q9UMX0</id>
    </interactant>
    <interactant intactId="EBI-983038">
        <id>P08123</id>
        <label>COL1A2</label>
    </interactant>
    <organismsDiffer>false</organismsDiffer>
    <experiments>6</experiments>
</comment>
<comment type="interaction">
    <interactant intactId="EBI-741480">
        <id>Q9UMX0</id>
    </interactant>
    <interactant intactId="EBI-12375799">
        <id>P02458-1</id>
        <label>COL2A1</label>
    </interactant>
    <organismsDiffer>false</organismsDiffer>
    <experiments>3</experiments>
</comment>
<comment type="interaction">
    <interactant intactId="EBI-741480">
        <id>Q9UMX0</id>
    </interactant>
    <interactant intactId="EBI-714971">
        <id>Q14055</id>
        <label>COL9A2</label>
    </interactant>
    <organismsDiffer>false</organismsDiffer>
    <experiments>3</experiments>
</comment>
<comment type="interaction">
    <interactant intactId="EBI-741480">
        <id>Q9UMX0</id>
    </interactant>
    <interactant intactId="EBI-10260134">
        <id>Q86WV2</id>
        <label>COX4I1</label>
    </interactant>
    <organismsDiffer>false</organismsDiffer>
    <experiments>3</experiments>
</comment>
<comment type="interaction">
    <interactant intactId="EBI-741480">
        <id>Q9UMX0</id>
    </interactant>
    <interactant intactId="EBI-2602175">
        <id>P07498</id>
        <label>CSN3</label>
    </interactant>
    <organismsDiffer>false</organismsDiffer>
    <experiments>3</experiments>
</comment>
<comment type="interaction">
    <interactant intactId="EBI-741480">
        <id>Q9UMX0</id>
    </interactant>
    <interactant intactId="EBI-711360">
        <id>P33240</id>
        <label>CSTF2</label>
    </interactant>
    <organismsDiffer>false</organismsDiffer>
    <experiments>7</experiments>
</comment>
<comment type="interaction">
    <interactant intactId="EBI-741480">
        <id>Q9UMX0</id>
    </interactant>
    <interactant intactId="EBI-747012">
        <id>Q9H0L4</id>
        <label>CSTF2T</label>
    </interactant>
    <organismsDiffer>false</organismsDiffer>
    <experiments>7</experiments>
</comment>
<comment type="interaction">
    <interactant intactId="EBI-741480">
        <id>Q9UMX0</id>
    </interactant>
    <interactant intactId="EBI-1188472">
        <id>P78358</id>
        <label>CTAG1B</label>
    </interactant>
    <organismsDiffer>false</organismsDiffer>
    <experiments>6</experiments>
</comment>
<comment type="interaction">
    <interactant intactId="EBI-741480">
        <id>Q9UMX0</id>
    </interactant>
    <interactant intactId="EBI-12265122">
        <id>O75638-2</id>
        <label>CTAG2</label>
    </interactant>
    <organismsDiffer>false</organismsDiffer>
    <experiments>3</experiments>
</comment>
<comment type="interaction">
    <interactant intactId="EBI-741480">
        <id>Q9UMX0</id>
    </interactant>
    <interactant intactId="EBI-12024320">
        <id>Q8TB03</id>
        <label>CXorf38</label>
    </interactant>
    <organismsDiffer>false</organismsDiffer>
    <experiments>3</experiments>
</comment>
<comment type="interaction">
    <interactant intactId="EBI-741480">
        <id>Q9UMX0</id>
    </interactant>
    <interactant intactId="EBI-953870">
        <id>Q9UHQ9</id>
        <label>CYB5R1</label>
    </interactant>
    <organismsDiffer>false</organismsDiffer>
    <experiments>3</experiments>
</comment>
<comment type="interaction">
    <interactant intactId="EBI-741480">
        <id>Q9UMX0</id>
    </interactant>
    <interactant intactId="EBI-724310">
        <id>Q15038</id>
        <label>DAZAP2</label>
    </interactant>
    <organismsDiffer>false</organismsDiffer>
    <experiments>3</experiments>
</comment>
<comment type="interaction">
    <interactant intactId="EBI-741480">
        <id>Q9UMX0</id>
    </interactant>
    <interactant intactId="EBI-751783">
        <id>Q9UJU6</id>
        <label>DBNL</label>
    </interactant>
    <organismsDiffer>false</organismsDiffer>
    <experiments>3</experiments>
</comment>
<comment type="interaction">
    <interactant intactId="EBI-741480">
        <id>Q9UMX0</id>
    </interactant>
    <interactant intactId="EBI-10222451">
        <id>Q01524</id>
        <label>DEFA6</label>
    </interactant>
    <organismsDiffer>false</organismsDiffer>
    <experiments>4</experiments>
</comment>
<comment type="interaction">
    <interactant intactId="EBI-741480">
        <id>Q9UMX0</id>
    </interactant>
    <interactant intactId="EBI-12253292">
        <id>Q30KQ5</id>
        <label>DEFB115</label>
    </interactant>
    <organismsDiffer>false</organismsDiffer>
    <experiments>3</experiments>
</comment>
<comment type="interaction">
    <interactant intactId="EBI-741480">
        <id>Q9UMX0</id>
    </interactant>
    <interactant intactId="EBI-2806959">
        <id>Q6ICB0</id>
        <label>DESI1</label>
    </interactant>
    <organismsDiffer>false</organismsDiffer>
    <experiments>6</experiments>
</comment>
<comment type="interaction">
    <interactant intactId="EBI-741480">
        <id>Q9UMX0</id>
    </interactant>
    <interactant intactId="EBI-724515">
        <id>O95424</id>
        <label>DEXI</label>
    </interactant>
    <organismsDiffer>false</organismsDiffer>
    <experiments>3</experiments>
</comment>
<comment type="interaction">
    <interactant intactId="EBI-741480">
        <id>Q9UMX0</id>
    </interactant>
    <interactant intactId="EBI-25842538">
        <id>Q8NDP9</id>
        <label>DKFZp547K2416</label>
    </interactant>
    <organismsDiffer>false</organismsDiffer>
    <experiments>3</experiments>
</comment>
<comment type="interaction">
    <interactant intactId="EBI-741480">
        <id>Q9UMX0</id>
    </interactant>
    <interactant intactId="EBI-3908248">
        <id>O60479</id>
        <label>DLX3</label>
    </interactant>
    <organismsDiffer>false</organismsDiffer>
    <experiments>3</experiments>
</comment>
<comment type="interaction">
    <interactant intactId="EBI-741480">
        <id>Q9UMX0</id>
    </interactant>
    <interactant intactId="EBI-7943171">
        <id>Q6E0U4</id>
        <label>DMKN</label>
    </interactant>
    <organismsDiffer>false</organismsDiffer>
    <experiments>3</experiments>
</comment>
<comment type="interaction">
    <interactant intactId="EBI-741480">
        <id>Q9UMX0</id>
    </interactant>
    <interactant intactId="EBI-11526226">
        <id>Q96EY1-3</id>
        <label>DNAJA3</label>
    </interactant>
    <organismsDiffer>false</organismsDiffer>
    <experiments>3</experiments>
</comment>
<comment type="interaction">
    <interactant intactId="EBI-741480">
        <id>Q9UMX0</id>
    </interactant>
    <interactant intactId="EBI-2795449">
        <id>Q9H147</id>
        <label>DNTTIP1</label>
    </interactant>
    <organismsDiffer>false</organismsDiffer>
    <experiments>3</experiments>
</comment>
<comment type="interaction">
    <interactant intactId="EBI-741480">
        <id>Q9UMX0</id>
    </interactant>
    <interactant intactId="EBI-16431159">
        <id>A0A0S2Z5Y1</id>
        <label>DOLK</label>
    </interactant>
    <organismsDiffer>false</organismsDiffer>
    <experiments>3</experiments>
</comment>
<comment type="interaction">
    <interactant intactId="EBI-741480">
        <id>Q9UMX0</id>
    </interactant>
    <interactant intactId="EBI-741400">
        <id>Q7Z7J5</id>
        <label>DPPA2</label>
    </interactant>
    <organismsDiffer>false</organismsDiffer>
    <experiments>3</experiments>
</comment>
<comment type="interaction">
    <interactant intactId="EBI-741480">
        <id>Q9UMX0</id>
    </interactant>
    <interactant intactId="EBI-12275416">
        <id>Q14117</id>
        <label>DPYS</label>
    </interactant>
    <organismsDiffer>false</organismsDiffer>
    <experiments>3</experiments>
</comment>
<comment type="interaction">
    <interactant intactId="EBI-741480">
        <id>Q9UMX0</id>
    </interactant>
    <interactant intactId="EBI-724653">
        <id>Q9BPU6</id>
        <label>DPYSL5</label>
    </interactant>
    <organismsDiffer>false</organismsDiffer>
    <experiments>3</experiments>
</comment>
<comment type="interaction">
    <interactant intactId="EBI-741480">
        <id>Q9UMX0</id>
    </interactant>
    <interactant intactId="EBI-11143782">
        <id>Q9BVC3</id>
        <label>DSCC1</label>
    </interactant>
    <organismsDiffer>false</organismsDiffer>
    <experiments>3</experiments>
</comment>
<comment type="interaction">
    <interactant intactId="EBI-741480">
        <id>Q9UMX0</id>
    </interactant>
    <interactant intactId="EBI-3443946">
        <id>Q9Y6W6</id>
        <label>DUSP10</label>
    </interactant>
    <organismsDiffer>false</organismsDiffer>
    <experiments>3</experiments>
</comment>
<comment type="interaction">
    <interactant intactId="EBI-741480">
        <id>Q9UMX0</id>
    </interactant>
    <interactant intactId="EBI-7779316">
        <id>A0AVK6</id>
        <label>E2F8</label>
    </interactant>
    <organismsDiffer>false</organismsDiffer>
    <experiments>3</experiments>
</comment>
<comment type="interaction">
    <interactant intactId="EBI-741480">
        <id>Q9UMX0</id>
    </interactant>
    <interactant intactId="EBI-947964">
        <id>Q16610</id>
        <label>ECM1</label>
    </interactant>
    <organismsDiffer>false</organismsDiffer>
    <experiments>3</experiments>
</comment>
<comment type="interaction">
    <interactant intactId="EBI-741480">
        <id>Q9UMX0</id>
    </interactant>
    <interactant intactId="EBI-10248874">
        <id>Q658K8</id>
        <label>EEF1DP3</label>
    </interactant>
    <organismsDiffer>false</organismsDiffer>
    <experiments>3</experiments>
</comment>
<comment type="interaction">
    <interactant intactId="EBI-741480">
        <id>Q9UMX0</id>
    </interactant>
    <interactant intactId="EBI-743414">
        <id>O95967</id>
        <label>EFEMP2</label>
    </interactant>
    <organismsDiffer>false</organismsDiffer>
    <experiments>5</experiments>
</comment>
<comment type="interaction">
    <interactant intactId="EBI-741480">
        <id>Q9UMX0</id>
    </interactant>
    <interactant intactId="EBI-395274">
        <id>O00472</id>
        <label>ELL2</label>
    </interactant>
    <organismsDiffer>false</organismsDiffer>
    <experiments>3</experiments>
</comment>
<comment type="interaction">
    <interactant intactId="EBI-741480">
        <id>Q9UMX0</id>
    </interactant>
    <interactant intactId="EBI-25853109">
        <id>O43768-8</id>
        <label>ENSA</label>
    </interactant>
    <organismsDiffer>false</organismsDiffer>
    <experiments>3</experiments>
</comment>
<comment type="interaction">
    <interactant intactId="EBI-741480">
        <id>Q9UMX0</id>
    </interactant>
    <interactant intactId="EBI-396684">
        <id>P42566</id>
        <label>EPS15</label>
    </interactant>
    <organismsDiffer>false</organismsDiffer>
    <experiments>5</experiments>
</comment>
<comment type="interaction">
    <interactant intactId="EBI-741480">
        <id>Q9UMX0</id>
    </interactant>
    <interactant intactId="EBI-953772">
        <id>Q96DN0</id>
        <label>ERP27</label>
    </interactant>
    <organismsDiffer>false</organismsDiffer>
    <experiments>4</experiments>
</comment>
<comment type="interaction">
    <interactant intactId="EBI-741480">
        <id>Q9UMX0</id>
    </interactant>
    <interactant intactId="EBI-946830">
        <id>P30040</id>
        <label>ERP29</label>
    </interactant>
    <organismsDiffer>false</organismsDiffer>
    <experiments>3</experiments>
</comment>
<comment type="interaction">
    <interactant intactId="EBI-741480">
        <id>Q9UMX0</id>
    </interactant>
    <interactant intactId="EBI-10213520">
        <id>Q6NXG1</id>
        <label>ESRP1</label>
    </interactant>
    <organismsDiffer>false</organismsDiffer>
    <experiments>3</experiments>
</comment>
<comment type="interaction">
    <interactant intactId="EBI-741480">
        <id>Q9UMX0</id>
    </interactant>
    <interactant intactId="EBI-2834493">
        <id>Q9HBU6</id>
        <label>ETNK1</label>
    </interactant>
    <organismsDiffer>false</organismsDiffer>
    <experiments>3</experiments>
</comment>
<comment type="interaction">
    <interactant intactId="EBI-741480">
        <id>Q9UMX0</id>
    </interactant>
    <interactant intactId="EBI-11793142">
        <id>Q96GL9</id>
        <label>FAM163A</label>
    </interactant>
    <organismsDiffer>false</organismsDiffer>
    <experiments>3</experiments>
</comment>
<comment type="interaction">
    <interactant intactId="EBI-741480">
        <id>Q9UMX0</id>
    </interactant>
    <interactant intactId="EBI-11793223">
        <id>P0C2L3</id>
        <label>FAM163B</label>
    </interactant>
    <organismsDiffer>false</organismsDiffer>
    <experiments>3</experiments>
</comment>
<comment type="interaction">
    <interactant intactId="EBI-741480">
        <id>Q9UMX0</id>
    </interactant>
    <interactant intactId="EBI-9917523">
        <id>Q8NB25</id>
        <label>FAM184A</label>
    </interactant>
    <organismsDiffer>false</organismsDiffer>
    <experiments>3</experiments>
</comment>
<comment type="interaction">
    <interactant intactId="EBI-741480">
        <id>Q9UMX0</id>
    </interactant>
    <interactant intactId="EBI-1384254">
        <id>Q86UY5</id>
        <label>FAM83A</label>
    </interactant>
    <organismsDiffer>false</organismsDiffer>
    <experiments>3</experiments>
</comment>
<comment type="interaction">
    <interactant intactId="EBI-741480">
        <id>Q9UMX0</id>
    </interactant>
    <interactant intactId="EBI-1395970">
        <id>P12318</id>
        <label>FCGR2A</label>
    </interactant>
    <organismsDiffer>false</organismsDiffer>
    <experiments>3</experiments>
</comment>
<comment type="interaction">
    <interactant intactId="EBI-741480">
        <id>Q9UMX0</id>
    </interactant>
    <interactant intactId="EBI-719873">
        <id>P26885</id>
        <label>FKBP2</label>
    </interactant>
    <organismsDiffer>false</organismsDiffer>
    <experiments>3</experiments>
</comment>
<comment type="interaction">
    <interactant intactId="EBI-741480">
        <id>Q9UMX0</id>
    </interactant>
    <interactant intactId="EBI-1220319">
        <id>P02751</id>
        <label>FN1</label>
    </interactant>
    <organismsDiffer>false</organismsDiffer>
    <experiments>3</experiments>
</comment>
<comment type="interaction">
    <interactant intactId="EBI-741480">
        <id>Q9UMX0</id>
    </interactant>
    <interactant intactId="EBI-12893875">
        <id>P41439</id>
        <label>FOLR3</label>
    </interactant>
    <organismsDiffer>false</organismsDiffer>
    <experiments>3</experiments>
</comment>
<comment type="interaction">
    <interactant intactId="EBI-741480">
        <id>Q9UMX0</id>
    </interactant>
    <interactant intactId="EBI-3893419">
        <id>P15408</id>
        <label>FOSL2</label>
    </interactant>
    <organismsDiffer>false</organismsDiffer>
    <experiments>3</experiments>
</comment>
<comment type="interaction">
    <interactant intactId="EBI-741480">
        <id>Q9UMX0</id>
    </interactant>
    <interactant intactId="EBI-746917">
        <id>O75084</id>
        <label>FZD7</label>
    </interactant>
    <organismsDiffer>false</organismsDiffer>
    <experiments>5</experiments>
</comment>
<comment type="interaction">
    <interactant intactId="EBI-741480">
        <id>Q9UMX0</id>
    </interactant>
    <interactant intactId="EBI-618189">
        <id>Q06547-2</id>
        <label>GABPB1</label>
    </interactant>
    <organismsDiffer>false</organismsDiffer>
    <experiments>3</experiments>
</comment>
<comment type="interaction">
    <interactant intactId="EBI-741480">
        <id>Q9UMX0</id>
    </interactant>
    <interactant intactId="EBI-744352">
        <id>O14764</id>
        <label>GABRD</label>
    </interactant>
    <organismsDiffer>false</organismsDiffer>
    <experiments>4</experiments>
</comment>
<comment type="interaction">
    <interactant intactId="EBI-741480">
        <id>Q9UMX0</id>
    </interactant>
    <interactant intactId="EBI-6624768">
        <id>P22466</id>
        <label>GAL</label>
    </interactant>
    <organismsDiffer>false</organismsDiffer>
    <experiments>3</experiments>
</comment>
<comment type="interaction">
    <interactant intactId="EBI-741480">
        <id>Q9UMX0</id>
    </interactant>
    <interactant intactId="EBI-10319458">
        <id>Q9UBU3</id>
        <label>GHRL</label>
    </interactant>
    <organismsDiffer>false</organismsDiffer>
    <experiments>3</experiments>
</comment>
<comment type="interaction">
    <interactant intactId="EBI-741480">
        <id>Q9UMX0</id>
    </interactant>
    <interactant intactId="EBI-12143817">
        <id>Q49A26-4</id>
        <label>GLYR1</label>
    </interactant>
    <organismsDiffer>false</organismsDiffer>
    <experiments>3</experiments>
</comment>
<comment type="interaction">
    <interactant intactId="EBI-741480">
        <id>Q9UMX0</id>
    </interactant>
    <interactant intactId="EBI-22387200">
        <id>Q16538</id>
        <label>GPR162</label>
    </interactant>
    <organismsDiffer>false</organismsDiffer>
    <experiments>3</experiments>
</comment>
<comment type="interaction">
    <interactant intactId="EBI-741480">
        <id>Q9UMX0</id>
    </interactant>
    <interactant intactId="EBI-12244272">
        <id>Q02747</id>
        <label>GUCA2A</label>
    </interactant>
    <organismsDiffer>false</organismsDiffer>
    <experiments>3</experiments>
</comment>
<comment type="interaction">
    <interactant intactId="EBI-741480">
        <id>Q9UMX0</id>
    </interactant>
    <interactant intactId="EBI-12349759">
        <id>Q16661</id>
        <label>GUCA2B</label>
    </interactant>
    <organismsDiffer>false</organismsDiffer>
    <experiments>3</experiments>
</comment>
<comment type="interaction">
    <interactant intactId="EBI-741480">
        <id>Q9UMX0</id>
    </interactant>
    <interactant intactId="EBI-10194756">
        <id>P06028</id>
        <label>GYPB</label>
    </interactant>
    <organismsDiffer>false</organismsDiffer>
    <experiments>6</experiments>
</comment>
<comment type="interaction">
    <interactant intactId="EBI-741480">
        <id>Q9UMX0</id>
    </interactant>
    <interactant intactId="EBI-25854793">
        <id>Q5T447-2</id>
        <label>HECTD3</label>
    </interactant>
    <organismsDiffer>false</organismsDiffer>
    <experiments>3</experiments>
</comment>
<comment type="interaction">
    <interactant intactId="EBI-741480">
        <id>Q9UMX0</id>
    </interactant>
    <interactant intactId="EBI-743438">
        <id>Q8IV36</id>
        <label>HID1</label>
    </interactant>
    <organismsDiffer>false</organismsDiffer>
    <experiments>3</experiments>
</comment>
<comment type="interaction">
    <interactant intactId="EBI-741480">
        <id>Q9UMX0</id>
    </interactant>
    <interactant intactId="EBI-741469">
        <id>P52789</id>
        <label>HK2</label>
    </interactant>
    <organismsDiffer>false</organismsDiffer>
    <experiments>4</experiments>
</comment>
<comment type="interaction">
    <interactant intactId="EBI-741480">
        <id>Q9UMX0</id>
    </interactant>
    <interactant intactId="EBI-2963255">
        <id>Q53GQ0</id>
        <label>HSD17B12</label>
    </interactant>
    <organismsDiffer>false</organismsDiffer>
    <experiments>6</experiments>
</comment>
<comment type="interaction">
    <interactant intactId="EBI-741480">
        <id>Q9UMX0</id>
    </interactant>
    <interactant intactId="EBI-750892">
        <id>P48723</id>
        <label>HSPA13</label>
    </interactant>
    <organismsDiffer>false</organismsDiffer>
    <experiments>8</experiments>
</comment>
<comment type="interaction">
    <interactant intactId="EBI-741480">
        <id>Q9UMX0</id>
    </interactant>
    <interactant intactId="EBI-725665">
        <id>Q9Y5U9</id>
        <label>IER3IP1</label>
    </interactant>
    <organismsDiffer>false</organismsDiffer>
    <experiments>3</experiments>
</comment>
<comment type="interaction">
    <interactant intactId="EBI-741480">
        <id>Q9UMX0</id>
    </interactant>
    <interactant intactId="EBI-947015">
        <id>P24592</id>
        <label>IGFBP6</label>
    </interactant>
    <organismsDiffer>false</organismsDiffer>
    <experiments>3</experiments>
</comment>
<comment type="interaction">
    <interactant intactId="EBI-741480">
        <id>Q9UMX0</id>
    </interactant>
    <interactant intactId="EBI-10253735">
        <id>Q6PIK1</id>
        <label>IGL@</label>
    </interactant>
    <organismsDiffer>false</organismsDiffer>
    <experiments>3</experiments>
</comment>
<comment type="interaction">
    <interactant intactId="EBI-741480">
        <id>Q9UMX0</id>
    </interactant>
    <interactant intactId="EBI-6677651">
        <id>Q6PIQ7</id>
        <label>IGL@</label>
    </interactant>
    <organismsDiffer>false</organismsDiffer>
    <experiments>3</experiments>
</comment>
<comment type="interaction">
    <interactant intactId="EBI-741480">
        <id>Q9UMX0</id>
    </interactant>
    <interactant intactId="EBI-748681">
        <id>Q8N355</id>
        <label>IGL@</label>
    </interactant>
    <organismsDiffer>false</organismsDiffer>
    <experiments>4</experiments>
</comment>
<comment type="interaction">
    <interactant intactId="EBI-741480">
        <id>Q9UMX0</id>
    </interactant>
    <interactant intactId="EBI-3862125">
        <id>Q9NZH6</id>
        <label>IL37</label>
    </interactant>
    <organismsDiffer>false</organismsDiffer>
    <experiments>3</experiments>
</comment>
<comment type="interaction">
    <interactant intactId="EBI-741480">
        <id>Q9UMX0</id>
    </interactant>
    <interactant intactId="EBI-10238517">
        <id>Q17RA0</id>
        <label>IL6ST</label>
    </interactant>
    <organismsDiffer>false</organismsDiffer>
    <experiments>3</experiments>
</comment>
<comment type="interaction">
    <interactant intactId="EBI-741480">
        <id>Q9UMX0</id>
    </interactant>
    <interactant intactId="EBI-945994">
        <id>P53990</id>
        <label>IST1</label>
    </interactant>
    <organismsDiffer>false</organismsDiffer>
    <experiments>3</experiments>
</comment>
<comment type="interaction">
    <interactant intactId="EBI-741480">
        <id>Q9UMX0</id>
    </interactant>
    <interactant intactId="EBI-12188567">
        <id>P53990-3</id>
        <label>IST1</label>
    </interactant>
    <organismsDiffer>false</organismsDiffer>
    <experiments>3</experiments>
</comment>
<comment type="interaction">
    <interactant intactId="EBI-741480">
        <id>Q9UMX0</id>
    </interactant>
    <interactant intactId="EBI-953819">
        <id>Q6GPH6</id>
        <label>ITPRIPL1</label>
    </interactant>
    <organismsDiffer>false</organismsDiffer>
    <experiments>3</experiments>
</comment>
<comment type="interaction">
    <interactant intactId="EBI-741480">
        <id>Q9UMX0</id>
    </interactant>
    <interactant intactId="EBI-2847044">
        <id>Q96JJ6</id>
        <label>JPH4</label>
    </interactant>
    <organismsDiffer>false</organismsDiffer>
    <experiments>3</experiments>
</comment>
<comment type="interaction">
    <interactant intactId="EBI-741480">
        <id>Q9UMX0</id>
    </interactant>
    <interactant intactId="EBI-11305455">
        <id>Q96MG2</id>
        <label>JSRP1</label>
    </interactant>
    <organismsDiffer>false</organismsDiffer>
    <experiments>3</experiments>
</comment>
<comment type="interaction">
    <interactant intactId="EBI-741480">
        <id>Q9UMX0</id>
    </interactant>
    <interactant intactId="EBI-852823">
        <id>P05412</id>
        <label>JUN</label>
    </interactant>
    <organismsDiffer>false</organismsDiffer>
    <experiments>3</experiments>
</comment>
<comment type="interaction">
    <interactant intactId="EBI-741480">
        <id>Q9UMX0</id>
    </interactant>
    <interactant intactId="EBI-743960">
        <id>Q8N5Z5</id>
        <label>KCTD17</label>
    </interactant>
    <organismsDiffer>false</organismsDiffer>
    <experiments>3</experiments>
</comment>
<comment type="interaction">
    <interactant intactId="EBI-741480">
        <id>Q9UMX0</id>
    </interactant>
    <interactant intactId="EBI-9089060">
        <id>Q7Z7F0-4</id>
        <label>KHDC4</label>
    </interactant>
    <organismsDiffer>false</organismsDiffer>
    <experiments>3</experiments>
</comment>
<comment type="interaction">
    <interactant intactId="EBI-741480">
        <id>Q9UMX0</id>
    </interactant>
    <interactant intactId="EBI-739890">
        <id>Q9P2K6</id>
        <label>KLHL42</label>
    </interactant>
    <organismsDiffer>false</organismsDiffer>
    <experiments>4</experiments>
</comment>
<comment type="interaction">
    <interactant intactId="EBI-741480">
        <id>Q9UMX0</id>
    </interactant>
    <interactant intactId="EBI-10261141">
        <id>Q8IUC2</id>
        <label>KRTAP8-1</label>
    </interactant>
    <organismsDiffer>false</organismsDiffer>
    <experiments>3</experiments>
</comment>
<comment type="interaction">
    <interactant intactId="EBI-741480">
        <id>Q9UMX0</id>
    </interactant>
    <interactant intactId="EBI-10250491">
        <id>Q6ISS4</id>
        <label>LAIR2</label>
    </interactant>
    <organismsDiffer>false</organismsDiffer>
    <experiments>3</experiments>
</comment>
<comment type="interaction">
    <interactant intactId="EBI-741480">
        <id>Q9UMX0</id>
    </interactant>
    <interactant intactId="EBI-949174">
        <id>P07942</id>
        <label>LAMB1</label>
    </interactant>
    <organismsDiffer>false</organismsDiffer>
    <experiments>3</experiments>
</comment>
<comment type="interaction">
    <interactant intactId="EBI-741480">
        <id>Q9UMX0</id>
    </interactant>
    <interactant intactId="EBI-715385">
        <id>Q6IAA8</id>
        <label>LAMTOR1</label>
    </interactant>
    <organismsDiffer>false</organismsDiffer>
    <experiments>3</experiments>
</comment>
<comment type="interaction">
    <interactant intactId="EBI-741480">
        <id>Q9UMX0</id>
    </interactant>
    <interactant intactId="EBI-713382">
        <id>O43504</id>
        <label>LAMTOR5</label>
    </interactant>
    <organismsDiffer>false</organismsDiffer>
    <experiments>3</experiments>
</comment>
<comment type="interaction">
    <interactant intactId="EBI-741480">
        <id>Q9UMX0</id>
    </interactant>
    <interactant intactId="EBI-11911016">
        <id>P80188</id>
        <label>LCN2</label>
    </interactant>
    <organismsDiffer>false</organismsDiffer>
    <experiments>3</experiments>
</comment>
<comment type="interaction">
    <interactant intactId="EBI-741480">
        <id>Q9UMX0</id>
    </interactant>
    <interactant intactId="EBI-16429099">
        <id>A0A0S2Z5S9</id>
        <label>LHX4</label>
    </interactant>
    <organismsDiffer>false</organismsDiffer>
    <experiments>3</experiments>
</comment>
<comment type="interaction">
    <interactant intactId="EBI-741480">
        <id>Q9UMX0</id>
    </interactant>
    <interactant intactId="EBI-25835523">
        <id>Q9H2C1</id>
        <label>LHX5</label>
    </interactant>
    <organismsDiffer>false</organismsDiffer>
    <experiments>3</experiments>
</comment>
<comment type="interaction">
    <interactant intactId="EBI-741480">
        <id>Q9UMX0</id>
    </interactant>
    <interactant intactId="EBI-8474075">
        <id>Q68G74</id>
        <label>LHX8</label>
    </interactant>
    <organismsDiffer>false</organismsDiffer>
    <experiments>3</experiments>
</comment>
<comment type="interaction">
    <interactant intactId="EBI-741480">
        <id>Q9UMX0</id>
    </interactant>
    <interactant intactId="EBI-10264791">
        <id>Q8N0U6</id>
        <label>LINC00518</label>
    </interactant>
    <organismsDiffer>false</organismsDiffer>
    <experiments>3</experiments>
</comment>
<comment type="interaction">
    <interactant intactId="EBI-741480">
        <id>Q9UMX0</id>
    </interactant>
    <interactant intactId="EBI-725647">
        <id>Q99732</id>
        <label>LITAF</label>
    </interactant>
    <organismsDiffer>false</organismsDiffer>
    <experiments>4</experiments>
</comment>
<comment type="interaction">
    <interactant intactId="EBI-741480">
        <id>Q9UMX0</id>
    </interactant>
    <interactant intactId="EBI-12133176">
        <id>Q9UIQ6-2</id>
        <label>LNPEP</label>
    </interactant>
    <organismsDiffer>false</organismsDiffer>
    <experiments>3</experiments>
</comment>
<comment type="interaction">
    <interactant intactId="EBI-741480">
        <id>Q9UMX0</id>
    </interactant>
    <interactant intactId="EBI-3911344">
        <id>P27338</id>
        <label>MAOB</label>
    </interactant>
    <organismsDiffer>false</organismsDiffer>
    <experiments>3</experiments>
</comment>
<comment type="interaction">
    <interactant intactId="EBI-741480">
        <id>Q9UMX0</id>
    </interactant>
    <interactant intactId="EBI-722444">
        <id>P21741</id>
        <label>MDK</label>
    </interactant>
    <organismsDiffer>false</organismsDiffer>
    <experiments>3</experiments>
</comment>
<comment type="interaction">
    <interactant intactId="EBI-741480">
        <id>Q9UMX0</id>
    </interactant>
    <interactant intactId="EBI-6165891">
        <id>Q14696</id>
        <label>MESD</label>
    </interactant>
    <organismsDiffer>false</organismsDiffer>
    <experiments>3</experiments>
</comment>
<comment type="interaction">
    <interactant intactId="EBI-741480">
        <id>Q9UMX0</id>
    </interactant>
    <interactant intactId="EBI-750153">
        <id>Q96C03</id>
        <label>MIEF2</label>
    </interactant>
    <organismsDiffer>false</organismsDiffer>
    <experiments>4</experiments>
</comment>
<comment type="interaction">
    <interactant intactId="EBI-741480">
        <id>Q9UMX0</id>
    </interactant>
    <interactant intactId="EBI-25835707">
        <id>Q6IN84-2</id>
        <label>MRM1</label>
    </interactant>
    <organismsDiffer>false</organismsDiffer>
    <experiments>3</experiments>
</comment>
<comment type="interaction">
    <interactant intactId="EBI-741480">
        <id>Q9UMX0</id>
    </interactant>
    <interactant intactId="EBI-1045956">
        <id>O60783</id>
        <label>MRPS14</label>
    </interactant>
    <organismsDiffer>false</organismsDiffer>
    <experiments>3</experiments>
</comment>
<comment type="interaction">
    <interactant intactId="EBI-741480">
        <id>Q9UMX0</id>
    </interactant>
    <interactant intactId="EBI-447544">
        <id>P01106</id>
        <label>MYC</label>
    </interactant>
    <organismsDiffer>false</organismsDiffer>
    <experiments>3</experiments>
</comment>
<comment type="interaction">
    <interactant intactId="EBI-741480">
        <id>Q9UMX0</id>
    </interactant>
    <interactant intactId="EBI-718622">
        <id>Q969H8</id>
        <label>MYDGF</label>
    </interactant>
    <organismsDiffer>false</organismsDiffer>
    <experiments>3</experiments>
</comment>
<comment type="interaction">
    <interactant intactId="EBI-741480">
        <id>Q9UMX0</id>
    </interactant>
    <interactant intactId="EBI-8650724">
        <id>Q8IW45</id>
        <label>NAXD</label>
    </interactant>
    <organismsDiffer>false</organismsDiffer>
    <experiments>3</experiments>
</comment>
<comment type="interaction">
    <interactant intactId="EBI-741480">
        <id>Q9UMX0</id>
    </interactant>
    <interactant intactId="EBI-10208650">
        <id>P41271</id>
        <label>NBL1</label>
    </interactant>
    <organismsDiffer>false</organismsDiffer>
    <experiments>3</experiments>
</comment>
<comment type="interaction">
    <interactant intactId="EBI-741480">
        <id>Q9UMX0</id>
    </interactant>
    <interactant intactId="EBI-12135485">
        <id>P41271-2</id>
        <label>NBL1</label>
    </interactant>
    <organismsDiffer>false</organismsDiffer>
    <experiments>3</experiments>
</comment>
<comment type="interaction">
    <interactant intactId="EBI-741480">
        <id>Q9UMX0</id>
    </interactant>
    <interactant intactId="EBI-928842">
        <id>Q9GZM8</id>
        <label>NDEL1</label>
    </interactant>
    <organismsDiffer>false</organismsDiffer>
    <experiments>3</experiments>
</comment>
<comment type="interaction">
    <interactant intactId="EBI-741480">
        <id>Q9UMX0</id>
    </interactant>
    <interactant intactId="EBI-10249760">
        <id>Q9UHB4</id>
        <label>NDOR1</label>
    </interactant>
    <organismsDiffer>false</organismsDiffer>
    <experiments>3</experiments>
</comment>
<comment type="interaction">
    <interactant intactId="EBI-741480">
        <id>Q9UMX0</id>
    </interactant>
    <interactant intactId="EBI-25852289">
        <id>Q8NC67-2</id>
        <label>NETO2</label>
    </interactant>
    <organismsDiffer>false</organismsDiffer>
    <experiments>3</experiments>
</comment>
<comment type="interaction">
    <interactant intactId="EBI-741480">
        <id>Q9UMX0</id>
    </interactant>
    <interactant intactId="EBI-6165879">
        <id>Q96IV0</id>
        <label>NGLY1</label>
    </interactant>
    <organismsDiffer>false</organismsDiffer>
    <experiments>7</experiments>
</comment>
<comment type="interaction">
    <interactant intactId="EBI-741480">
        <id>Q9UMX0</id>
    </interactant>
    <interactant intactId="EBI-713684">
        <id>Q13232</id>
        <label>NME3</label>
    </interactant>
    <organismsDiffer>false</organismsDiffer>
    <experiments>6</experiments>
</comment>
<comment type="interaction">
    <interactant intactId="EBI-741480">
        <id>Q9UMX0</id>
    </interactant>
    <interactant intactId="EBI-953859">
        <id>P01160</id>
        <label>NPPA</label>
    </interactant>
    <organismsDiffer>false</organismsDiffer>
    <experiments>3</experiments>
</comment>
<comment type="interaction">
    <interactant intactId="EBI-741480">
        <id>Q9UMX0</id>
    </interactant>
    <interactant intactId="EBI-6144053">
        <id>Q14995</id>
        <label>NR1D2</label>
    </interactant>
    <organismsDiffer>false</organismsDiffer>
    <experiments>3</experiments>
</comment>
<comment type="interaction">
    <interactant intactId="EBI-741480">
        <id>Q9UMX0</id>
    </interactant>
    <interactant intactId="EBI-10177172">
        <id>F1D8P7</id>
        <label>NR1H2</label>
    </interactant>
    <organismsDiffer>false</organismsDiffer>
    <experiments>3</experiments>
</comment>
<comment type="interaction">
    <interactant intactId="EBI-741480">
        <id>Q9UMX0</id>
    </interactant>
    <interactant intactId="EBI-2802743">
        <id>Q6PHZ7</id>
        <label>NR2C2</label>
    </interactant>
    <organismsDiffer>false</organismsDiffer>
    <experiments>3</experiments>
</comment>
<comment type="interaction">
    <interactant intactId="EBI-741480">
        <id>Q9UMX0</id>
    </interactant>
    <interactant intactId="EBI-398874">
        <id>Q9UBU9</id>
        <label>NXF1</label>
    </interactant>
    <organismsDiffer>false</organismsDiffer>
    <experiments>3</experiments>
</comment>
<comment type="interaction">
    <interactant intactId="EBI-741480">
        <id>Q9UMX0</id>
    </interactant>
    <interactant intactId="EBI-8466445">
        <id>A5D8V7</id>
        <label>ODAD3</label>
    </interactant>
    <organismsDiffer>false</organismsDiffer>
    <experiments>3</experiments>
</comment>
<comment type="interaction">
    <interactant intactId="EBI-741480">
        <id>Q9UMX0</id>
    </interactant>
    <interactant intactId="EBI-18397963">
        <id>P0C6T2</id>
        <label>OST4</label>
    </interactant>
    <organismsDiffer>false</organismsDiffer>
    <experiments>3</experiments>
</comment>
<comment type="interaction">
    <interactant intactId="EBI-741480">
        <id>Q9UMX0</id>
    </interactant>
    <interactant intactId="EBI-25830200">
        <id>Q6GQQ9-2</id>
        <label>OTUD7B</label>
    </interactant>
    <organismsDiffer>false</organismsDiffer>
    <experiments>3</experiments>
</comment>
<comment type="interaction">
    <interactant intactId="EBI-741480">
        <id>Q9UMX0</id>
    </interactant>
    <interactant intactId="EBI-12149899">
        <id>Q8IVL6-2</id>
        <label>P3H3</label>
    </interactant>
    <organismsDiffer>false</organismsDiffer>
    <experiments>3</experiments>
</comment>
<comment type="interaction">
    <interactant intactId="EBI-741480">
        <id>Q9UMX0</id>
    </interactant>
    <interactant intactId="EBI-2513978">
        <id>Q8N3R9</id>
        <label>PALS1</label>
    </interactant>
    <organismsDiffer>false</organismsDiffer>
    <experiments>3</experiments>
</comment>
<comment type="interaction">
    <interactant intactId="EBI-741480">
        <id>Q9UMX0</id>
    </interactant>
    <interactant intactId="EBI-17242559">
        <id>Q495U3</id>
        <label>PANX2</label>
    </interactant>
    <organismsDiffer>false</organismsDiffer>
    <experiments>3</experiments>
</comment>
<comment type="interaction">
    <interactant intactId="EBI-741480">
        <id>Q9UMX0</id>
    </interactant>
    <interactant intactId="EBI-2949740">
        <id>Q9HCL0</id>
        <label>PCDH18</label>
    </interactant>
    <organismsDiffer>false</organismsDiffer>
    <experiments>6</experiments>
</comment>
<comment type="interaction">
    <interactant intactId="EBI-741480">
        <id>Q9UMX0</id>
    </interactant>
    <interactant intactId="EBI-12184485">
        <id>Q9UN74-2</id>
        <label>PCDHA4</label>
    </interactant>
    <organismsDiffer>false</organismsDiffer>
    <experiments>3</experiments>
</comment>
<comment type="interaction">
    <interactant intactId="EBI-741480">
        <id>Q9UMX0</id>
    </interactant>
    <interactant intactId="EBI-10231995">
        <id>Q13956</id>
        <label>PDE6H</label>
    </interactant>
    <organismsDiffer>false</organismsDiffer>
    <experiments>3</experiments>
</comment>
<comment type="interaction">
    <interactant intactId="EBI-741480">
        <id>Q9UMX0</id>
    </interactant>
    <interactant intactId="EBI-2557276">
        <id>O15534</id>
        <label>PER1</label>
    </interactant>
    <organismsDiffer>false</organismsDiffer>
    <experiments>3</experiments>
</comment>
<comment type="interaction">
    <interactant intactId="EBI-741480">
        <id>Q9UMX0</id>
    </interactant>
    <interactant intactId="EBI-348567">
        <id>O75928-2</id>
        <label>PIAS2</label>
    </interactant>
    <organismsDiffer>false</organismsDiffer>
    <experiments>3</experiments>
</comment>
<comment type="interaction">
    <interactant intactId="EBI-741480">
        <id>Q9UMX0</id>
    </interactant>
    <interactant intactId="EBI-10285708">
        <id>Q96FE7</id>
        <label>PIK3IP1</label>
    </interactant>
    <organismsDiffer>false</organismsDiffer>
    <experiments>3</experiments>
</comment>
<comment type="interaction">
    <interactant intactId="EBI-741480">
        <id>Q9UMX0</id>
    </interactant>
    <interactant intactId="EBI-353408">
        <id>P14618</id>
        <label>PKM</label>
    </interactant>
    <organismsDiffer>false</organismsDiffer>
    <experiments>3</experiments>
</comment>
<comment type="interaction">
    <interactant intactId="EBI-741480">
        <id>Q9UMX0</id>
    </interactant>
    <interactant intactId="EBI-12387058">
        <id>Q9HDD0</id>
        <label>PLAAT1</label>
    </interactant>
    <organismsDiffer>false</organismsDiffer>
    <experiments>3</experiments>
</comment>
<comment type="interaction">
    <interactant intactId="EBI-741480">
        <id>Q9UMX0</id>
    </interactant>
    <interactant intactId="EBI-12253270">
        <id>Q9NWW9</id>
        <label>PLAAT2</label>
    </interactant>
    <organismsDiffer>false</organismsDiffer>
    <experiments>3</experiments>
</comment>
<comment type="interaction">
    <interactant intactId="EBI-741480">
        <id>Q9UMX0</id>
    </interactant>
    <interactant intactId="EBI-746318">
        <id>P53816</id>
        <label>PLAAT3</label>
    </interactant>
    <organismsDiffer>false</organismsDiffer>
    <experiments>7</experiments>
</comment>
<comment type="interaction">
    <interactant intactId="EBI-741480">
        <id>Q9UMX0</id>
    </interactant>
    <interactant intactId="EBI-12891828">
        <id>Q6ZR37</id>
        <label>PLEKHG7</label>
    </interactant>
    <organismsDiffer>false</organismsDiffer>
    <experiments>3</experiments>
</comment>
<comment type="interaction">
    <interactant intactId="EBI-741480">
        <id>Q9UMX0</id>
    </interactant>
    <interactant intactId="EBI-26412802">
        <id>Q5SXH7-1</id>
        <label>PLEKHS1</label>
    </interactant>
    <organismsDiffer>false</organismsDiffer>
    <experiments>3</experiments>
</comment>
<comment type="interaction">
    <interactant intactId="EBI-741480">
        <id>Q9UMX0</id>
    </interactant>
    <interactant intactId="EBI-1045072">
        <id>Q96T60</id>
        <label>PNKP</label>
    </interactant>
    <organismsDiffer>false</organismsDiffer>
    <experiments>3</experiments>
</comment>
<comment type="interaction">
    <interactant intactId="EBI-741480">
        <id>Q9UMX0</id>
    </interactant>
    <interactant intactId="EBI-302345">
        <id>Q8ND90</id>
        <label>PNMA1</label>
    </interactant>
    <organismsDiffer>false</organismsDiffer>
    <experiments>4</experiments>
</comment>
<comment type="interaction">
    <interactant intactId="EBI-741480">
        <id>Q9UMX0</id>
    </interactant>
    <interactant intactId="EBI-359498">
        <id>P0DPB6</id>
        <label>POLR1D</label>
    </interactant>
    <organismsDiffer>false</organismsDiffer>
    <experiments>3</experiments>
</comment>
<comment type="interaction">
    <interactant intactId="EBI-741480">
        <id>Q9UMX0</id>
    </interactant>
    <interactant intactId="EBI-395189">
        <id>P19388</id>
        <label>POLR2E</label>
    </interactant>
    <organismsDiffer>false</organismsDiffer>
    <experiments>3</experiments>
</comment>
<comment type="interaction">
    <interactant intactId="EBI-741480">
        <id>Q9UMX0</id>
    </interactant>
    <interactant intactId="EBI-359252">
        <id>P23284</id>
        <label>PPIB</label>
    </interactant>
    <organismsDiffer>false</organismsDiffer>
    <experiments>3</experiments>
</comment>
<comment type="interaction">
    <interactant intactId="EBI-741480">
        <id>Q9UMX0</id>
    </interactant>
    <interactant intactId="EBI-953909">
        <id>P45877</id>
        <label>PPIC</label>
    </interactant>
    <organismsDiffer>false</organismsDiffer>
    <experiments>3</experiments>
</comment>
<comment type="interaction">
    <interactant intactId="EBI-741480">
        <id>Q9UMX0</id>
    </interactant>
    <interactant intactId="EBI-1048104">
        <id>O60927</id>
        <label>PPP1R11</label>
    </interactant>
    <organismsDiffer>false</organismsDiffer>
    <experiments>3</experiments>
</comment>
<comment type="interaction">
    <interactant intactId="EBI-741480">
        <id>Q9UMX0</id>
    </interactant>
    <interactant intactId="EBI-710402">
        <id>Q96I34</id>
        <label>PPP1R16A</label>
    </interactant>
    <organismsDiffer>false</organismsDiffer>
    <experiments>3</experiments>
</comment>
<comment type="interaction">
    <interactant intactId="EBI-741480">
        <id>Q9UMX0</id>
    </interactant>
    <interactant intactId="EBI-2116102">
        <id>Q96NZ9</id>
        <label>PRAP1</label>
    </interactant>
    <organismsDiffer>false</organismsDiffer>
    <experiments>6</experiments>
</comment>
<comment type="interaction">
    <interactant intactId="EBI-741480">
        <id>Q9UMX0</id>
    </interactant>
    <interactant intactId="EBI-10173935">
        <id>A5D903</id>
        <label>PRB1</label>
    </interactant>
    <organismsDiffer>false</organismsDiffer>
    <experiments>3</experiments>
</comment>
<comment type="interaction">
    <interactant intactId="EBI-741480">
        <id>Q9UMX0</id>
    </interactant>
    <interactant intactId="EBI-1053424">
        <id>O43741</id>
        <label>PRKAB2</label>
    </interactant>
    <organismsDiffer>false</organismsDiffer>
    <experiments>3</experiments>
</comment>
<comment type="interaction">
    <interactant intactId="EBI-741480">
        <id>Q9UMX0</id>
    </interactant>
    <interactant intactId="EBI-738624">
        <id>Q16378</id>
        <label>PRR4</label>
    </interactant>
    <organismsDiffer>false</organismsDiffer>
    <experiments>3</experiments>
</comment>
<comment type="interaction">
    <interactant intactId="EBI-741480">
        <id>Q9UMX0</id>
    </interactant>
    <interactant intactId="EBI-359318">
        <id>P55036</id>
        <label>PSMD4</label>
    </interactant>
    <organismsDiffer>false</organismsDiffer>
    <experiments>4</experiments>
</comment>
<comment type="interaction">
    <interactant intactId="EBI-741480">
        <id>Q9UMX0</id>
    </interactant>
    <interactant intactId="EBI-359701">
        <id>Q15008</id>
        <label>PSMD6</label>
    </interactant>
    <organismsDiffer>false</organismsDiffer>
    <experiments>3</experiments>
</comment>
<comment type="interaction">
    <interactant intactId="EBI-741480">
        <id>Q9UMX0</id>
    </interactant>
    <interactant intactId="EBI-712149">
        <id>Q06323</id>
        <label>PSME1</label>
    </interactant>
    <organismsDiffer>false</organismsDiffer>
    <experiments>3</experiments>
</comment>
<comment type="interaction">
    <interactant intactId="EBI-741480">
        <id>Q9UMX0</id>
    </interactant>
    <interactant intactId="EBI-11974061">
        <id>Q9UIG4</id>
        <label>PSORS1C2</label>
    </interactant>
    <organismsDiffer>false</organismsDiffer>
    <experiments>3</experiments>
</comment>
<comment type="interaction">
    <interactant intactId="EBI-741480">
        <id>Q9UMX0</id>
    </interactant>
    <interactant intactId="EBI-10194874">
        <id>P06454-2</id>
        <label>PTMA</label>
    </interactant>
    <organismsDiffer>false</organismsDiffer>
    <experiments>3</experiments>
</comment>
<comment type="interaction">
    <interactant intactId="EBI-741480">
        <id>Q9UMX0</id>
    </interactant>
    <interactant intactId="EBI-25835884">
        <id>Q8WUD1-2</id>
        <label>RAB2B</label>
    </interactant>
    <organismsDiffer>false</organismsDiffer>
    <experiments>3</experiments>
</comment>
<comment type="interaction">
    <interactant intactId="EBI-741480">
        <id>Q9UMX0</id>
    </interactant>
    <interactant intactId="EBI-12256104">
        <id>Q9UNT1-2</id>
        <label>RABL2B</label>
    </interactant>
    <organismsDiffer>false</organismsDiffer>
    <experiments>3</experiments>
</comment>
<comment type="interaction">
    <interactant intactId="EBI-741480">
        <id>Q9UMX0</id>
    </interactant>
    <interactant intactId="EBI-746228">
        <id>Q9Y5P3</id>
        <label>RAI2</label>
    </interactant>
    <organismsDiffer>false</organismsDiffer>
    <experiments>3</experiments>
</comment>
<comment type="interaction">
    <interactant intactId="EBI-741480">
        <id>Q9UMX0</id>
    </interactant>
    <interactant intactId="EBI-73886">
        <id>Q04206</id>
        <label>RELA</label>
    </interactant>
    <organismsDiffer>false</organismsDiffer>
    <experiments>3</experiments>
</comment>
<comment type="interaction">
    <interactant intactId="EBI-741480">
        <id>Q9UMX0</id>
    </interactant>
    <interactant intactId="EBI-25834767">
        <id>P47804-3</id>
        <label>RGR</label>
    </interactant>
    <organismsDiffer>false</organismsDiffer>
    <experiments>3</experiments>
</comment>
<comment type="interaction">
    <interactant intactId="EBI-741480">
        <id>Q9UMX0</id>
    </interactant>
    <interactant intactId="EBI-1055287">
        <id>Q15382</id>
        <label>RHEB</label>
    </interactant>
    <organismsDiffer>false</organismsDiffer>
    <experiments>3</experiments>
</comment>
<comment type="interaction">
    <interactant intactId="EBI-741480">
        <id>Q9UMX0</id>
    </interactant>
    <interactant intactId="EBI-717509">
        <id>Q9NPQ8</id>
        <label>RIC8A</label>
    </interactant>
    <organismsDiffer>false</organismsDiffer>
    <experiments>4</experiments>
</comment>
<comment type="interaction">
    <interactant intactId="EBI-741480">
        <id>Q9UMX0</id>
    </interactant>
    <interactant intactId="EBI-9091816">
        <id>Q9NPQ8-4</id>
        <label>RIC8A</label>
    </interactant>
    <organismsDiffer>false</organismsDiffer>
    <experiments>3</experiments>
</comment>
<comment type="interaction">
    <interactant intactId="EBI-741480">
        <id>Q9UMX0</id>
    </interactant>
    <interactant intactId="EBI-751555">
        <id>Q9H0X6</id>
        <label>RNF208</label>
    </interactant>
    <organismsDiffer>false</organismsDiffer>
    <experiments>3</experiments>
</comment>
<comment type="interaction">
    <interactant intactId="EBI-741480">
        <id>Q9UMX0</id>
    </interactant>
    <interactant intactId="EBI-2340927">
        <id>P78317</id>
        <label>RNF4</label>
    </interactant>
    <organismsDiffer>false</organismsDiffer>
    <experiments>3</experiments>
</comment>
<comment type="interaction">
    <interactant intactId="EBI-741480">
        <id>Q9UMX0</id>
    </interactant>
    <interactant intactId="EBI-1053664">
        <id>P62899</id>
        <label>RPL31</label>
    </interactant>
    <organismsDiffer>false</organismsDiffer>
    <experiments>3</experiments>
</comment>
<comment type="interaction">
    <interactant intactId="EBI-741480">
        <id>Q9UMX0</id>
    </interactant>
    <interactant intactId="EBI-355963">
        <id>P04843</id>
        <label>RPN1</label>
    </interactant>
    <organismsDiffer>false</organismsDiffer>
    <experiments>4</experiments>
</comment>
<comment type="interaction">
    <interactant intactId="EBI-741480">
        <id>Q9UMX0</id>
    </interactant>
    <interactant intactId="EBI-357375">
        <id>P62979</id>
        <label>RPS27A</label>
    </interactant>
    <organismsDiffer>false</organismsDiffer>
    <experiments>3</experiments>
</comment>
<comment type="interaction">
    <interactant intactId="EBI-741480">
        <id>Q9UMX0</id>
    </interactant>
    <interactant intactId="EBI-10256202">
        <id>Q7L4I2-2</id>
        <label>RSRC2</label>
    </interactant>
    <organismsDiffer>false</organismsDiffer>
    <experiments>3</experiments>
</comment>
<comment type="interaction">
    <interactant intactId="EBI-741480">
        <id>Q9UMX0</id>
    </interactant>
    <interactant intactId="EBI-741643">
        <id>Q9BWD3</id>
        <label>RTL8A</label>
    </interactant>
    <organismsDiffer>false</organismsDiffer>
    <experiments>4</experiments>
</comment>
<comment type="interaction">
    <interactant intactId="EBI-741480">
        <id>Q9UMX0</id>
    </interactant>
    <interactant intactId="EBI-10238588">
        <id>Q17RB0</id>
        <label>RTL8B</label>
    </interactant>
    <organismsDiffer>false</organismsDiffer>
    <experiments>6</experiments>
</comment>
<comment type="interaction">
    <interactant intactId="EBI-741480">
        <id>Q9UMX0</id>
    </interactant>
    <interactant intactId="EBI-10174072">
        <id>A6ZKI3</id>
        <label>RTL8C</label>
    </interactant>
    <organismsDiffer>false</organismsDiffer>
    <experiments>6</experiments>
</comment>
<comment type="interaction">
    <interactant intactId="EBI-741480">
        <id>Q9UMX0</id>
    </interactant>
    <interactant intactId="EBI-947132">
        <id>P13521</id>
        <label>SCG2</label>
    </interactant>
    <organismsDiffer>false</organismsDiffer>
    <experiments>4</experiments>
</comment>
<comment type="interaction">
    <interactant intactId="EBI-741480">
        <id>Q9UMX0</id>
    </interactant>
    <interactant intactId="EBI-722635">
        <id>P05408</id>
        <label>SCG5</label>
    </interactant>
    <organismsDiffer>false</organismsDiffer>
    <experiments>3</experiments>
</comment>
<comment type="interaction">
    <interactant intactId="EBI-741480">
        <id>Q9UMX0</id>
    </interactant>
    <interactant intactId="EBI-713793">
        <id>Q96GD3</id>
        <label>SCMH1</label>
    </interactant>
    <organismsDiffer>false</organismsDiffer>
    <experiments>3</experiments>
</comment>
<comment type="interaction">
    <interactant intactId="EBI-741480">
        <id>Q9UMX0</id>
    </interactant>
    <interactant intactId="EBI-9089805">
        <id>Q9NTN9-3</id>
        <label>SEMA4G</label>
    </interactant>
    <organismsDiffer>false</organismsDiffer>
    <experiments>3</experiments>
</comment>
<comment type="interaction">
    <interactant intactId="EBI-741480">
        <id>Q9UMX0</id>
    </interactant>
    <interactant intactId="EBI-953978">
        <id>P05121</id>
        <label>SERPINE1</label>
    </interactant>
    <organismsDiffer>false</organismsDiffer>
    <experiments>3</experiments>
</comment>
<comment type="interaction">
    <interactant intactId="EBI-741480">
        <id>Q9UMX0</id>
    </interactant>
    <interactant intactId="EBI-750144">
        <id>O75830</id>
        <label>SERPINI2</label>
    </interactant>
    <organismsDiffer>false</organismsDiffer>
    <experiments>10</experiments>
</comment>
<comment type="interaction">
    <interactant intactId="EBI-741480">
        <id>Q9UMX0</id>
    </interactant>
    <interactant intactId="EBI-12012146">
        <id>Q9BYH1-5</id>
        <label>SEZ6L</label>
    </interactant>
    <organismsDiffer>false</organismsDiffer>
    <experiments>3</experiments>
</comment>
<comment type="interaction">
    <interactant intactId="EBI-741480">
        <id>Q9UMX0</id>
    </interactant>
    <interactant intactId="EBI-2840325">
        <id>Q9H173</id>
        <label>SIL1</label>
    </interactant>
    <organismsDiffer>false</organismsDiffer>
    <experiments>3</experiments>
</comment>
<comment type="interaction">
    <interactant intactId="EBI-741480">
        <id>Q9UMX0</id>
    </interactant>
    <interactant intactId="EBI-7600166">
        <id>O15427</id>
        <label>SLC16A3</label>
    </interactant>
    <organismsDiffer>false</organismsDiffer>
    <experiments>3</experiments>
</comment>
<comment type="interaction">
    <interactant intactId="EBI-741480">
        <id>Q9UMX0</id>
    </interactant>
    <interactant intactId="EBI-355293">
        <id>P03973</id>
        <label>SLPI</label>
    </interactant>
    <organismsDiffer>false</organismsDiffer>
    <experiments>5</experiments>
</comment>
<comment type="interaction">
    <interactant intactId="EBI-741480">
        <id>Q9UMX0</id>
    </interactant>
    <interactant intactId="EBI-17657124">
        <id>Q96E16</id>
        <label>SMIM19</label>
    </interactant>
    <organismsDiffer>false</organismsDiffer>
    <experiments>3</experiments>
</comment>
<comment type="interaction">
    <interactant intactId="EBI-741480">
        <id>Q9UMX0</id>
    </interactant>
    <interactant intactId="EBI-10300146">
        <id>Q9BVW6</id>
        <label>SMIM2</label>
    </interactant>
    <organismsDiffer>false</organismsDiffer>
    <experiments>3</experiments>
</comment>
<comment type="interaction">
    <interactant intactId="EBI-741480">
        <id>Q9UMX0</id>
    </interactant>
    <interactant intactId="EBI-738612">
        <id>P02814</id>
        <label>SMR3B</label>
    </interactant>
    <organismsDiffer>false</organismsDiffer>
    <experiments>3</experiments>
</comment>
<comment type="interaction">
    <interactant intactId="EBI-741480">
        <id>Q9UMX0</id>
    </interactant>
    <interactant intactId="EBI-632715">
        <id>Q13573</id>
        <label>SNW1</label>
    </interactant>
    <organismsDiffer>false</organismsDiffer>
    <experiments>3</experiments>
</comment>
<comment type="interaction">
    <interactant intactId="EBI-741480">
        <id>Q9UMX0</id>
    </interactant>
    <interactant intactId="EBI-3929549">
        <id>O14544</id>
        <label>SOCS6</label>
    </interactant>
    <organismsDiffer>false</organismsDiffer>
    <experiments>3</experiments>
</comment>
<comment type="interaction">
    <interactant intactId="EBI-741480">
        <id>Q9UMX0</id>
    </interactant>
    <interactant intactId="EBI-10195782">
        <id>P08294</id>
        <label>SOD3</label>
    </interactant>
    <organismsDiffer>false</organismsDiffer>
    <experiments>3</experiments>
</comment>
<comment type="interaction">
    <interactant intactId="EBI-741480">
        <id>Q9UMX0</id>
    </interactant>
    <interactant intactId="EBI-9088579">
        <id>Q02086-2</id>
        <label>SP2</label>
    </interactant>
    <organismsDiffer>false</organismsDiffer>
    <experiments>3</experiments>
</comment>
<comment type="interaction">
    <interactant intactId="EBI-741480">
        <id>Q9UMX0</id>
    </interactant>
    <interactant intactId="EBI-11959123">
        <id>Q99932-2</id>
        <label>SPAG8</label>
    </interactant>
    <organismsDiffer>false</organismsDiffer>
    <experiments>3</experiments>
</comment>
<comment type="interaction">
    <interactant intactId="EBI-741480">
        <id>Q9UMX0</id>
    </interactant>
    <interactant intactId="EBI-10696971">
        <id>Q7Z6I5</id>
        <label>SPATA12</label>
    </interactant>
    <organismsDiffer>false</organismsDiffer>
    <experiments>3</experiments>
</comment>
<comment type="interaction">
    <interactant intactId="EBI-741480">
        <id>Q9UMX0</id>
    </interactant>
    <interactant intactId="EBI-12041693">
        <id>Q86W54-2</id>
        <label>SPATA24</label>
    </interactant>
    <organismsDiffer>false</organismsDiffer>
    <experiments>3</experiments>
</comment>
<comment type="interaction">
    <interactant intactId="EBI-741480">
        <id>Q9UMX0</id>
    </interactant>
    <interactant intactId="EBI-3923692">
        <id>Q496A3</id>
        <label>SPATS1</label>
    </interactant>
    <organismsDiffer>false</organismsDiffer>
    <experiments>3</experiments>
</comment>
<comment type="interaction">
    <interactant intactId="EBI-741480">
        <id>Q9UMX0</id>
    </interactant>
    <interactant intactId="EBI-354861">
        <id>Q9C004</id>
        <label>SPRY4</label>
    </interactant>
    <organismsDiffer>false</organismsDiffer>
    <experiments>3</experiments>
</comment>
<comment type="interaction">
    <interactant intactId="EBI-741480">
        <id>Q9UMX0</id>
    </interactant>
    <interactant intactId="EBI-744915">
        <id>P10124</id>
        <label>SRGN</label>
    </interactant>
    <organismsDiffer>false</organismsDiffer>
    <experiments>6</experiments>
</comment>
<comment type="interaction">
    <interactant intactId="EBI-741480">
        <id>Q9UMX0</id>
    </interactant>
    <interactant intactId="EBI-2652799">
        <id>Q99469</id>
        <label>STAC</label>
    </interactant>
    <organismsDiffer>false</organismsDiffer>
    <experiments>3</experiments>
</comment>
<comment type="interaction">
    <interactant intactId="EBI-741480">
        <id>Q9UMX0</id>
    </interactant>
    <interactant intactId="EBI-373258">
        <id>O75886</id>
        <label>STAM2</label>
    </interactant>
    <organismsDiffer>false</organismsDiffer>
    <experiments>3</experiments>
</comment>
<comment type="interaction">
    <interactant intactId="EBI-741480">
        <id>Q9UMX0</id>
    </interactant>
    <interactant intactId="EBI-448878">
        <id>Q13586</id>
        <label>STIM1</label>
    </interactant>
    <organismsDiffer>false</organismsDiffer>
    <experiments>3</experiments>
</comment>
<comment type="interaction">
    <interactant intactId="EBI-741480">
        <id>Q9UMX0</id>
    </interactant>
    <interactant intactId="EBI-2824328">
        <id>O95947</id>
        <label>TBX6</label>
    </interactant>
    <organismsDiffer>false</organismsDiffer>
    <experiments>3</experiments>
</comment>
<comment type="interaction">
    <interactant intactId="EBI-741480">
        <id>Q9UMX0</id>
    </interactant>
    <interactant intactId="EBI-954089">
        <id>O15273</id>
        <label>TCAP</label>
    </interactant>
    <organismsDiffer>false</organismsDiffer>
    <experiments>3</experiments>
</comment>
<comment type="interaction">
    <interactant intactId="EBI-741480">
        <id>Q9UMX0</id>
    </interactant>
    <interactant intactId="EBI-2562799">
        <id>Q86WV5</id>
        <label>TEN1</label>
    </interactant>
    <organismsDiffer>false</organismsDiffer>
    <experiments>3</experiments>
</comment>
<comment type="interaction">
    <interactant intactId="EBI-741480">
        <id>Q9UMX0</id>
    </interactant>
    <interactant intactId="EBI-711018">
        <id>P54274-2</id>
        <label>TERF1</label>
    </interactant>
    <organismsDiffer>false</organismsDiffer>
    <experiments>3</experiments>
</comment>
<comment type="interaction">
    <interactant intactId="EBI-741480">
        <id>Q9UMX0</id>
    </interactant>
    <interactant intactId="EBI-12090309">
        <id>Q9BXU0</id>
        <label>TEX12</label>
    </interactant>
    <organismsDiffer>false</organismsDiffer>
    <experiments>3</experiments>
</comment>
<comment type="interaction">
    <interactant intactId="EBI-741480">
        <id>Q9UMX0</id>
    </interactant>
    <interactant intactId="EBI-12833746">
        <id>Q5T0J7-2</id>
        <label>TEX35</label>
    </interactant>
    <organismsDiffer>false</organismsDiffer>
    <experiments>3</experiments>
</comment>
<comment type="interaction">
    <interactant intactId="EBI-741480">
        <id>Q9UMX0</id>
    </interactant>
    <interactant intactId="EBI-743871">
        <id>P04155</id>
        <label>TFF1</label>
    </interactant>
    <organismsDiffer>false</organismsDiffer>
    <experiments>6</experiments>
</comment>
<comment type="interaction">
    <interactant intactId="EBI-741480">
        <id>Q9UMX0</id>
    </interactant>
    <interactant intactId="EBI-17438286">
        <id>Q8WTV1</id>
        <label>THAP3</label>
    </interactant>
    <organismsDiffer>false</organismsDiffer>
    <experiments>3</experiments>
</comment>
<comment type="interaction">
    <interactant intactId="EBI-741480">
        <id>Q9UMX0</id>
    </interactant>
    <interactant intactId="EBI-2372529">
        <id>O60830</id>
        <label>TIMM17B</label>
    </interactant>
    <organismsDiffer>false</organismsDiffer>
    <experiments>3</experiments>
</comment>
<comment type="interaction">
    <interactant intactId="EBI-741480">
        <id>Q9UMX0</id>
    </interactant>
    <interactant intactId="EBI-746174">
        <id>Q96DC7</id>
        <label>TMCO6</label>
    </interactant>
    <organismsDiffer>false</organismsDiffer>
    <experiments>7</experiments>
</comment>
<comment type="interaction">
    <interactant intactId="EBI-741480">
        <id>Q9UMX0</id>
    </interactant>
    <interactant intactId="EBI-10284552">
        <id>Q96DC7-2</id>
        <label>TMCO6</label>
    </interactant>
    <organismsDiffer>false</organismsDiffer>
    <experiments>3</experiments>
</comment>
<comment type="interaction">
    <interactant intactId="EBI-741480">
        <id>Q9UMX0</id>
    </interactant>
    <interactant intactId="EBI-9089409">
        <id>Q96B77</id>
        <label>TMEM186</label>
    </interactant>
    <organismsDiffer>false</organismsDiffer>
    <experiments>3</experiments>
</comment>
<comment type="interaction">
    <interactant intactId="EBI-741480">
        <id>Q9UMX0</id>
    </interactant>
    <interactant intactId="EBI-12019210">
        <id>P61165</id>
        <label>TMEM258</label>
    </interactant>
    <organismsDiffer>false</organismsDiffer>
    <experiments>3</experiments>
</comment>
<comment type="interaction">
    <interactant intactId="EBI-741480">
        <id>Q9UMX0</id>
    </interactant>
    <interactant intactId="EBI-10244617">
        <id>Q5JXX7</id>
        <label>TMEM31</label>
    </interactant>
    <organismsDiffer>false</organismsDiffer>
    <experiments>5</experiments>
</comment>
<comment type="interaction">
    <interactant intactId="EBI-741480">
        <id>Q9UMX0</id>
    </interactant>
    <interactant intactId="EBI-25830583">
        <id>Q8N0U2</id>
        <label>TMEM61</label>
    </interactant>
    <organismsDiffer>false</organismsDiffer>
    <experiments>3</experiments>
</comment>
<comment type="interaction">
    <interactant intactId="EBI-741480">
        <id>Q9UMX0</id>
    </interactant>
    <interactant intactId="EBI-10242677">
        <id>Q53NU3</id>
        <label>tmp_locus_54</label>
    </interactant>
    <organismsDiffer>false</organismsDiffer>
    <experiments>3</experiments>
</comment>
<comment type="interaction">
    <interactant intactId="EBI-741480">
        <id>Q9UMX0</id>
    </interactant>
    <interactant intactId="EBI-25831574">
        <id>Q71RG4-4</id>
        <label>TMUB2</label>
    </interactant>
    <organismsDiffer>false</organismsDiffer>
    <experiments>3</experiments>
</comment>
<comment type="interaction">
    <interactant intactId="EBI-741480">
        <id>Q9UMX0</id>
    </interactant>
    <interactant intactId="EBI-740098">
        <id>P36406</id>
        <label>TRIM23</label>
    </interactant>
    <organismsDiffer>false</organismsDiffer>
    <experiments>6</experiments>
</comment>
<comment type="interaction">
    <interactant intactId="EBI-741480">
        <id>Q9UMX0</id>
    </interactant>
    <interactant intactId="EBI-742790">
        <id>Q13049</id>
        <label>TRIM32</label>
    </interactant>
    <organismsDiffer>false</organismsDiffer>
    <experiments>7</experiments>
</comment>
<comment type="interaction">
    <interactant intactId="EBI-741480">
        <id>Q9UMX0</id>
    </interactant>
    <interactant intactId="EBI-17716262">
        <id>Q9UPQ4-2</id>
        <label>TRIM35</label>
    </interactant>
    <organismsDiffer>false</organismsDiffer>
    <experiments>3</experiments>
</comment>
<comment type="interaction">
    <interactant intactId="EBI-741480">
        <id>Q9UMX0</id>
    </interactant>
    <interactant intactId="EBI-739485">
        <id>Q9Y3Q8</id>
        <label>TSC22D4</label>
    </interactant>
    <organismsDiffer>false</organismsDiffer>
    <experiments>3</experiments>
</comment>
<comment type="interaction">
    <interactant intactId="EBI-741480">
        <id>Q9UMX0</id>
    </interactant>
    <interactant intactId="EBI-3914288">
        <id>O60636</id>
        <label>TSPAN2</label>
    </interactant>
    <organismsDiffer>false</organismsDiffer>
    <experiments>3</experiments>
</comment>
<comment type="interaction">
    <interactant intactId="EBI-741480">
        <id>Q9UMX0</id>
    </interactant>
    <interactant intactId="EBI-8656864">
        <id>Q6PF05</id>
        <label>TTC23L</label>
    </interactant>
    <organismsDiffer>false</organismsDiffer>
    <experiments>3</experiments>
</comment>
<comment type="interaction">
    <interactant intactId="EBI-741480">
        <id>Q9UMX0</id>
    </interactant>
    <interactant intactId="EBI-10964469">
        <id>Q9UGJ1-2</id>
        <label>TUBGCP4</label>
    </interactant>
    <organismsDiffer>false</organismsDiffer>
    <experiments>3</experiments>
</comment>
<comment type="interaction">
    <interactant intactId="EBI-741480">
        <id>Q9UMX0</id>
    </interactant>
    <interactant intactId="EBI-2564581">
        <id>O95881</id>
        <label>TXNDC12</label>
    </interactant>
    <organismsDiffer>false</organismsDiffer>
    <experiments>4</experiments>
</comment>
<comment type="interaction">
    <interactant intactId="EBI-741480">
        <id>Q9UMX0</id>
    </interactant>
    <interactant intactId="EBI-357304">
        <id>P62987</id>
        <label>UBA52</label>
    </interactant>
    <organismsDiffer>false</organismsDiffer>
    <experiments>3</experiments>
</comment>
<comment type="interaction">
    <interactant intactId="EBI-741480">
        <id>Q9UMX0</id>
    </interactant>
    <interactant intactId="EBI-1642104">
        <id>Q5U5U6</id>
        <label>UBB</label>
    </interactant>
    <organismsDiffer>false</organismsDiffer>
    <experiments>3</experiments>
</comment>
<comment type="interaction">
    <interactant intactId="EBI-741480">
        <id>Q9UMX0</id>
    </interactant>
    <interactant intactId="EBI-745483">
        <id>Q96C32</id>
        <label>UBC</label>
    </interactant>
    <organismsDiffer>false</organismsDiffer>
    <experiments>3</experiments>
</comment>
<comment type="interaction">
    <interactant intactId="EBI-741480">
        <id>Q9UMX0</id>
    </interactant>
    <interactant intactId="EBI-2339348">
        <id>P49459</id>
        <label>UBE2A</label>
    </interactant>
    <organismsDiffer>false</organismsDiffer>
    <experiments>3</experiments>
</comment>
<comment type="interaction">
    <interactant intactId="EBI-741480">
        <id>Q9UMX0</id>
    </interactant>
    <interactant intactId="EBI-10180829">
        <id>Q7KZS0</id>
        <label>UBE2I</label>
    </interactant>
    <organismsDiffer>false</organismsDiffer>
    <experiments>3</experiments>
</comment>
<comment type="interaction">
    <interactant intactId="EBI-741480">
        <id>Q9UMX0</id>
    </interactant>
    <interactant intactId="EBI-1050671">
        <id>Q13404</id>
        <label>UBE2V1</label>
    </interactant>
    <organismsDiffer>false</organismsDiffer>
    <experiments>9</experiments>
</comment>
<comment type="interaction">
    <interactant intactId="EBI-741480">
        <id>Q9UMX0</id>
    </interactant>
    <interactant intactId="EBI-741480">
        <id>Q9UMX0</id>
        <label>UBQLN1</label>
    </interactant>
    <organismsDiffer>false</organismsDiffer>
    <experiments>3</experiments>
</comment>
<comment type="interaction">
    <interactant intactId="EBI-741480">
        <id>Q9UMX0</id>
    </interactant>
    <interactant intactId="EBI-947187">
        <id>Q9UHD9</id>
        <label>UBQLN2</label>
    </interactant>
    <organismsDiffer>false</organismsDiffer>
    <experiments>3</experiments>
</comment>
<comment type="interaction">
    <interactant intactId="EBI-741480">
        <id>Q9UMX0</id>
    </interactant>
    <interactant intactId="EBI-711226">
        <id>Q9NRR5</id>
        <label>UBQLN4</label>
    </interactant>
    <organismsDiffer>false</organismsDiffer>
    <experiments>8</experiments>
</comment>
<comment type="interaction">
    <interactant intactId="EBI-741480">
        <id>Q9UMX0</id>
    </interactant>
    <interactant intactId="EBI-1058647">
        <id>Q04323</id>
        <label>UBXN1</label>
    </interactant>
    <organismsDiffer>false</organismsDiffer>
    <experiments>3</experiments>
</comment>
<comment type="interaction">
    <interactant intactId="EBI-741480">
        <id>Q9UMX0</id>
    </interactant>
    <interactant intactId="EBI-723441">
        <id>Q92575</id>
        <label>UBXN4</label>
    </interactant>
    <organismsDiffer>false</organismsDiffer>
    <experiments>6</experiments>
</comment>
<comment type="interaction">
    <interactant intactId="EBI-741480">
        <id>Q9UMX0</id>
    </interactant>
    <interactant intactId="EBI-1993627">
        <id>O94888</id>
        <label>UBXN7</label>
    </interactant>
    <organismsDiffer>false</organismsDiffer>
    <experiments>3</experiments>
</comment>
<comment type="interaction">
    <interactant intactId="EBI-741480">
        <id>Q9UMX0</id>
    </interactant>
    <interactant intactId="EBI-1054489">
        <id>P22415</id>
        <label>USF1</label>
    </interactant>
    <organismsDiffer>false</organismsDiffer>
    <experiments>3</experiments>
</comment>
<comment type="interaction">
    <interactant intactId="EBI-741480">
        <id>Q9UMX0</id>
    </interactant>
    <interactant intactId="EBI-25835297">
        <id>Q9P1Q0-4</id>
        <label>VPS54</label>
    </interactant>
    <organismsDiffer>false</organismsDiffer>
    <experiments>3</experiments>
</comment>
<comment type="interaction">
    <interactant intactId="EBI-741480">
        <id>Q9UMX0</id>
    </interactant>
    <interactant intactId="EBI-11957238">
        <id>Q2TAL6</id>
        <label>VWC2</label>
    </interactant>
    <organismsDiffer>false</organismsDiffer>
    <experiments>3</experiments>
</comment>
<comment type="interaction">
    <interactant intactId="EBI-741480">
        <id>Q9UMX0</id>
    </interactant>
    <interactant intactId="EBI-10316321">
        <id>Q9NX94</id>
        <label>WBP1L</label>
    </interactant>
    <organismsDiffer>false</organismsDiffer>
    <experiments>3</experiments>
</comment>
<comment type="interaction">
    <interactant intactId="EBI-741480">
        <id>Q9UMX0</id>
    </interactant>
    <interactant intactId="EBI-11958577">
        <id>Q8WWY7</id>
        <label>WFDC12</label>
    </interactant>
    <organismsDiffer>false</organismsDiffer>
    <experiments>3</experiments>
</comment>
<comment type="interaction">
    <interactant intactId="EBI-741480">
        <id>Q9UMX0</id>
    </interactant>
    <interactant intactId="EBI-727198">
        <id>O00755</id>
        <label>WNT7A</label>
    </interactant>
    <organismsDiffer>false</organismsDiffer>
    <experiments>3</experiments>
</comment>
<comment type="interaction">
    <interactant intactId="EBI-741480">
        <id>Q9UMX0</id>
    </interactant>
    <interactant intactId="EBI-10226948">
        <id>Q0VG75</id>
        <label>XPO4</label>
    </interactant>
    <organismsDiffer>false</organismsDiffer>
    <experiments>3</experiments>
</comment>
<comment type="interaction">
    <interactant intactId="EBI-741480">
        <id>Q9UMX0</id>
    </interactant>
    <interactant intactId="EBI-10176632">
        <id>O43829</id>
        <label>ZBTB14</label>
    </interactant>
    <organismsDiffer>false</organismsDiffer>
    <experiments>3</experiments>
</comment>
<comment type="interaction">
    <interactant intactId="EBI-741480">
        <id>Q9UMX0</id>
    </interactant>
    <interactant intactId="EBI-17494306">
        <id>Q8NAP8</id>
        <label>ZBTB8B</label>
    </interactant>
    <organismsDiffer>false</organismsDiffer>
    <experiments>3</experiments>
</comment>
<comment type="interaction">
    <interactant intactId="EBI-741480">
        <id>Q9UMX0</id>
    </interactant>
    <interactant intactId="EBI-14104088">
        <id>Q53FD0-2</id>
        <label>ZC2HC1C</label>
    </interactant>
    <organismsDiffer>false</organismsDiffer>
    <experiments>3</experiments>
</comment>
<comment type="interaction">
    <interactant intactId="EBI-741480">
        <id>Q9UMX0</id>
    </interactant>
    <interactant intactId="EBI-746345">
        <id>Q9NP64</id>
        <label>ZCCHC17</label>
    </interactant>
    <organismsDiffer>false</organismsDiffer>
    <experiments>3</experiments>
</comment>
<comment type="interaction">
    <interactant intactId="EBI-741480">
        <id>Q9UMX0</id>
    </interactant>
    <interactant intactId="EBI-746479">
        <id>O60844</id>
        <label>ZG16</label>
    </interactant>
    <organismsDiffer>false</organismsDiffer>
    <experiments>10</experiments>
</comment>
<comment type="interaction">
    <interactant intactId="EBI-741480">
        <id>Q9UMX0</id>
    </interactant>
    <interactant intactId="EBI-953824">
        <id>Q96DA0</id>
        <label>ZG16B</label>
    </interactant>
    <organismsDiffer>false</organismsDiffer>
    <experiments>3</experiments>
</comment>
<comment type="interaction">
    <interactant intactId="EBI-741480">
        <id>Q9UMX0</id>
    </interactant>
    <interactant intactId="EBI-2514659">
        <id>Q5VZL5</id>
        <label>ZMYM4</label>
    </interactant>
    <organismsDiffer>false</organismsDiffer>
    <experiments>3</experiments>
</comment>
<comment type="interaction">
    <interactant intactId="EBI-741480">
        <id>Q9UMX0</id>
    </interactant>
    <interactant intactId="EBI-17634549">
        <id>Q9UJ78-2</id>
        <label>ZMYM5</label>
    </interactant>
    <organismsDiffer>false</organismsDiffer>
    <experiments>3</experiments>
</comment>
<comment type="interaction">
    <interactant intactId="EBI-741480">
        <id>Q9UMX0</id>
    </interactant>
    <interactant intactId="EBI-8834821">
        <id>Q8WUU4</id>
        <label>ZNF296</label>
    </interactant>
    <organismsDiffer>false</organismsDiffer>
    <experiments>3</experiments>
</comment>
<comment type="interaction">
    <interactant intactId="EBI-741480">
        <id>Q9UMX0</id>
    </interactant>
    <interactant intactId="EBI-25835852">
        <id>Q96JL9-2</id>
        <label>ZNF333</label>
    </interactant>
    <organismsDiffer>false</organismsDiffer>
    <experiments>3</experiments>
</comment>
<comment type="interaction">
    <interactant intactId="EBI-741480">
        <id>Q9UMX0</id>
    </interactant>
    <interactant intactId="EBI-10252492">
        <id>Q6P1L6</id>
        <label>ZNF343</label>
    </interactant>
    <organismsDiffer>false</organismsDiffer>
    <experiments>3</experiments>
</comment>
<comment type="interaction">
    <interactant intactId="EBI-741480">
        <id>Q9UMX0</id>
    </interactant>
    <interactant intactId="EBI-18036029">
        <id>Q3KNS6-3</id>
        <label>ZNF829</label>
    </interactant>
    <organismsDiffer>false</organismsDiffer>
    <experiments>3</experiments>
</comment>
<comment type="interaction">
    <interactant intactId="EBI-741480">
        <id>Q9UMX0</id>
    </interactant>
    <interactant intactId="EBI-17234977">
        <id>A0A1U9X8X8</id>
    </interactant>
    <organismsDiffer>false</organismsDiffer>
    <experiments>3</experiments>
</comment>
<comment type="interaction">
    <interactant intactId="EBI-741480">
        <id>Q9UMX0</id>
    </interactant>
    <interactant intactId="EBI-25831617">
        <id>B7Z3E8</id>
    </interactant>
    <organismsDiffer>false</organismsDiffer>
    <experiments>3</experiments>
</comment>
<comment type="interaction">
    <interactant intactId="EBI-741480">
        <id>Q9UMX0</id>
    </interactant>
    <interactant intactId="EBI-747182">
        <id>Q8WU02</id>
    </interactant>
    <organismsDiffer>false</organismsDiffer>
    <experiments>3</experiments>
</comment>
<comment type="interaction">
    <interactant intactId="EBI-741480">
        <id>Q9UMX0</id>
    </interactant>
    <interactant intactId="EBI-25475897">
        <id>P0DTC6</id>
        <label>6</label>
    </interactant>
    <organismsDiffer>true</organismsDiffer>
    <experiments>3</experiments>
</comment>
<comment type="interaction">
    <interactant intactId="EBI-741480">
        <id>Q9UMX0</id>
    </interactant>
    <interactant intactId="EBI-25475917">
        <id>P0DTD3</id>
        <label>9c</label>
    </interactant>
    <organismsDiffer>true</organismsDiffer>
    <experiments>3</experiments>
</comment>
<comment type="interaction">
    <interactant intactId="EBI-10173939">
        <id>Q9UMX0-2</id>
    </interactant>
    <interactant intactId="EBI-948905">
        <id>O00154</id>
        <label>ACOT7</label>
    </interactant>
    <organismsDiffer>false</organismsDiffer>
    <experiments>3</experiments>
</comment>
<comment type="interaction">
    <interactant intactId="EBI-10173939">
        <id>Q9UMX0-2</id>
    </interactant>
    <interactant intactId="EBI-712648">
        <id>O95994</id>
        <label>AGR2</label>
    </interactant>
    <organismsDiffer>false</organismsDiffer>
    <experiments>3</experiments>
</comment>
<comment type="interaction">
    <interactant intactId="EBI-10173939">
        <id>Q9UMX0-2</id>
    </interactant>
    <interactant intactId="EBI-3925742">
        <id>Q8TD06</id>
        <label>AGR3</label>
    </interactant>
    <organismsDiffer>false</organismsDiffer>
    <experiments>3</experiments>
</comment>
<comment type="interaction">
    <interactant intactId="EBI-10173939">
        <id>Q9UMX0-2</id>
    </interactant>
    <interactant intactId="EBI-953896">
        <id>Q9NP55</id>
        <label>BPIFA1</label>
    </interactant>
    <organismsDiffer>false</organismsDiffer>
    <experiments>3</experiments>
</comment>
<comment type="interaction">
    <interactant intactId="EBI-10173939">
        <id>Q9UMX0-2</id>
    </interactant>
    <interactant intactId="EBI-2817707">
        <id>Q9BXJ5</id>
        <label>C1QTNF2</label>
    </interactant>
    <organismsDiffer>false</organismsDiffer>
    <experiments>3</experiments>
</comment>
<comment type="interaction">
    <interactant intactId="EBI-10173939">
        <id>Q9UMX0-2</id>
    </interactant>
    <interactant intactId="EBI-1171069">
        <id>O43852</id>
        <label>CALU</label>
    </interactant>
    <organismsDiffer>false</organismsDiffer>
    <experiments>3</experiments>
</comment>
<comment type="interaction">
    <interactant intactId="EBI-10173939">
        <id>Q9UMX0-2</id>
    </interactant>
    <interactant intactId="EBI-718759">
        <id>P80098</id>
        <label>CCL7</label>
    </interactant>
    <organismsDiffer>false</organismsDiffer>
    <experiments>3</experiments>
</comment>
<comment type="interaction">
    <interactant intactId="EBI-10173939">
        <id>Q9UMX0-2</id>
    </interactant>
    <interactant intactId="EBI-2824782">
        <id>Q8TCZ2</id>
        <label>CD99L2</label>
    </interactant>
    <organismsDiffer>false</organismsDiffer>
    <experiments>6</experiments>
</comment>
<comment type="interaction">
    <interactant intactId="EBI-10173939">
        <id>Q9UMX0-2</id>
    </interactant>
    <interactant intactId="EBI-16431116">
        <id>P51788-4</id>
        <label>CLCN2</label>
    </interactant>
    <organismsDiffer>false</organismsDiffer>
    <experiments>3</experiments>
</comment>
<comment type="interaction">
    <interactant intactId="EBI-10173939">
        <id>Q9UMX0-2</id>
    </interactant>
    <interactant intactId="EBI-2528309">
        <id>Q03692</id>
        <label>COL10A1</label>
    </interactant>
    <organismsDiffer>false</organismsDiffer>
    <experiments>3</experiments>
</comment>
<comment type="interaction">
    <interactant intactId="EBI-10173939">
        <id>Q9UMX0-2</id>
    </interactant>
    <interactant intactId="EBI-16431143">
        <id>A0A0S2Z3K0</id>
        <label>COL1A2</label>
    </interactant>
    <organismsDiffer>false</organismsDiffer>
    <experiments>3</experiments>
</comment>
<comment type="interaction">
    <interactant intactId="EBI-10173939">
        <id>Q9UMX0-2</id>
    </interactant>
    <interactant intactId="EBI-983038">
        <id>P08123</id>
        <label>COL1A2</label>
    </interactant>
    <organismsDiffer>false</organismsDiffer>
    <experiments>6</experiments>
</comment>
<comment type="interaction">
    <interactant intactId="EBI-10173939">
        <id>Q9UMX0-2</id>
    </interactant>
    <interactant intactId="EBI-10263496">
        <id>Q8IYK4</id>
        <label>COLGALT2</label>
    </interactant>
    <organismsDiffer>false</organismsDiffer>
    <experiments>3</experiments>
</comment>
<comment type="interaction">
    <interactant intactId="EBI-10173939">
        <id>Q9UMX0-2</id>
    </interactant>
    <interactant intactId="EBI-2836030">
        <id>Q86VU5</id>
        <label>COMTD1</label>
    </interactant>
    <organismsDiffer>false</organismsDiffer>
    <experiments>3</experiments>
</comment>
<comment type="interaction">
    <interactant intactId="EBI-10173939">
        <id>Q9UMX0-2</id>
    </interactant>
    <interactant intactId="EBI-711360">
        <id>P33240</id>
        <label>CSTF2</label>
    </interactant>
    <organismsDiffer>false</organismsDiffer>
    <experiments>3</experiments>
</comment>
<comment type="interaction">
    <interactant intactId="EBI-10173939">
        <id>Q9UMX0-2</id>
    </interactant>
    <interactant intactId="EBI-747012">
        <id>Q9H0L4</id>
        <label>CSTF2T</label>
    </interactant>
    <organismsDiffer>false</organismsDiffer>
    <experiments>3</experiments>
</comment>
<comment type="interaction">
    <interactant intactId="EBI-10173939">
        <id>Q9UMX0-2</id>
    </interactant>
    <interactant intactId="EBI-1188472">
        <id>P78358</id>
        <label>CTAG1B</label>
    </interactant>
    <organismsDiffer>false</organismsDiffer>
    <experiments>3</experiments>
</comment>
<comment type="interaction">
    <interactant intactId="EBI-10173939">
        <id>Q9UMX0-2</id>
    </interactant>
    <interactant intactId="EBI-10188927">
        <id>O75638</id>
        <label>CTAG2</label>
    </interactant>
    <organismsDiffer>false</organismsDiffer>
    <experiments>3</experiments>
</comment>
<comment type="interaction">
    <interactant intactId="EBI-10173939">
        <id>Q9UMX0-2</id>
    </interactant>
    <interactant intactId="EBI-953870">
        <id>Q9UHQ9</id>
        <label>CYB5R1</label>
    </interactant>
    <organismsDiffer>false</organismsDiffer>
    <experiments>3</experiments>
</comment>
<comment type="interaction">
    <interactant intactId="EBI-10173939">
        <id>Q9UMX0-2</id>
    </interactant>
    <interactant intactId="EBI-10222451">
        <id>Q01524</id>
        <label>DEFA6</label>
    </interactant>
    <organismsDiffer>false</organismsDiffer>
    <experiments>3</experiments>
</comment>
<comment type="interaction">
    <interactant intactId="EBI-10173939">
        <id>Q9UMX0-2</id>
    </interactant>
    <interactant intactId="EBI-16431159">
        <id>A0A0S2Z5Y1</id>
        <label>DOLK</label>
    </interactant>
    <organismsDiffer>false</organismsDiffer>
    <experiments>3</experiments>
</comment>
<comment type="interaction">
    <interactant intactId="EBI-10173939">
        <id>Q9UMX0-2</id>
    </interactant>
    <interactant intactId="EBI-743414">
        <id>O95967</id>
        <label>EFEMP2</label>
    </interactant>
    <organismsDiffer>false</organismsDiffer>
    <experiments>3</experiments>
</comment>
<comment type="interaction">
    <interactant intactId="EBI-10173939">
        <id>Q9UMX0-2</id>
    </interactant>
    <interactant intactId="EBI-953772">
        <id>Q96DN0</id>
        <label>ERP27</label>
    </interactant>
    <organismsDiffer>false</organismsDiffer>
    <experiments>3</experiments>
</comment>
<comment type="interaction">
    <interactant intactId="EBI-10173939">
        <id>Q9UMX0-2</id>
    </interactant>
    <interactant intactId="EBI-2834493">
        <id>Q9HBU6</id>
        <label>ETNK1</label>
    </interactant>
    <organismsDiffer>false</organismsDiffer>
    <experiments>3</experiments>
</comment>
<comment type="interaction">
    <interactant intactId="EBI-10173939">
        <id>Q9UMX0-2</id>
    </interactant>
    <interactant intactId="EBI-1395970">
        <id>P12318</id>
        <label>FCGR2A</label>
    </interactant>
    <organismsDiffer>false</organismsDiffer>
    <experiments>3</experiments>
</comment>
<comment type="interaction">
    <interactant intactId="EBI-10173939">
        <id>Q9UMX0-2</id>
    </interactant>
    <interactant intactId="EBI-719873">
        <id>P26885</id>
        <label>FKBP2</label>
    </interactant>
    <organismsDiffer>false</organismsDiffer>
    <experiments>3</experiments>
</comment>
<comment type="interaction">
    <interactant intactId="EBI-10173939">
        <id>Q9UMX0-2</id>
    </interactant>
    <interactant intactId="EBI-744352">
        <id>O14764</id>
        <label>GABRD</label>
    </interactant>
    <organismsDiffer>false</organismsDiffer>
    <experiments>3</experiments>
</comment>
<comment type="interaction">
    <interactant intactId="EBI-10173939">
        <id>Q9UMX0-2</id>
    </interactant>
    <interactant intactId="EBI-10319458">
        <id>Q9UBU3</id>
        <label>GHRL</label>
    </interactant>
    <organismsDiffer>false</organismsDiffer>
    <experiments>3</experiments>
</comment>
<comment type="interaction">
    <interactant intactId="EBI-10173939">
        <id>Q9UMX0-2</id>
    </interactant>
    <interactant intactId="EBI-2832946">
        <id>P22352</id>
        <label>GPX3</label>
    </interactant>
    <organismsDiffer>false</organismsDiffer>
    <experiments>3</experiments>
</comment>
<comment type="interaction">
    <interactant intactId="EBI-10173939">
        <id>Q9UMX0-2</id>
    </interactant>
    <interactant intactId="EBI-10232876">
        <id>Q14416</id>
        <label>GRM2</label>
    </interactant>
    <organismsDiffer>false</organismsDiffer>
    <experiments>3</experiments>
</comment>
<comment type="interaction">
    <interactant intactId="EBI-10173939">
        <id>Q9UMX0-2</id>
    </interactant>
    <interactant intactId="EBI-10194756">
        <id>P06028</id>
        <label>GYPB</label>
    </interactant>
    <organismsDiffer>false</organismsDiffer>
    <experiments>3</experiments>
</comment>
<comment type="interaction">
    <interactant intactId="EBI-10173939">
        <id>Q9UMX0-2</id>
    </interactant>
    <interactant intactId="EBI-741469">
        <id>P52789</id>
        <label>HK2</label>
    </interactant>
    <organismsDiffer>false</organismsDiffer>
    <experiments>3</experiments>
</comment>
<comment type="interaction">
    <interactant intactId="EBI-10173939">
        <id>Q9UMX0-2</id>
    </interactant>
    <interactant intactId="EBI-2963255">
        <id>Q53GQ0</id>
        <label>HSD17B12</label>
    </interactant>
    <organismsDiffer>false</organismsDiffer>
    <experiments>3</experiments>
</comment>
<comment type="interaction">
    <interactant intactId="EBI-10173939">
        <id>Q9UMX0-2</id>
    </interactant>
    <interactant intactId="EBI-750892">
        <id>P48723</id>
        <label>HSPA13</label>
    </interactant>
    <organismsDiffer>false</organismsDiffer>
    <experiments>4</experiments>
</comment>
<comment type="interaction">
    <interactant intactId="EBI-10173939">
        <id>Q9UMX0-2</id>
    </interactant>
    <interactant intactId="EBI-10253735">
        <id>Q6PIK1</id>
        <label>IGL@</label>
    </interactant>
    <organismsDiffer>false</organismsDiffer>
    <experiments>3</experiments>
</comment>
<comment type="interaction">
    <interactant intactId="EBI-10173939">
        <id>Q9UMX0-2</id>
    </interactant>
    <interactant intactId="EBI-6677651">
        <id>Q6PIQ7</id>
        <label>IGL@</label>
    </interactant>
    <organismsDiffer>false</organismsDiffer>
    <experiments>3</experiments>
</comment>
<comment type="interaction">
    <interactant intactId="EBI-10173939">
        <id>Q9UMX0-2</id>
    </interactant>
    <interactant intactId="EBI-748681">
        <id>Q8N355</id>
        <label>IGL@</label>
    </interactant>
    <organismsDiffer>false</organismsDiffer>
    <experiments>3</experiments>
</comment>
<comment type="interaction">
    <interactant intactId="EBI-10173939">
        <id>Q9UMX0-2</id>
    </interactant>
    <interactant intactId="EBI-10238517">
        <id>Q17RA0</id>
        <label>IL6ST</label>
    </interactant>
    <organismsDiffer>false</organismsDiffer>
    <experiments>3</experiments>
</comment>
<comment type="interaction">
    <interactant intactId="EBI-10173939">
        <id>Q9UMX0-2</id>
    </interactant>
    <interactant intactId="EBI-739890">
        <id>Q9P2K6</id>
        <label>KLHL42</label>
    </interactant>
    <organismsDiffer>false</organismsDiffer>
    <experiments>3</experiments>
</comment>
<comment type="interaction">
    <interactant intactId="EBI-10173939">
        <id>Q9UMX0-2</id>
    </interactant>
    <interactant intactId="EBI-725647">
        <id>Q99732</id>
        <label>LITAF</label>
    </interactant>
    <organismsDiffer>false</organismsDiffer>
    <experiments>7</experiments>
</comment>
<comment type="interaction">
    <interactant intactId="EBI-10173939">
        <id>Q9UMX0-2</id>
    </interactant>
    <interactant intactId="EBI-3867271">
        <id>Q9NQG1</id>
        <label>MANBAL</label>
    </interactant>
    <organismsDiffer>false</organismsDiffer>
    <experiments>3</experiments>
</comment>
<comment type="interaction">
    <interactant intactId="EBI-10173939">
        <id>Q9UMX0-2</id>
    </interactant>
    <interactant intactId="EBI-355924">
        <id>P33993</id>
        <label>MCM7</label>
    </interactant>
    <organismsDiffer>false</organismsDiffer>
    <experiments>3</experiments>
</comment>
<comment type="interaction">
    <interactant intactId="EBI-10173939">
        <id>Q9UMX0-2</id>
    </interactant>
    <interactant intactId="EBI-740987">
        <id>Q9NQG6</id>
        <label>MIEF1</label>
    </interactant>
    <organismsDiffer>false</organismsDiffer>
    <experiments>3</experiments>
</comment>
<comment type="interaction">
    <interactant intactId="EBI-10173939">
        <id>Q9UMX0-2</id>
    </interactant>
    <interactant intactId="EBI-750153">
        <id>Q96C03</id>
        <label>MIEF2</label>
    </interactant>
    <organismsDiffer>false</organismsDiffer>
    <experiments>3</experiments>
</comment>
<comment type="interaction">
    <interactant intactId="EBI-10173939">
        <id>Q9UMX0-2</id>
    </interactant>
    <interactant intactId="EBI-740216">
        <id>P55198</id>
        <label>MLLT6</label>
    </interactant>
    <organismsDiffer>false</organismsDiffer>
    <experiments>3</experiments>
</comment>
<comment type="interaction">
    <interactant intactId="EBI-10173939">
        <id>Q9UMX0-2</id>
    </interactant>
    <interactant intactId="EBI-8650724">
        <id>Q8IW45</id>
        <label>NAXD</label>
    </interactant>
    <organismsDiffer>false</organismsDiffer>
    <experiments>3</experiments>
</comment>
<comment type="interaction">
    <interactant intactId="EBI-10173939">
        <id>Q9UMX0-2</id>
    </interactant>
    <interactant intactId="EBI-10208650">
        <id>P41271</id>
        <label>NBL1</label>
    </interactant>
    <organismsDiffer>false</organismsDiffer>
    <experiments>3</experiments>
</comment>
<comment type="interaction">
    <interactant intactId="EBI-10173939">
        <id>Q9UMX0-2</id>
    </interactant>
    <interactant intactId="EBI-6165879">
        <id>Q96IV0</id>
        <label>NGLY1</label>
    </interactant>
    <organismsDiffer>false</organismsDiffer>
    <experiments>3</experiments>
</comment>
<comment type="interaction">
    <interactant intactId="EBI-10173939">
        <id>Q9UMX0-2</id>
    </interactant>
    <interactant intactId="EBI-16431177">
        <id>A0A0S2Z5K2</id>
        <label>NLGN3</label>
    </interactant>
    <organismsDiffer>false</organismsDiffer>
    <experiments>3</experiments>
</comment>
<comment type="interaction">
    <interactant intactId="EBI-10173939">
        <id>Q9UMX0-2</id>
    </interactant>
    <interactant intactId="EBI-713684">
        <id>Q13232</id>
        <label>NME3</label>
    </interactant>
    <organismsDiffer>false</organismsDiffer>
    <experiments>3</experiments>
</comment>
<comment type="interaction">
    <interactant intactId="EBI-10173939">
        <id>Q9UMX0-2</id>
    </interactant>
    <interactant intactId="EBI-2811583">
        <id>Q9BVL2</id>
        <label>NUP58</label>
    </interactant>
    <organismsDiffer>false</organismsDiffer>
    <experiments>3</experiments>
</comment>
<comment type="interaction">
    <interactant intactId="EBI-10173939">
        <id>Q9UMX0-2</id>
    </interactant>
    <interactant intactId="EBI-740845">
        <id>Q96AQ6</id>
        <label>PBXIP1</label>
    </interactant>
    <organismsDiffer>false</organismsDiffer>
    <experiments>3</experiments>
</comment>
<comment type="interaction">
    <interactant intactId="EBI-10173939">
        <id>Q9UMX0-2</id>
    </interactant>
    <interactant intactId="EBI-10285708">
        <id>Q96FE7</id>
        <label>PIK3IP1</label>
    </interactant>
    <organismsDiffer>false</organismsDiffer>
    <experiments>3</experiments>
</comment>
<comment type="interaction">
    <interactant intactId="EBI-10173939">
        <id>Q9UMX0-2</id>
    </interactant>
    <interactant intactId="EBI-746318">
        <id>P53816</id>
        <label>PLAAT3</label>
    </interactant>
    <organismsDiffer>false</organismsDiffer>
    <experiments>3</experiments>
</comment>
<comment type="interaction">
    <interactant intactId="EBI-10173939">
        <id>Q9UMX0-2</id>
    </interactant>
    <interactant intactId="EBI-302345">
        <id>Q8ND90</id>
        <label>PNMA1</label>
    </interactant>
    <organismsDiffer>false</organismsDiffer>
    <experiments>3</experiments>
</comment>
<comment type="interaction">
    <interactant intactId="EBI-10173939">
        <id>Q9UMX0-2</id>
    </interactant>
    <interactant intactId="EBI-359252">
        <id>P23284</id>
        <label>PPIB</label>
    </interactant>
    <organismsDiffer>false</organismsDiffer>
    <experiments>3</experiments>
</comment>
<comment type="interaction">
    <interactant intactId="EBI-10173939">
        <id>Q9UMX0-2</id>
    </interactant>
    <interactant intactId="EBI-953909">
        <id>P45877</id>
        <label>PPIC</label>
    </interactant>
    <organismsDiffer>false</organismsDiffer>
    <experiments>3</experiments>
</comment>
<comment type="interaction">
    <interactant intactId="EBI-10173939">
        <id>Q9UMX0-2</id>
    </interactant>
    <interactant intactId="EBI-2116102">
        <id>Q96NZ9</id>
        <label>PRAP1</label>
    </interactant>
    <organismsDiffer>false</organismsDiffer>
    <experiments>3</experiments>
</comment>
<comment type="interaction">
    <interactant intactId="EBI-10173939">
        <id>Q9UMX0-2</id>
    </interactant>
    <interactant intactId="EBI-10173935">
        <id>A5D903</id>
        <label>PRB1</label>
    </interactant>
    <organismsDiffer>false</organismsDiffer>
    <experiments>3</experiments>
</comment>
<comment type="interaction">
    <interactant intactId="EBI-10173939">
        <id>Q9UMX0-2</id>
    </interactant>
    <interactant intactId="EBI-359701">
        <id>Q15008</id>
        <label>PSMD6</label>
    </interactant>
    <organismsDiffer>false</organismsDiffer>
    <experiments>3</experiments>
</comment>
<comment type="interaction">
    <interactant intactId="EBI-10173939">
        <id>Q9UMX0-2</id>
    </interactant>
    <interactant intactId="EBI-9091816">
        <id>Q9NPQ8-4</id>
        <label>RIC8A</label>
    </interactant>
    <organismsDiffer>false</organismsDiffer>
    <experiments>3</experiments>
</comment>
<comment type="interaction">
    <interactant intactId="EBI-10173939">
        <id>Q9UMX0-2</id>
    </interactant>
    <interactant intactId="EBI-355963">
        <id>P04843</id>
        <label>RPN1</label>
    </interactant>
    <organismsDiffer>false</organismsDiffer>
    <experiments>3</experiments>
</comment>
<comment type="interaction">
    <interactant intactId="EBI-10173939">
        <id>Q9UMX0-2</id>
    </interactant>
    <interactant intactId="EBI-741643">
        <id>Q9BWD3</id>
        <label>RTL8A</label>
    </interactant>
    <organismsDiffer>false</organismsDiffer>
    <experiments>3</experiments>
</comment>
<comment type="interaction">
    <interactant intactId="EBI-10173939">
        <id>Q9UMX0-2</id>
    </interactant>
    <interactant intactId="EBI-10238588">
        <id>Q17RB0</id>
        <label>RTL8B</label>
    </interactant>
    <organismsDiffer>false</organismsDiffer>
    <experiments>3</experiments>
</comment>
<comment type="interaction">
    <interactant intactId="EBI-10173939">
        <id>Q9UMX0-2</id>
    </interactant>
    <interactant intactId="EBI-10174072">
        <id>A6ZKI3</id>
        <label>RTL8C</label>
    </interactant>
    <organismsDiffer>false</organismsDiffer>
    <experiments>3</experiments>
</comment>
<comment type="interaction">
    <interactant intactId="EBI-10173939">
        <id>Q9UMX0-2</id>
    </interactant>
    <interactant intactId="EBI-722635">
        <id>P05408</id>
        <label>SCG5</label>
    </interactant>
    <organismsDiffer>false</organismsDiffer>
    <experiments>3</experiments>
</comment>
<comment type="interaction">
    <interactant intactId="EBI-10173939">
        <id>Q9UMX0-2</id>
    </interactant>
    <interactant intactId="EBI-713793">
        <id>Q96GD3</id>
        <label>SCMH1</label>
    </interactant>
    <organismsDiffer>false</organismsDiffer>
    <experiments>3</experiments>
</comment>
<comment type="interaction">
    <interactant intactId="EBI-10173939">
        <id>Q9UMX0-2</id>
    </interactant>
    <interactant intactId="EBI-953978">
        <id>P05121</id>
        <label>SERPINE1</label>
    </interactant>
    <organismsDiffer>false</organismsDiffer>
    <experiments>3</experiments>
</comment>
<comment type="interaction">
    <interactant intactId="EBI-10173939">
        <id>Q9UMX0-2</id>
    </interactant>
    <interactant intactId="EBI-750144">
        <id>O75830</id>
        <label>SERPINI2</label>
    </interactant>
    <organismsDiffer>false</organismsDiffer>
    <experiments>3</experiments>
</comment>
<comment type="interaction">
    <interactant intactId="EBI-10173939">
        <id>Q9UMX0-2</id>
    </interactant>
    <interactant intactId="EBI-10300146">
        <id>Q9BVW6</id>
        <label>SMIM2</label>
    </interactant>
    <organismsDiffer>false</organismsDiffer>
    <experiments>3</experiments>
</comment>
<comment type="interaction">
    <interactant intactId="EBI-10173939">
        <id>Q9UMX0-2</id>
    </interactant>
    <interactant intactId="EBI-738612">
        <id>P02814</id>
        <label>SMR3B</label>
    </interactant>
    <organismsDiffer>false</organismsDiffer>
    <experiments>3</experiments>
</comment>
<comment type="interaction">
    <interactant intactId="EBI-10173939">
        <id>Q9UMX0-2</id>
    </interactant>
    <interactant intactId="EBI-744915">
        <id>P10124</id>
        <label>SRGN</label>
    </interactant>
    <organismsDiffer>false</organismsDiffer>
    <experiments>3</experiments>
</comment>
<comment type="interaction">
    <interactant intactId="EBI-10173939">
        <id>Q9UMX0-2</id>
    </interactant>
    <interactant intactId="EBI-10284552">
        <id>Q96DC7-2</id>
        <label>TMCO6</label>
    </interactant>
    <organismsDiffer>false</organismsDiffer>
    <experiments>3</experiments>
</comment>
<comment type="interaction">
    <interactant intactId="EBI-10173939">
        <id>Q9UMX0-2</id>
    </interactant>
    <interactant intactId="EBI-10244617">
        <id>Q5JXX7</id>
        <label>TMEM31</label>
    </interactant>
    <organismsDiffer>false</organismsDiffer>
    <experiments>3</experiments>
</comment>
<comment type="interaction">
    <interactant intactId="EBI-10173939">
        <id>Q9UMX0-2</id>
    </interactant>
    <interactant intactId="EBI-16431189">
        <id>A0A0S2Z5T9</id>
        <label>TMEM67</label>
    </interactant>
    <organismsDiffer>false</organismsDiffer>
    <experiments>3</experiments>
</comment>
<comment type="interaction">
    <interactant intactId="EBI-10173939">
        <id>Q9UMX0-2</id>
    </interactant>
    <interactant intactId="EBI-2820477">
        <id>Q71RG4</id>
        <label>TMUB2</label>
    </interactant>
    <organismsDiffer>false</organismsDiffer>
    <experiments>3</experiments>
</comment>
<comment type="interaction">
    <interactant intactId="EBI-10173939">
        <id>Q9UMX0-2</id>
    </interactant>
    <interactant intactId="EBI-742790">
        <id>Q13049</id>
        <label>TRIM32</label>
    </interactant>
    <organismsDiffer>false</organismsDiffer>
    <experiments>3</experiments>
</comment>
<comment type="interaction">
    <interactant intactId="EBI-10173939">
        <id>Q9UMX0-2</id>
    </interactant>
    <interactant intactId="EBI-2564581">
        <id>O95881</id>
        <label>TXNDC12</label>
    </interactant>
    <organismsDiffer>false</organismsDiffer>
    <experiments>3</experiments>
</comment>
<comment type="interaction">
    <interactant intactId="EBI-10173939">
        <id>Q9UMX0-2</id>
    </interactant>
    <interactant intactId="EBI-1050671">
        <id>Q13404</id>
        <label>UBE2V1</label>
    </interactant>
    <organismsDiffer>false</organismsDiffer>
    <experiments>3</experiments>
</comment>
<comment type="interaction">
    <interactant intactId="EBI-10173939">
        <id>Q9UMX0-2</id>
    </interactant>
    <interactant intactId="EBI-1058647">
        <id>Q04323</id>
        <label>UBXN1</label>
    </interactant>
    <organismsDiffer>false</organismsDiffer>
    <experiments>3</experiments>
</comment>
<comment type="interaction">
    <interactant intactId="EBI-10173939">
        <id>Q9UMX0-2</id>
    </interactant>
    <interactant intactId="EBI-723441">
        <id>Q92575</id>
        <label>UBXN4</label>
    </interactant>
    <organismsDiffer>false</organismsDiffer>
    <experiments>3</experiments>
</comment>
<comment type="interaction">
    <interactant intactId="EBI-10173939">
        <id>Q9UMX0-2</id>
    </interactant>
    <interactant intactId="EBI-10226948">
        <id>Q0VG75</id>
        <label>XPO4</label>
    </interactant>
    <organismsDiffer>false</organismsDiffer>
    <experiments>3</experiments>
</comment>
<comment type="interaction">
    <interactant intactId="EBI-10173939">
        <id>Q9UMX0-2</id>
    </interactant>
    <interactant intactId="EBI-747823">
        <id>Q8WV99</id>
        <label>ZFAND2B</label>
    </interactant>
    <organismsDiffer>false</organismsDiffer>
    <experiments>3</experiments>
</comment>
<comment type="interaction">
    <interactant intactId="EBI-10173939">
        <id>Q9UMX0-2</id>
    </interactant>
    <interactant intactId="EBI-746479">
        <id>O60844</id>
        <label>ZG16</label>
    </interactant>
    <organismsDiffer>false</organismsDiffer>
    <experiments>3</experiments>
</comment>
<comment type="interaction">
    <interactant intactId="EBI-10173939">
        <id>Q9UMX0-2</id>
    </interactant>
    <interactant intactId="EBI-953824">
        <id>Q96DA0</id>
        <label>ZG16B</label>
    </interactant>
    <organismsDiffer>false</organismsDiffer>
    <experiments>3</experiments>
</comment>
<comment type="interaction">
    <interactant intactId="EBI-10173939">
        <id>Q9UMX0-2</id>
    </interactant>
    <interactant intactId="EBI-2514659">
        <id>Q5VZL5</id>
        <label>ZMYM4</label>
    </interactant>
    <organismsDiffer>false</organismsDiffer>
    <experiments>3</experiments>
</comment>
<comment type="interaction">
    <interactant intactId="EBI-10173939">
        <id>Q9UMX0-2</id>
    </interactant>
    <interactant intactId="EBI-747182">
        <id>Q8WU02</id>
    </interactant>
    <organismsDiffer>false</organismsDiffer>
    <experiments>3</experiments>
</comment>
<comment type="interaction">
    <interactant intactId="EBI-10173939">
        <id>Q9UMX0-2</id>
    </interactant>
    <interactant intactId="EBI-2857623">
        <id>Q96FB2</id>
    </interactant>
    <organismsDiffer>false</organismsDiffer>
    <experiments>3</experiments>
</comment>
<comment type="subcellular location">
    <subcellularLocation>
        <location evidence="12 26">Cytoplasm</location>
    </subcellularLocation>
    <subcellularLocation>
        <location evidence="26">Nucleus</location>
    </subcellularLocation>
    <subcellularLocation>
        <location evidence="19">Endoplasmic reticulum</location>
    </subcellularLocation>
    <subcellularLocation>
        <location evidence="18 20 21 22 24 25">Cytoplasmic vesicle</location>
        <location evidence="18 20 21 22 24 25">Autophagosome</location>
    </subcellularLocation>
    <subcellularLocation>
        <location evidence="21 24">Cell membrane</location>
    </subcellularLocation>
    <text evidence="2 12 19 21 22 24">Detected in neuronal processes and at synapses (By similarity). Recruited to the ER during ER-associated protein degradation (ERAD) (PubMed:19822669). Isoform 1 and isoform 3 colocalize with PSEN1 in the cell membrane and in cytoplasmic juxtanuclear structures called aggresomes (PubMed:21143716). Colocalizes with ORAI1 and TICAM1 in the autophagosome (PubMed:21695056, PubMed:23307288). Colocalizes with EPS15 and HGS in ubiquitin-rich cytoplasmic aggregates that are not endocytic compartments and with EPS15 also in aggresomes (PubMed:16159959).</text>
</comment>
<comment type="alternative products">
    <event type="alternative splicing"/>
    <isoform>
        <id>Q9UMX0-1</id>
        <name>1</name>
        <sequence type="displayed"/>
    </isoform>
    <isoform>
        <id>Q9UMX0-2</id>
        <name>2</name>
        <sequence type="described" ref="VSP_009787"/>
    </isoform>
    <isoform>
        <id>Q9UMX0-3</id>
        <name>3</name>
        <sequence type="described" ref="VSP_057689"/>
    </isoform>
    <isoform>
        <id>Q9UMX0-4</id>
        <name>4</name>
        <sequence type="described" ref="VSP_057690 VSP_057691"/>
    </isoform>
</comment>
<comment type="tissue specificity">
    <text evidence="8 9 17">Brain (at protein level) (PubMed:18953672). Ubiquitous. Highly expressed throughout the brain; detected in neurons and in neuropathological lesions, such as neurofibrillary tangles and Lewy bodies. Highly expressed in heart, placenta, pancreas, lung, liver, skeletal muscle and kidney.</text>
</comment>
<comment type="domain">
    <text evidence="8 11 18">The UBA domain mediates binding to PSEN1 and PSEN2. It also binds ubiquitin with micromolar affinity, independently of polyubiquitin linkage type. Essential for its association with microtubule-associated protein 1 light chain 3 (MAP1LC3).</text>
</comment>
<comment type="domain">
    <text evidence="11">The ubiquitin-like domain mediates its association with the subunits of the proteasome.</text>
</comment>
<comment type="domain">
    <text evidence="13">Dimerization is dependent upon the central region of the protein containing the STI1 domains and is independent of its ubiquitin-like and UBA domains.</text>
</comment>
<comment type="PTM">
    <text evidence="20">Degraded during both macroautophagy and during chaperone-mediated autophagy (CMA).</text>
</comment>
<comment type="PTM">
    <text evidence="9">Phosphorylated.</text>
</comment>
<comment type="PTM">
    <text evidence="12">Ubiquitinated.</text>
</comment>
<comment type="miscellaneous">
    <text evidence="23">May be a prognostic marker for lung adenocarcinoma patient clinical outcome.</text>
</comment>
<accession>Q9UMX0</accession>
<accession>A0A024R284</accession>
<accession>Q5T6J5</accession>
<accession>Q5T6J9</accession>
<accession>Q8IXS9</accession>
<accession>Q8N2Q3</accession>
<accession>Q9H0T8</accession>
<accession>Q9H3R4</accession>
<accession>Q9HAZ5</accession>
<reference key="1">
    <citation type="journal article" date="2000" name="J. Cell Biol.">
        <title>Identification of ubiquilin, a novel presenilin interactor that increases presenilin protein accumulation.</title>
        <authorList>
            <person name="Mah A.L."/>
            <person name="Perry G."/>
            <person name="Smith M.A."/>
            <person name="Monteiro M.J."/>
        </authorList>
    </citation>
    <scope>NUCLEOTIDE SEQUENCE [MRNA] (ISOFORM 1)</scope>
    <scope>INTERACTION WITH PSEN1 AND PSEN2</scope>
    <scope>TISSUE SPECIFICITY</scope>
    <source>
        <tissue>Brain</tissue>
    </source>
</reference>
<reference key="2">
    <citation type="submission" date="2002-01" db="EMBL/GenBank/DDBJ databases">
        <authorList>
            <person name="Mah A.L."/>
            <person name="Monteiro M.J."/>
        </authorList>
    </citation>
    <scope>NUCLEOTIDE SEQUENCE [MRNA] (ISOFORM 1)</scope>
</reference>
<reference key="3">
    <citation type="journal article" date="2000" name="Mol. Cell">
        <title>The hPLIC proteins may provide a link between the ubiquitination machinery and the proteasome.</title>
        <authorList>
            <person name="Kleijnen M.F."/>
            <person name="Shih A.H."/>
            <person name="Zhou P."/>
            <person name="Kumar S."/>
            <person name="Soccio R.E."/>
            <person name="Kedersha N.L."/>
            <person name="Gill G."/>
            <person name="Howley P.M."/>
        </authorList>
    </citation>
    <scope>NUCLEOTIDE SEQUENCE [MRNA] (ISOFORM 1)</scope>
    <scope>INTERACTION WITH UBE3A; BTRC AND THE PROTEASOME</scope>
    <source>
        <tissue>B-cell</tissue>
    </source>
</reference>
<reference key="4">
    <citation type="journal article" date="2000" name="J. Hum. Genet.">
        <title>Molecular cloning and expression analysis of the human DA41 gene and its mapping to chromosome 9q21.2-q21.3.</title>
        <authorList>
            <person name="Hanaoka E."/>
            <person name="Ozaki T."/>
            <person name="Ohira M."/>
            <person name="Nakamura Y."/>
            <person name="Suzuki M."/>
            <person name="Takahashi E."/>
            <person name="Moriya H."/>
            <person name="Nakagawara A."/>
            <person name="Sakiyama S."/>
        </authorList>
    </citation>
    <scope>NUCLEOTIDE SEQUENCE [MRNA] (ISOFORM 1)</scope>
    <source>
        <tissue>Lung</tissue>
    </source>
</reference>
<reference key="5">
    <citation type="submission" date="2010-03" db="EMBL/GenBank/DDBJ databases">
        <title>Human testis protein.</title>
        <authorList>
            <person name="Li J.Y."/>
        </authorList>
    </citation>
    <scope>NUCLEOTIDE SEQUENCE [MRNA]</scope>
</reference>
<reference key="6">
    <citation type="journal article" date="2001" name="Genome Res.">
        <title>Towards a catalog of human genes and proteins: sequencing and analysis of 500 novel complete protein coding human cDNAs.</title>
        <authorList>
            <person name="Wiemann S."/>
            <person name="Weil B."/>
            <person name="Wellenreuther R."/>
            <person name="Gassenhuber J."/>
            <person name="Glassl S."/>
            <person name="Ansorge W."/>
            <person name="Boecher M."/>
            <person name="Bloecker H."/>
            <person name="Bauersachs S."/>
            <person name="Blum H."/>
            <person name="Lauber J."/>
            <person name="Duesterhoeft A."/>
            <person name="Beyer A."/>
            <person name="Koehrer K."/>
            <person name="Strack N."/>
            <person name="Mewes H.-W."/>
            <person name="Ottenwaelder B."/>
            <person name="Obermaier B."/>
            <person name="Tampe J."/>
            <person name="Heubner D."/>
            <person name="Wambutt R."/>
            <person name="Korn B."/>
            <person name="Klein M."/>
            <person name="Poustka A."/>
        </authorList>
    </citation>
    <scope>NUCLEOTIDE SEQUENCE [LARGE SCALE MRNA] (ISOFORM 1)</scope>
    <source>
        <tissue>Brain</tissue>
    </source>
</reference>
<reference key="7">
    <citation type="journal article" date="2004" name="Nature">
        <title>DNA sequence and analysis of human chromosome 9.</title>
        <authorList>
            <person name="Humphray S.J."/>
            <person name="Oliver K."/>
            <person name="Hunt A.R."/>
            <person name="Plumb R.W."/>
            <person name="Loveland J.E."/>
            <person name="Howe K.L."/>
            <person name="Andrews T.D."/>
            <person name="Searle S."/>
            <person name="Hunt S.E."/>
            <person name="Scott C.E."/>
            <person name="Jones M.C."/>
            <person name="Ainscough R."/>
            <person name="Almeida J.P."/>
            <person name="Ambrose K.D."/>
            <person name="Ashwell R.I.S."/>
            <person name="Babbage A.K."/>
            <person name="Babbage S."/>
            <person name="Bagguley C.L."/>
            <person name="Bailey J."/>
            <person name="Banerjee R."/>
            <person name="Barker D.J."/>
            <person name="Barlow K.F."/>
            <person name="Bates K."/>
            <person name="Beasley H."/>
            <person name="Beasley O."/>
            <person name="Bird C.P."/>
            <person name="Bray-Allen S."/>
            <person name="Brown A.J."/>
            <person name="Brown J.Y."/>
            <person name="Burford D."/>
            <person name="Burrill W."/>
            <person name="Burton J."/>
            <person name="Carder C."/>
            <person name="Carter N.P."/>
            <person name="Chapman J.C."/>
            <person name="Chen Y."/>
            <person name="Clarke G."/>
            <person name="Clark S.Y."/>
            <person name="Clee C.M."/>
            <person name="Clegg S."/>
            <person name="Collier R.E."/>
            <person name="Corby N."/>
            <person name="Crosier M."/>
            <person name="Cummings A.T."/>
            <person name="Davies J."/>
            <person name="Dhami P."/>
            <person name="Dunn M."/>
            <person name="Dutta I."/>
            <person name="Dyer L.W."/>
            <person name="Earthrowl M.E."/>
            <person name="Faulkner L."/>
            <person name="Fleming C.J."/>
            <person name="Frankish A."/>
            <person name="Frankland J.A."/>
            <person name="French L."/>
            <person name="Fricker D.G."/>
            <person name="Garner P."/>
            <person name="Garnett J."/>
            <person name="Ghori J."/>
            <person name="Gilbert J.G.R."/>
            <person name="Glison C."/>
            <person name="Grafham D.V."/>
            <person name="Gribble S."/>
            <person name="Griffiths C."/>
            <person name="Griffiths-Jones S."/>
            <person name="Grocock R."/>
            <person name="Guy J."/>
            <person name="Hall R.E."/>
            <person name="Hammond S."/>
            <person name="Harley J.L."/>
            <person name="Harrison E.S.I."/>
            <person name="Hart E.A."/>
            <person name="Heath P.D."/>
            <person name="Henderson C.D."/>
            <person name="Hopkins B.L."/>
            <person name="Howard P.J."/>
            <person name="Howden P.J."/>
            <person name="Huckle E."/>
            <person name="Johnson C."/>
            <person name="Johnson D."/>
            <person name="Joy A.A."/>
            <person name="Kay M."/>
            <person name="Keenan S."/>
            <person name="Kershaw J.K."/>
            <person name="Kimberley A.M."/>
            <person name="King A."/>
            <person name="Knights A."/>
            <person name="Laird G.K."/>
            <person name="Langford C."/>
            <person name="Lawlor S."/>
            <person name="Leongamornlert D.A."/>
            <person name="Leversha M."/>
            <person name="Lloyd C."/>
            <person name="Lloyd D.M."/>
            <person name="Lovell J."/>
            <person name="Martin S."/>
            <person name="Mashreghi-Mohammadi M."/>
            <person name="Matthews L."/>
            <person name="McLaren S."/>
            <person name="McLay K.E."/>
            <person name="McMurray A."/>
            <person name="Milne S."/>
            <person name="Nickerson T."/>
            <person name="Nisbett J."/>
            <person name="Nordsiek G."/>
            <person name="Pearce A.V."/>
            <person name="Peck A.I."/>
            <person name="Porter K.M."/>
            <person name="Pandian R."/>
            <person name="Pelan S."/>
            <person name="Phillimore B."/>
            <person name="Povey S."/>
            <person name="Ramsey Y."/>
            <person name="Rand V."/>
            <person name="Scharfe M."/>
            <person name="Sehra H.K."/>
            <person name="Shownkeen R."/>
            <person name="Sims S.K."/>
            <person name="Skuce C.D."/>
            <person name="Smith M."/>
            <person name="Steward C.A."/>
            <person name="Swarbreck D."/>
            <person name="Sycamore N."/>
            <person name="Tester J."/>
            <person name="Thorpe A."/>
            <person name="Tracey A."/>
            <person name="Tromans A."/>
            <person name="Thomas D.W."/>
            <person name="Wall M."/>
            <person name="Wallis J.M."/>
            <person name="West A.P."/>
            <person name="Whitehead S.L."/>
            <person name="Willey D.L."/>
            <person name="Williams S.A."/>
            <person name="Wilming L."/>
            <person name="Wray P.W."/>
            <person name="Young L."/>
            <person name="Ashurst J.L."/>
            <person name="Coulson A."/>
            <person name="Blocker H."/>
            <person name="Durbin R.M."/>
            <person name="Sulston J.E."/>
            <person name="Hubbard T."/>
            <person name="Jackson M.J."/>
            <person name="Bentley D.R."/>
            <person name="Beck S."/>
            <person name="Rogers J."/>
            <person name="Dunham I."/>
        </authorList>
    </citation>
    <scope>NUCLEOTIDE SEQUENCE [LARGE SCALE GENOMIC DNA]</scope>
</reference>
<reference key="8">
    <citation type="submission" date="2005-07" db="EMBL/GenBank/DDBJ databases">
        <authorList>
            <person name="Mural R.J."/>
            <person name="Istrail S."/>
            <person name="Sutton G.G."/>
            <person name="Florea L."/>
            <person name="Halpern A.L."/>
            <person name="Mobarry C.M."/>
            <person name="Lippert R."/>
            <person name="Walenz B."/>
            <person name="Shatkay H."/>
            <person name="Dew I."/>
            <person name="Miller J.R."/>
            <person name="Flanigan M.J."/>
            <person name="Edwards N.J."/>
            <person name="Bolanos R."/>
            <person name="Fasulo D."/>
            <person name="Halldorsson B.V."/>
            <person name="Hannenhalli S."/>
            <person name="Turner R."/>
            <person name="Yooseph S."/>
            <person name="Lu F."/>
            <person name="Nusskern D.R."/>
            <person name="Shue B.C."/>
            <person name="Zheng X.H."/>
            <person name="Zhong F."/>
            <person name="Delcher A.L."/>
            <person name="Huson D.H."/>
            <person name="Kravitz S.A."/>
            <person name="Mouchard L."/>
            <person name="Reinert K."/>
            <person name="Remington K.A."/>
            <person name="Clark A.G."/>
            <person name="Waterman M.S."/>
            <person name="Eichler E.E."/>
            <person name="Adams M.D."/>
            <person name="Hunkapiller M.W."/>
            <person name="Myers E.W."/>
            <person name="Venter J.C."/>
        </authorList>
    </citation>
    <scope>NUCLEOTIDE SEQUENCE [LARGE SCALE GENOMIC DNA]</scope>
</reference>
<reference key="9">
    <citation type="journal article" date="2004" name="Genome Res.">
        <title>The status, quality, and expansion of the NIH full-length cDNA project: the Mammalian Gene Collection (MGC).</title>
        <authorList>
            <consortium name="The MGC Project Team"/>
        </authorList>
    </citation>
    <scope>NUCLEOTIDE SEQUENCE [LARGE SCALE MRNA] (ISOFORMS 1 AND 2)</scope>
    <source>
        <tissue>Brain</tissue>
        <tissue>Muscle</tissue>
    </source>
</reference>
<reference key="10">
    <citation type="journal article" date="2004" name="Nat. Genet.">
        <title>Complete sequencing and characterization of 21,243 full-length human cDNAs.</title>
        <authorList>
            <person name="Ota T."/>
            <person name="Suzuki Y."/>
            <person name="Nishikawa T."/>
            <person name="Otsuki T."/>
            <person name="Sugiyama T."/>
            <person name="Irie R."/>
            <person name="Wakamatsu A."/>
            <person name="Hayashi K."/>
            <person name="Sato H."/>
            <person name="Nagai K."/>
            <person name="Kimura K."/>
            <person name="Makita H."/>
            <person name="Sekine M."/>
            <person name="Obayashi M."/>
            <person name="Nishi T."/>
            <person name="Shibahara T."/>
            <person name="Tanaka T."/>
            <person name="Ishii S."/>
            <person name="Yamamoto J."/>
            <person name="Saito K."/>
            <person name="Kawai Y."/>
            <person name="Isono Y."/>
            <person name="Nakamura Y."/>
            <person name="Nagahari K."/>
            <person name="Murakami K."/>
            <person name="Yasuda T."/>
            <person name="Iwayanagi T."/>
            <person name="Wagatsuma M."/>
            <person name="Shiratori A."/>
            <person name="Sudo H."/>
            <person name="Hosoiri T."/>
            <person name="Kaku Y."/>
            <person name="Kodaira H."/>
            <person name="Kondo H."/>
            <person name="Sugawara M."/>
            <person name="Takahashi M."/>
            <person name="Kanda K."/>
            <person name="Yokoi T."/>
            <person name="Furuya T."/>
            <person name="Kikkawa E."/>
            <person name="Omura Y."/>
            <person name="Abe K."/>
            <person name="Kamihara K."/>
            <person name="Katsuta N."/>
            <person name="Sato K."/>
            <person name="Tanikawa M."/>
            <person name="Yamazaki M."/>
            <person name="Ninomiya K."/>
            <person name="Ishibashi T."/>
            <person name="Yamashita H."/>
            <person name="Murakawa K."/>
            <person name="Fujimori K."/>
            <person name="Tanai H."/>
            <person name="Kimata M."/>
            <person name="Watanabe M."/>
            <person name="Hiraoka S."/>
            <person name="Chiba Y."/>
            <person name="Ishida S."/>
            <person name="Ono Y."/>
            <person name="Takiguchi S."/>
            <person name="Watanabe S."/>
            <person name="Yosida M."/>
            <person name="Hotuta T."/>
            <person name="Kusano J."/>
            <person name="Kanehori K."/>
            <person name="Takahashi-Fujii A."/>
            <person name="Hara H."/>
            <person name="Tanase T.-O."/>
            <person name="Nomura Y."/>
            <person name="Togiya S."/>
            <person name="Komai F."/>
            <person name="Hara R."/>
            <person name="Takeuchi K."/>
            <person name="Arita M."/>
            <person name="Imose N."/>
            <person name="Musashino K."/>
            <person name="Yuuki H."/>
            <person name="Oshima A."/>
            <person name="Sasaki N."/>
            <person name="Aotsuka S."/>
            <person name="Yoshikawa Y."/>
            <person name="Matsunawa H."/>
            <person name="Ichihara T."/>
            <person name="Shiohata N."/>
            <person name="Sano S."/>
            <person name="Moriya S."/>
            <person name="Momiyama H."/>
            <person name="Satoh N."/>
            <person name="Takami S."/>
            <person name="Terashima Y."/>
            <person name="Suzuki O."/>
            <person name="Nakagawa S."/>
            <person name="Senoh A."/>
            <person name="Mizoguchi H."/>
            <person name="Goto Y."/>
            <person name="Shimizu F."/>
            <person name="Wakebe H."/>
            <person name="Hishigaki H."/>
            <person name="Watanabe T."/>
            <person name="Sugiyama A."/>
            <person name="Takemoto M."/>
            <person name="Kawakami B."/>
            <person name="Yamazaki M."/>
            <person name="Watanabe K."/>
            <person name="Kumagai A."/>
            <person name="Itakura S."/>
            <person name="Fukuzumi Y."/>
            <person name="Fujimori Y."/>
            <person name="Komiyama M."/>
            <person name="Tashiro H."/>
            <person name="Tanigami A."/>
            <person name="Fujiwara T."/>
            <person name="Ono T."/>
            <person name="Yamada K."/>
            <person name="Fujii Y."/>
            <person name="Ozaki K."/>
            <person name="Hirao M."/>
            <person name="Ohmori Y."/>
            <person name="Kawabata A."/>
            <person name="Hikiji T."/>
            <person name="Kobatake N."/>
            <person name="Inagaki H."/>
            <person name="Ikema Y."/>
            <person name="Okamoto S."/>
            <person name="Okitani R."/>
            <person name="Kawakami T."/>
            <person name="Noguchi S."/>
            <person name="Itoh T."/>
            <person name="Shigeta K."/>
            <person name="Senba T."/>
            <person name="Matsumura K."/>
            <person name="Nakajima Y."/>
            <person name="Mizuno T."/>
            <person name="Morinaga M."/>
            <person name="Sasaki M."/>
            <person name="Togashi T."/>
            <person name="Oyama M."/>
            <person name="Hata H."/>
            <person name="Watanabe M."/>
            <person name="Komatsu T."/>
            <person name="Mizushima-Sugano J."/>
            <person name="Satoh T."/>
            <person name="Shirai Y."/>
            <person name="Takahashi Y."/>
            <person name="Nakagawa K."/>
            <person name="Okumura K."/>
            <person name="Nagase T."/>
            <person name="Nomura N."/>
            <person name="Kikuchi H."/>
            <person name="Masuho Y."/>
            <person name="Yamashita R."/>
            <person name="Nakai K."/>
            <person name="Yada T."/>
            <person name="Nakamura Y."/>
            <person name="Ohara O."/>
            <person name="Isogai T."/>
            <person name="Sugano S."/>
        </authorList>
    </citation>
    <scope>NUCLEOTIDE SEQUENCE [LARGE SCALE MRNA] OF 1-316</scope>
    <source>
        <tissue>Embryo</tissue>
    </source>
</reference>
<reference key="11">
    <citation type="submission" date="2008-12" db="UniProtKB">
        <authorList>
            <person name="Lubec G."/>
            <person name="Chen W.-Q."/>
            <person name="Sun Y."/>
        </authorList>
    </citation>
    <scope>PROTEIN SEQUENCE OF 71-83; 207-236; 244-253 AND 547-582</scope>
    <scope>IDENTIFICATION BY MASS SPECTROMETRY</scope>
    <source>
        <tissue>Fetal brain cortex</tissue>
    </source>
</reference>
<reference key="12">
    <citation type="journal article" date="2002" name="Biochim. Biophys. Acta">
        <title>Characterization of ubiquilin 1, an mTOR-interacting protein.</title>
        <authorList>
            <person name="Wu S."/>
            <person name="Mikhailov A."/>
            <person name="Kallo-Hosein H."/>
            <person name="Hara K."/>
            <person name="Yonezawa K."/>
            <person name="Avruch J."/>
        </authorList>
    </citation>
    <scope>PHOSPHORYLATION</scope>
    <scope>INTERACTION WITH MTOR</scope>
    <scope>TISSUE SPECIFICITY</scope>
</reference>
<reference key="13">
    <citation type="journal article" date="2002" name="J. Biol. Chem.">
        <title>Role of ubiquilin associated with protein-disulfide isomerase in the endoplasmic reticulum in stress-induced apoptotic cell death.</title>
        <authorList>
            <person name="Ko H.S."/>
            <person name="Uehara T."/>
            <person name="Nomura Y."/>
        </authorList>
    </citation>
    <scope>INTERACTION WITH P4HB</scope>
</reference>
<reference key="14">
    <citation type="journal article" date="2004" name="FEBS Lett.">
        <title>Ubiquilin interacts with ubiquitylated proteins and proteasome through its ubiquitin-associated and ubiquitin-like domains.</title>
        <authorList>
            <person name="Ko H.S."/>
            <person name="Uehara T."/>
            <person name="Tsuruma K."/>
            <person name="Nomura Y."/>
        </authorList>
    </citation>
    <scope>FUNCTION</scope>
    <scope>DOMAIN UBIQUITIN-LIKE</scope>
    <scope>DOMAIN UBA</scope>
    <scope>INTERACTION WITH UBA52; PSMD3 AND PSMD4</scope>
</reference>
<reference key="15">
    <citation type="journal article" date="2005" name="J. Cell Sci.">
        <title>Ubiquilin recruits Eps15 into ubiquitin-rich cytoplasmic aggregates via a UIM-UBL interaction.</title>
        <authorList>
            <person name="Regan-Klapisz E."/>
            <person name="Sorokina I."/>
            <person name="Voortman J."/>
            <person name="de Keizer P."/>
            <person name="Roovers R.C."/>
            <person name="Verheesen P."/>
            <person name="Urbe S."/>
            <person name="Fallon L."/>
            <person name="Fon E.A."/>
            <person name="Verkleij A."/>
            <person name="Benmerah A."/>
            <person name="van Bergen en Henegouwen P.M."/>
        </authorList>
    </citation>
    <scope>INTERACTION WITH EPS15; EPS15L1; HGS AND STAM2</scope>
    <scope>SUBCELLULAR LOCATION</scope>
    <scope>UBIQUITINATION</scope>
</reference>
<reference key="16">
    <citation type="journal article" date="2006" name="Biochem. J.">
        <title>Dimerization of ubiquilin is dependent upon the central region of the protein: evidence that the monomer, but not the dimer, is involved in binding presenilins.</title>
        <authorList>
            <person name="Ford D.L."/>
            <person name="Monteiro M.J."/>
        </authorList>
    </citation>
    <scope>SUBUNIT</scope>
    <scope>HETERODIMERIZATION WITH UBQLN2</scope>
    <scope>INTERACTION WITH PSEN1 AND PSEN2</scope>
</reference>
<reference key="17">
    <citation type="journal article" date="2007" name="Biochemistry">
        <title>Mass spectrometric characterization of the affinity-purified human 26S proteasome complex.</title>
        <authorList>
            <person name="Wang X."/>
            <person name="Chen C.-F."/>
            <person name="Baker P.R."/>
            <person name="Chen P.-L."/>
            <person name="Kaiser P."/>
            <person name="Huang L."/>
        </authorList>
    </citation>
    <scope>IDENTIFICATION BY MASS SPECTROMETRY [LARGE SCALE ANALYSIS]</scope>
    <source>
        <tissue>Embryonic kidney</tissue>
    </source>
</reference>
<reference key="18">
    <citation type="journal article" date="2008" name="Biochem. Biophys. Res. Commun.">
        <title>Herp enhances ER-associated protein degradation by recruiting ubiquilins.</title>
        <authorList>
            <person name="Kim T.Y."/>
            <person name="Kim E."/>
            <person name="Yoon S.K."/>
            <person name="Yoon J.B."/>
        </authorList>
    </citation>
    <scope>FUNCTION</scope>
    <scope>INTERACTION WITH HERPUD1</scope>
</reference>
<reference key="19">
    <citation type="journal article" date="2008" name="Mol. Biol. Cell">
        <title>The ubiquitin-like protein PLIC-2 is a negative regulator of G protein-coupled receptor endocytosis.</title>
        <authorList>
            <person name="N'Diaye E.N."/>
            <person name="Hanyaloglu A.C."/>
            <person name="Kajihara K.K."/>
            <person name="Puthenveedu M.A."/>
            <person name="Wu P."/>
            <person name="von Zastrow M."/>
            <person name="Brown E.J."/>
        </authorList>
    </citation>
    <scope>INTERACTION WITH EPS15</scope>
</reference>
<reference key="20">
    <citation type="journal article" date="2009" name="Anal. Chem.">
        <title>Lys-N and trypsin cover complementary parts of the phosphoproteome in a refined SCX-based approach.</title>
        <authorList>
            <person name="Gauci S."/>
            <person name="Helbig A.O."/>
            <person name="Slijper M."/>
            <person name="Krijgsveld J."/>
            <person name="Heck A.J."/>
            <person name="Mohammed S."/>
        </authorList>
    </citation>
    <scope>ACETYLATION [LARGE SCALE ANALYSIS] AT ALA-2</scope>
    <scope>CLEAVAGE OF INITIATOR METHIONINE [LARGE SCALE ANALYSIS]</scope>
    <scope>IDENTIFICATION BY MASS SPECTROMETRY [LARGE SCALE ANALYSIS]</scope>
</reference>
<reference key="21">
    <citation type="journal article" date="2009" name="EMBO Rep.">
        <title>PLIC proteins or ubiquilins regulate autophagy-dependent cell survival during nutrient starvation.</title>
        <authorList>
            <person name="N'Diaye E.N."/>
            <person name="Kajihara K.K."/>
            <person name="Hsieh I."/>
            <person name="Morisaki H."/>
            <person name="Debnath J."/>
            <person name="Brown E.J."/>
        </authorList>
    </citation>
    <scope>FUNCTION</scope>
    <scope>SUBCELLULAR LOCATION</scope>
    <scope>DOMAIN UBA</scope>
</reference>
<reference key="22">
    <citation type="journal article" date="2009" name="J. Cell Biol.">
        <title>Ubiquilin and p97/VCP bind erasin, forming a complex involved in ERAD.</title>
        <authorList>
            <person name="Lim P.J."/>
            <person name="Danner R."/>
            <person name="Liang J."/>
            <person name="Doong H."/>
            <person name="Harman C."/>
            <person name="Srinivasan D."/>
            <person name="Rothenberg C."/>
            <person name="Wang H."/>
            <person name="Ye Y."/>
            <person name="Fang S."/>
            <person name="Monteiro M.J."/>
        </authorList>
    </citation>
    <scope>FUNCTION</scope>
    <scope>INTERACTION WITH UBXN4</scope>
    <scope>IDENTIFICATION IN A COMPLEX WITH UBXN4 AND VCP</scope>
    <scope>SUBCELLULAR LOCATION</scope>
</reference>
<reference key="23">
    <citation type="journal article" date="2009" name="J. Mol. Neurosci.">
        <title>Effects of ubiquilin 1 on the unfolded protein response.</title>
        <authorList>
            <person name="Lu A."/>
            <person name="Hiltunen M."/>
            <person name="Romano D.M."/>
            <person name="Soininen H."/>
            <person name="Hyman B.T."/>
            <person name="Bertram L."/>
            <person name="Tanzi R.E."/>
        </authorList>
    </citation>
    <scope>ALTERNATIVE SPLICING (ISOFORMS 1; 2; 3 AND 4)</scope>
    <scope>FUNCTION</scope>
    <scope>TISSUE SPECIFICITY</scope>
</reference>
<reference key="24">
    <citation type="journal article" date="2010" name="Autophagy">
        <title>Ubiquilin at a crossroads in protein degradation pathways.</title>
        <authorList>
            <person name="Rothenberg C."/>
            <person name="Monteiro M.J."/>
        </authorList>
    </citation>
    <scope>REVIEW</scope>
</reference>
<reference key="25">
    <citation type="journal article" date="2010" name="Hum. Mol. Genet.">
        <title>Ubiquilin functions in autophagy and is degraded by chaperone-mediated autophagy.</title>
        <authorList>
            <person name="Rothenberg C."/>
            <person name="Srinivasan D."/>
            <person name="Mah L."/>
            <person name="Kaushik S."/>
            <person name="Peterhoff C.M."/>
            <person name="Ugolino J."/>
            <person name="Fang S."/>
            <person name="Cuervo A.M."/>
            <person name="Nixon R.A."/>
            <person name="Monteiro M.J."/>
        </authorList>
    </citation>
    <scope>FUNCTION</scope>
    <scope>SUBCELLULAR LOCATION</scope>
    <scope>IDENTIFICATION IN A COMPLEX WITH UBQLN2 AND MAP1LC3A/B/C</scope>
    <scope>PROTEOLYTIC DEGRADATION</scope>
</reference>
<reference key="26">
    <citation type="journal article" date="2010" name="Sci. Signal.">
        <title>Quantitative phosphoproteomics reveals widespread full phosphorylation site occupancy during mitosis.</title>
        <authorList>
            <person name="Olsen J.V."/>
            <person name="Vermeulen M."/>
            <person name="Santamaria A."/>
            <person name="Kumar C."/>
            <person name="Miller M.L."/>
            <person name="Jensen L.J."/>
            <person name="Gnad F."/>
            <person name="Cox J."/>
            <person name="Jensen T.S."/>
            <person name="Nigg E.A."/>
            <person name="Brunak S."/>
            <person name="Mann M."/>
        </authorList>
    </citation>
    <scope>ACETYLATION [LARGE SCALE ANALYSIS] AT ALA-2</scope>
    <scope>CLEAVAGE OF INITIATOR METHIONINE [LARGE SCALE ANALYSIS]</scope>
    <scope>IDENTIFICATION BY MASS SPECTROMETRY [LARGE SCALE ANALYSIS]</scope>
    <source>
        <tissue>Cervix carcinoma</tissue>
    </source>
</reference>
<reference key="27">
    <citation type="journal article" date="2011" name="BMC Syst. Biol.">
        <title>Initial characterization of the human central proteome.</title>
        <authorList>
            <person name="Burkard T.R."/>
            <person name="Planyavsky M."/>
            <person name="Kaupe I."/>
            <person name="Breitwieser F.P."/>
            <person name="Buerckstuemmer T."/>
            <person name="Bennett K.L."/>
            <person name="Superti-Furga G."/>
            <person name="Colinge J."/>
        </authorList>
    </citation>
    <scope>IDENTIFICATION BY MASS SPECTROMETRY [LARGE SCALE ANALYSIS]</scope>
</reference>
<reference key="28">
    <citation type="journal article" date="2011" name="Commun. Integr. Biol.">
        <title>Involvement of ubiquilin-1 transcript variants in protein degradation and accumulation.</title>
        <authorList>
            <person name="Haapasalo A."/>
            <person name="Viswanathan J."/>
            <person name="Kurkinen K.M."/>
            <person name="Bertram L."/>
            <person name="Soininen H."/>
            <person name="Dantuma N.P."/>
            <person name="Tanzi R.E."/>
            <person name="Hiltunen M."/>
        </authorList>
    </citation>
    <scope>REVIEW</scope>
</reference>
<reference key="29">
    <citation type="journal article" date="2011" name="PLoS ONE">
        <title>The ubiquitin-like protein PLIC-1 or ubiquilin 1 inhibits TLR3-Trif signaling.</title>
        <authorList>
            <person name="Biswas N."/>
            <person name="Liu S."/>
            <person name="Ronni T."/>
            <person name="Aussenberg S.E."/>
            <person name="Liu W."/>
            <person name="Fujita T."/>
            <person name="Wang T."/>
        </authorList>
    </citation>
    <scope>FUNCTION</scope>
    <scope>SUBCELLULAR LOCATION</scope>
    <scope>INTERACTION WITH TICAM1</scope>
</reference>
<reference key="30">
    <citation type="journal article" date="2011" name="Sci. Signal.">
        <title>System-wide temporal characterization of the proteome and phosphoproteome of human embryonic stem cell differentiation.</title>
        <authorList>
            <person name="Rigbolt K.T."/>
            <person name="Prokhorova T.A."/>
            <person name="Akimov V."/>
            <person name="Henningsen J."/>
            <person name="Johansen P.T."/>
            <person name="Kratchmarova I."/>
            <person name="Kassem M."/>
            <person name="Mann M."/>
            <person name="Olsen J.V."/>
            <person name="Blagoev B."/>
        </authorList>
    </citation>
    <scope>ACETYLATION [LARGE SCALE ANALYSIS] AT ALA-2</scope>
    <scope>CLEAVAGE OF INITIATOR METHIONINE [LARGE SCALE ANALYSIS]</scope>
    <scope>IDENTIFICATION BY MASS SPECTROMETRY [LARGE SCALE ANALYSIS]</scope>
</reference>
<reference key="31">
    <citation type="journal article" date="2011" name="Traffic">
        <title>Alzheimer's disease-associated ubiquilin-1 regulates presenilin-1 accumulation and aggresome formation.</title>
        <authorList>
            <person name="Viswanathan J."/>
            <person name="Haapasalo A."/>
            <person name="Bottcher C."/>
            <person name="Miettinen R."/>
            <person name="Kurkinen K.M."/>
            <person name="Lu A."/>
            <person name="Thomas A."/>
            <person name="Maynard C.J."/>
            <person name="Romano D."/>
            <person name="Hyman B.T."/>
            <person name="Berezovska O."/>
            <person name="Bertram L."/>
            <person name="Soininen H."/>
            <person name="Dantuma N.P."/>
            <person name="Tanzi R.E."/>
            <person name="Hiltunen M."/>
        </authorList>
    </citation>
    <scope>FUNCTION</scope>
    <scope>SUBCELLULAR LOCATION</scope>
    <scope>INTERACTION WITH PSEN1</scope>
</reference>
<reference key="32">
    <citation type="journal article" date="2012" name="Biol. Chem.">
        <title>Ubiquilins in the crosstalk among proteolytic pathways.</title>
        <authorList>
            <person name="Lee D.Y."/>
            <person name="Brown E.J."/>
        </authorList>
    </citation>
    <scope>REVIEW</scope>
</reference>
<reference key="33">
    <citation type="journal article" date="2012" name="Mol. Cell. Proteomics">
        <title>Comparative large-scale characterisation of plant vs. mammal proteins reveals similar and idiosyncratic N-alpha acetylation features.</title>
        <authorList>
            <person name="Bienvenut W.V."/>
            <person name="Sumpton D."/>
            <person name="Martinez A."/>
            <person name="Lilla S."/>
            <person name="Espagne C."/>
            <person name="Meinnel T."/>
            <person name="Giglione C."/>
        </authorList>
    </citation>
    <scope>ACETYLATION [LARGE SCALE ANALYSIS] AT ALA-2</scope>
    <scope>CLEAVAGE OF INITIATOR METHIONINE [LARGE SCALE ANALYSIS]</scope>
    <scope>IDENTIFICATION BY MASS SPECTROMETRY [LARGE SCALE ANALYSIS]</scope>
</reference>
<reference key="34">
    <citation type="journal article" date="2012" name="Proc. Natl. Acad. Sci. U.S.A.">
        <title>Ubiquitination, localization, and stability of an anti-apoptotic BCL2-like protein, BCL2L10/BCLb, are regulated by Ubiquilin1.</title>
        <authorList>
            <person name="Beverly L.J."/>
            <person name="Lockwood W.W."/>
            <person name="Shah P.P."/>
            <person name="Erdjument-Bromage H."/>
            <person name="Varmus H."/>
        </authorList>
    </citation>
    <scope>FUNCTION</scope>
    <scope>INTERACTION WITH BCL2L10</scope>
</reference>
<reference key="35">
    <citation type="journal article" date="2013" name="EMBO Rep.">
        <title>Ubiquilin4 is an adaptor protein that recruits Ubiquilin1 to the autophagy machinery.</title>
        <authorList>
            <person name="Lee D.Y."/>
            <person name="Arnott D."/>
            <person name="Brown E.J."/>
        </authorList>
    </citation>
    <scope>FUNCTION</scope>
    <scope>SUBCELLULAR LOCATION</scope>
    <scope>INTERACTION WITH UBQLN4 AND MAP1LC3A/B/C</scope>
</reference>
<reference key="36">
    <citation type="journal article" date="2013" name="Expert Opin. Ther. Targets">
        <title>Targeting ubiquilin-1 in Alzheimer's disease.</title>
        <authorList>
            <person name="Takalo M."/>
            <person name="Haapasalo A."/>
            <person name="Natunen T."/>
            <person name="Viswanathan J."/>
            <person name="Kurkinen K.M."/>
            <person name="Tanzi R.E."/>
            <person name="Soininen H."/>
            <person name="Hiltunen M."/>
        </authorList>
    </citation>
    <scope>REVIEW</scope>
</reference>
<reference key="37">
    <citation type="journal article" date="2013" name="J. Biol. Chem.">
        <title>The TREX1 C-terminal region controls cellular localization through ubiquitination.</title>
        <authorList>
            <person name="Orebaugh C.D."/>
            <person name="Fye J.M."/>
            <person name="Harvey S."/>
            <person name="Hollis T."/>
            <person name="Wilkinson J.C."/>
            <person name="Perrino F.W."/>
        </authorList>
    </citation>
    <scope>INTERACTION WITH TREX1</scope>
    <scope>SUBCELLULAR LOCATION</scope>
</reference>
<reference key="38">
    <citation type="journal article" date="2013" name="J. Proteome Res.">
        <title>Toward a comprehensive characterization of a human cancer cell phosphoproteome.</title>
        <authorList>
            <person name="Zhou H."/>
            <person name="Di Palma S."/>
            <person name="Preisinger C."/>
            <person name="Peng M."/>
            <person name="Polat A.N."/>
            <person name="Heck A.J."/>
            <person name="Mohammed S."/>
        </authorList>
    </citation>
    <scope>IDENTIFICATION BY MASS SPECTROMETRY [LARGE SCALE ANALYSIS]</scope>
    <source>
        <tissue>Erythroleukemia</tissue>
    </source>
</reference>
<reference key="39">
    <citation type="journal article" date="2013" name="Mol. Cells">
        <title>Ubiquilin 1 interacts with Orai1 to regulate calcium mobilization.</title>
        <authorList>
            <person name="Lee J.E."/>
            <person name="Jeon I.S."/>
            <person name="Han N.E."/>
            <person name="Song H.J."/>
            <person name="Kim E.G."/>
            <person name="Choi J.W."/>
            <person name="Song K.D."/>
            <person name="Lee H.K."/>
            <person name="Choi J.K."/>
        </authorList>
    </citation>
    <scope>FUNCTION</scope>
    <scope>INTERACTION WITH ORAI1</scope>
    <scope>SUBCELLULAR LOCATION</scope>
</reference>
<reference key="40">
    <citation type="journal article" date="2014" name="BMC Evol. Biol.">
        <title>The ubiquilin gene family: evolutionary patterns and functional insights.</title>
        <authorList>
            <person name="Marin I."/>
        </authorList>
    </citation>
    <scope>REVIEW</scope>
</reference>
<reference key="41">
    <citation type="journal article" date="2008" name="J. Mol. Biol.">
        <title>Affinity makes the difference: nonselective interaction of the UBA domain of Ubiquilin-1 with monomeric ubiquitin and polyubiquitin chains.</title>
        <authorList>
            <person name="Zhang D."/>
            <person name="Raasi S."/>
            <person name="Fushman D."/>
        </authorList>
    </citation>
    <scope>STRUCTURE BY NMR OF 541-586 ALONE AND IN COMPLEX WITH UBIQUITIN</scope>
</reference>
<organism>
    <name type="scientific">Homo sapiens</name>
    <name type="common">Human</name>
    <dbReference type="NCBI Taxonomy" id="9606"/>
    <lineage>
        <taxon>Eukaryota</taxon>
        <taxon>Metazoa</taxon>
        <taxon>Chordata</taxon>
        <taxon>Craniata</taxon>
        <taxon>Vertebrata</taxon>
        <taxon>Euteleostomi</taxon>
        <taxon>Mammalia</taxon>
        <taxon>Eutheria</taxon>
        <taxon>Euarchontoglires</taxon>
        <taxon>Primates</taxon>
        <taxon>Haplorrhini</taxon>
        <taxon>Catarrhini</taxon>
        <taxon>Hominidae</taxon>
        <taxon>Homo</taxon>
    </lineage>
</organism>
<proteinExistence type="evidence at protein level"/>
<feature type="initiator methionine" description="Removed" evidence="31 32 33 34">
    <location>
        <position position="1"/>
    </location>
</feature>
<feature type="chain" id="PRO_0000211008" description="Ubiquilin-1">
    <location>
        <begin position="2"/>
        <end position="589"/>
    </location>
</feature>
<feature type="domain" description="Ubiquitin-like" evidence="5">
    <location>
        <begin position="37"/>
        <end position="111"/>
    </location>
</feature>
<feature type="domain" description="STI1 1" evidence="3">
    <location>
        <begin position="182"/>
        <end position="210"/>
    </location>
</feature>
<feature type="domain" description="STI1 2" evidence="3">
    <location>
        <begin position="212"/>
        <end position="251"/>
    </location>
</feature>
<feature type="domain" description="STI1 3" evidence="3">
    <location>
        <begin position="387"/>
        <end position="434"/>
    </location>
</feature>
<feature type="domain" description="STI1 4" evidence="3">
    <location>
        <begin position="438"/>
        <end position="470"/>
    </location>
</feature>
<feature type="domain" description="UBA" evidence="4">
    <location>
        <begin position="546"/>
        <end position="586"/>
    </location>
</feature>
<feature type="region of interest" description="Disordered" evidence="6">
    <location>
        <begin position="1"/>
        <end position="35"/>
    </location>
</feature>
<feature type="region of interest" description="Disordered" evidence="6">
    <location>
        <begin position="110"/>
        <end position="145"/>
    </location>
</feature>
<feature type="region of interest" description="Interaction with UBXN4" evidence="19">
    <location>
        <begin position="178"/>
        <end position="428"/>
    </location>
</feature>
<feature type="region of interest" description="Disordered" evidence="6">
    <location>
        <begin position="295"/>
        <end position="371"/>
    </location>
</feature>
<feature type="region of interest" description="Disordered" evidence="6">
    <location>
        <begin position="488"/>
        <end position="520"/>
    </location>
</feature>
<feature type="compositionally biased region" description="Gly residues" evidence="6">
    <location>
        <begin position="1"/>
        <end position="11"/>
    </location>
</feature>
<feature type="compositionally biased region" description="Low complexity" evidence="6">
    <location>
        <begin position="12"/>
        <end position="35"/>
    </location>
</feature>
<feature type="compositionally biased region" description="Polar residues" evidence="6">
    <location>
        <begin position="110"/>
        <end position="124"/>
    </location>
</feature>
<feature type="compositionally biased region" description="Low complexity" evidence="6">
    <location>
        <begin position="125"/>
        <end position="145"/>
    </location>
</feature>
<feature type="compositionally biased region" description="Polar residues" evidence="6">
    <location>
        <begin position="299"/>
        <end position="313"/>
    </location>
</feature>
<feature type="compositionally biased region" description="Low complexity" evidence="6">
    <location>
        <begin position="327"/>
        <end position="360"/>
    </location>
</feature>
<feature type="compositionally biased region" description="Gly residues" evidence="6">
    <location>
        <begin position="489"/>
        <end position="499"/>
    </location>
</feature>
<feature type="compositionally biased region" description="Polar residues" evidence="6">
    <location>
        <begin position="509"/>
        <end position="520"/>
    </location>
</feature>
<feature type="modified residue" description="N-acetylalanine" evidence="31 32 33 34">
    <location>
        <position position="2"/>
    </location>
</feature>
<feature type="splice variant" id="VSP_057689" description="In isoform 3." evidence="29">
    <location>
        <begin position="61"/>
        <end position="237"/>
    </location>
</feature>
<feature type="splice variant" id="VSP_057690" description="In isoform 4." evidence="29">
    <original>GGLGGLAGLSSLGLNTTNFSELQSQMQRQLLS</original>
    <variation>DVGTCQESSNDAGDDEEPGPSFEQPRKHPRGI</variation>
    <location>
        <begin position="150"/>
        <end position="181"/>
    </location>
</feature>
<feature type="splice variant" id="VSP_057691" description="In isoform 4." evidence="29">
    <location>
        <begin position="182"/>
        <end position="589"/>
    </location>
</feature>
<feature type="splice variant" id="VSP_009787" description="In isoform 2." evidence="28 29">
    <location>
        <begin position="417"/>
        <end position="444"/>
    </location>
</feature>
<feature type="sequence conflict" description="In Ref. 9; AAH39294." evidence="30" ref="9">
    <original>A</original>
    <variation>T</variation>
    <location>
        <position position="25"/>
    </location>
</feature>
<feature type="sequence conflict" description="In Ref. 4; BAB20436." evidence="30" ref="4">
    <original>V</original>
    <variation>A</variation>
    <location>
        <position position="41"/>
    </location>
</feature>
<feature type="sequence conflict" description="In Ref. 4; BAB20436." evidence="30" ref="4">
    <original>F</original>
    <variation>S</variation>
    <location>
        <position position="61"/>
    </location>
</feature>
<feature type="sequence conflict" description="In Ref. 4; BAB20436." evidence="30" ref="4">
    <original>L</original>
    <variation>S</variation>
    <location>
        <position position="91"/>
    </location>
</feature>
<feature type="sequence conflict" description="In Ref. 6; CAB66578." evidence="30" ref="6">
    <original>S</original>
    <variation>G</variation>
    <location>
        <position position="125"/>
    </location>
</feature>
<feature type="sequence conflict" description="In Ref. 9; AAH39294." evidence="30" ref="9">
    <original>P</original>
    <variation>H</variation>
    <location>
        <position position="202"/>
    </location>
</feature>
<feature type="sequence conflict" description="In Ref. 4; BAB20436." evidence="30" ref="4">
    <original>NP</original>
    <variation>YS</variation>
    <location>
        <begin position="537"/>
        <end position="538"/>
    </location>
</feature>
<feature type="strand" evidence="36">
    <location>
        <begin position="37"/>
        <end position="42"/>
    </location>
</feature>
<feature type="strand" evidence="36">
    <location>
        <begin position="47"/>
        <end position="52"/>
    </location>
</feature>
<feature type="helix" evidence="36">
    <location>
        <begin position="58"/>
        <end position="69"/>
    </location>
</feature>
<feature type="helix" evidence="36">
    <location>
        <begin position="73"/>
        <end position="75"/>
    </location>
</feature>
<feature type="strand" evidence="36">
    <location>
        <begin position="76"/>
        <end position="80"/>
    </location>
</feature>
<feature type="strand" evidence="36">
    <location>
        <begin position="83"/>
        <end position="85"/>
    </location>
</feature>
<feature type="helix" evidence="36">
    <location>
        <begin position="92"/>
        <end position="94"/>
    </location>
</feature>
<feature type="strand" evidence="36">
    <location>
        <begin position="101"/>
        <end position="106"/>
    </location>
</feature>
<feature type="turn" evidence="35">
    <location>
        <begin position="543"/>
        <end position="547"/>
    </location>
</feature>
<feature type="helix" evidence="35">
    <location>
        <begin position="548"/>
        <end position="556"/>
    </location>
</feature>
<feature type="helix" evidence="35">
    <location>
        <begin position="562"/>
        <end position="572"/>
    </location>
</feature>
<feature type="helix" evidence="35">
    <location>
        <begin position="576"/>
        <end position="583"/>
    </location>
</feature>
<name>UBQL1_HUMAN</name>
<keyword id="KW-0002">3D-structure</keyword>
<keyword id="KW-0007">Acetylation</keyword>
<keyword id="KW-0025">Alternative splicing</keyword>
<keyword id="KW-0072">Autophagy</keyword>
<keyword id="KW-1003">Cell membrane</keyword>
<keyword id="KW-0963">Cytoplasm</keyword>
<keyword id="KW-0968">Cytoplasmic vesicle</keyword>
<keyword id="KW-0903">Direct protein sequencing</keyword>
<keyword id="KW-0256">Endoplasmic reticulum</keyword>
<keyword id="KW-0472">Membrane</keyword>
<keyword id="KW-0539">Nucleus</keyword>
<keyword id="KW-0597">Phosphoprotein</keyword>
<keyword id="KW-0647">Proteasome</keyword>
<keyword id="KW-1267">Proteomics identification</keyword>
<keyword id="KW-1185">Reference proteome</keyword>
<keyword id="KW-0832">Ubl conjugation</keyword>
<gene>
    <name type="primary">UBQLN1</name>
    <name type="synonym">DA41</name>
    <name type="synonym">PLIC1</name>
</gene>
<protein>
    <recommendedName>
        <fullName>Ubiquilin-1</fullName>
    </recommendedName>
    <alternativeName>
        <fullName>Protein linking IAP with cytoskeleton 1</fullName>
        <shortName>PLIC-1</shortName>
        <shortName>hPLIC-1</shortName>
    </alternativeName>
</protein>